<proteinExistence type="evidence at protein level"/>
<comment type="function">
    <text evidence="1 9 12 13 15 16 19 30 39 42 44 45 46 47 51 52 56 67 68">Tyrosine-protein kinase that acts as a cell-surface receptor for fibroblast growth factors and plays an essential role in the regulation of embryonic development, cell proliferation, differentiation and migration. Required for normal mesoderm patterning and correct axial organization during embryonic development, normal skeletogenesis and normal development of the gonadotropin-releasing hormone (GnRH) neuronal system. Phosphorylates PLCG1, FRS2, GAB1 and SHB. Ligand binding leads to the activation of several signaling cascades. Activation of PLCG1 leads to the production of the cellular signaling molecules diacylglycerol and inositol 1,4,5-trisphosphate. Phosphorylation of FRS2 triggers recruitment of GRB2, GAB1, PIK3R1 and SOS1, and mediates activation of RAS, MAPK1/ERK2, MAPK3/ERK1 and the MAP kinase signaling pathway, as well as of the AKT1 signaling pathway. Promotes phosphorylation of SHC1, STAT1 and PTPN11/SHP2. In the nucleus, enhances RPS6KA1 and CREB1 activity and contributes to the regulation of transcription. FGFR1 signaling is down-regulated by IL17RD/SEF, and by FGFR1 ubiquitination, internalization and degradation.</text>
</comment>
<comment type="catalytic activity">
    <reaction evidence="5 15 19 44 45 47 51 67">
        <text>L-tyrosyl-[protein] + ATP = O-phospho-L-tyrosyl-[protein] + ADP + H(+)</text>
        <dbReference type="Rhea" id="RHEA:10596"/>
        <dbReference type="Rhea" id="RHEA-COMP:10136"/>
        <dbReference type="Rhea" id="RHEA-COMP:20101"/>
        <dbReference type="ChEBI" id="CHEBI:15378"/>
        <dbReference type="ChEBI" id="CHEBI:30616"/>
        <dbReference type="ChEBI" id="CHEBI:46858"/>
        <dbReference type="ChEBI" id="CHEBI:61978"/>
        <dbReference type="ChEBI" id="CHEBI:456216"/>
        <dbReference type="EC" id="2.7.10.1"/>
    </reaction>
</comment>
<comment type="activity regulation">
    <text evidence="44 45 54 67">Present in an inactive conformation in the absence of bound ligand. Ligand binding leads to dimerization and activation by sequential autophosphorylation on tyrosine residues. Inhibited by ARQ 069; this compound maintains the kinase in an inactive conformation and inhibits autophosphorylation. Inhibited by PD173074.</text>
</comment>
<comment type="subunit">
    <text evidence="1 7 13 15 19 29 30 36 38 42 43 48 50 53 56 68 69">Monomer. Homodimer after ligand binding. Interacts predominantly with FGF1 and FGF2, but can also interact with FGF3, FGF4, FGF5, FGF6, FGF8, FGF10, FGF19, FGF21, FGF22 and FGF23 (in vitro) (PubMed:12181353, PubMed:16597617, PubMed:1697263, PubMed:1722683, PubMed:17623664, PubMed:8663044, PubMed:9655399). Ligand specificity is determined by tissue-specific expression of isoforms, and differences in the third Ig-like domain are crucial for ligand specificity. Affinity for fibroblast growth factors (FGFs) is increased by heparan sulfate glycosaminoglycans that function as coreceptors. Likewise, KLB increases the affinity for FGF19, FGF21 and FGF23 (PubMed:19966287). Interacts (phosphorylated on Tyr-766) with PLCG1 (via SH2 domains) (PubMed:1379697, PubMed:1656221, PubMed:21765395). Interacts with FRS2 (PubMed:21765395). Interacts with RPS6KA1 (PubMed:15117958). Interacts (via C-terminus) with NEDD4 (via WW3 domain) (PubMed:21765395). Interacts with KL (By similarity). Interacts with SHB (via SH2 domain) (PubMed:12181353). Interacts with GRB10 (PubMed:10454568). Interacts with ANOS1; this interaction does not interfere with FGF2-binding to FGFR1, but prevents binding of heparin-bound FGF2 (PubMed:19696444). Interacts with SOX2 and SOX3. Interacts with FLRT1, FLRT2 and FLRT3 (By similarity). Found in a ternary complex with FGF1 and ITGAV:ITGB3 (PubMed:18441324, PubMed:20422052).</text>
</comment>
<comment type="interaction">
    <interactant intactId="EBI-1028277">
        <id>P11362</id>
    </interactant>
    <interactant intactId="EBI-5272188">
        <id>P23352</id>
        <label>ANOS1</label>
    </interactant>
    <organismsDiffer>false</organismsDiffer>
    <experiments>7</experiments>
</comment>
<comment type="interaction">
    <interactant intactId="EBI-1028277">
        <id>P11362</id>
    </interactant>
    <interactant intactId="EBI-727477">
        <id>P12830</id>
        <label>CDH1</label>
    </interactant>
    <organismsDiffer>false</organismsDiffer>
    <experiments>3</experiments>
</comment>
<comment type="interaction">
    <interactant intactId="EBI-1028277">
        <id>P11362</id>
    </interactant>
    <interactant intactId="EBI-491549">
        <id>P35222</id>
        <label>CTNNB1</label>
    </interactant>
    <organismsDiffer>false</organismsDiffer>
    <experiments>3</experiments>
</comment>
<comment type="interaction">
    <interactant intactId="EBI-1028277">
        <id>P11362</id>
    </interactant>
    <interactant intactId="EBI-698068">
        <id>P05230</id>
        <label>FGF1</label>
    </interactant>
    <organismsDiffer>false</organismsDiffer>
    <experiments>5</experiments>
</comment>
<comment type="interaction">
    <interactant intactId="EBI-1028277">
        <id>P11362</id>
    </interactant>
    <interactant intactId="EBI-977447">
        <id>P09038</id>
        <label>FGF2</label>
    </interactant>
    <organismsDiffer>false</organismsDiffer>
    <experiments>9</experiments>
</comment>
<comment type="interaction">
    <interactant intactId="EBI-1028277">
        <id>P11362</id>
    </interactant>
    <interactant intactId="EBI-6594125">
        <id>Q9GZV9</id>
        <label>FGF23</label>
    </interactant>
    <organismsDiffer>false</organismsDiffer>
    <experiments>2</experiments>
</comment>
<comment type="interaction">
    <interactant intactId="EBI-1028277">
        <id>P11362</id>
    </interactant>
    <interactant intactId="EBI-1028277">
        <id>P11362</id>
        <label>FGFR1</label>
    </interactant>
    <organismsDiffer>false</organismsDiffer>
    <experiments>4</experiments>
</comment>
<comment type="interaction">
    <interactant intactId="EBI-1028277">
        <id>P11362</id>
    </interactant>
    <interactant intactId="EBI-1028658">
        <id>P21802</id>
        <label>FGFR2</label>
    </interactant>
    <organismsDiffer>false</organismsDiffer>
    <experiments>3</experiments>
</comment>
<comment type="interaction">
    <interactant intactId="EBI-1028277">
        <id>P11362</id>
    </interactant>
    <interactant intactId="EBI-6256193">
        <id>P22455</id>
        <label>FGFR4</label>
    </interactant>
    <organismsDiffer>false</organismsDiffer>
    <experiments>3</experiments>
</comment>
<comment type="interaction">
    <interactant intactId="EBI-1028277">
        <id>P11362</id>
    </interactant>
    <interactant intactId="EBI-1104330">
        <id>Q8WU20</id>
        <label>FRS2</label>
    </interactant>
    <organismsDiffer>false</organismsDiffer>
    <experiments>3</experiments>
</comment>
<comment type="interaction">
    <interactant intactId="EBI-1028277">
        <id>P11362</id>
    </interactant>
    <interactant intactId="EBI-352572">
        <id>P08238</id>
        <label>HSP90AB1</label>
    </interactant>
    <organismsDiffer>false</organismsDiffer>
    <experiments>3</experiments>
</comment>
<comment type="interaction">
    <interactant intactId="EBI-1028277">
        <id>P11362</id>
    </interactant>
    <interactant intactId="EBI-6570214">
        <id>P08908</id>
        <label>HTR1A</label>
    </interactant>
    <organismsDiffer>false</organismsDiffer>
    <experiments>9</experiments>
</comment>
<comment type="interaction">
    <interactant intactId="EBI-1028277">
        <id>P11362</id>
    </interactant>
    <interactant intactId="EBI-726944">
        <id>P46934</id>
        <label>NEDD4</label>
    </interactant>
    <organismsDiffer>false</organismsDiffer>
    <experiments>26</experiments>
</comment>
<comment type="interaction">
    <interactant intactId="EBI-1028277">
        <id>P11362</id>
    </interactant>
    <interactant intactId="EBI-1391643">
        <id>Q8IVI9</id>
        <label>NOSTRIN</label>
    </interactant>
    <organismsDiffer>false</organismsDiffer>
    <experiments>5</experiments>
</comment>
<comment type="interaction">
    <interactant intactId="EBI-1028277">
        <id>P11362</id>
    </interactant>
    <interactant intactId="EBI-79464">
        <id>P27986</id>
        <label>PIK3R1</label>
    </interactant>
    <organismsDiffer>false</organismsDiffer>
    <experiments>6</experiments>
</comment>
<comment type="interaction">
    <interactant intactId="EBI-1028277">
        <id>P11362</id>
    </interactant>
    <interactant intactId="EBI-79387">
        <id>P19174</id>
        <label>PLCG1</label>
    </interactant>
    <organismsDiffer>false</organismsDiffer>
    <experiments>11</experiments>
</comment>
<comment type="interaction">
    <interactant intactId="EBI-1028277">
        <id>P11362</id>
    </interactant>
    <interactant intactId="EBI-7639197">
        <id>O88900</id>
        <label>Grb14</label>
    </interactant>
    <organismsDiffer>true</organismsDiffer>
    <experiments>3</experiments>
</comment>
<comment type="interaction">
    <interactant intactId="EBI-1028277">
        <id>P11362</id>
    </interactant>
    <interactant intactId="EBI-1570828">
        <id>O35082</id>
        <label>Kl</label>
    </interactant>
    <organismsDiffer>true</organismsDiffer>
    <experiments>2</experiments>
</comment>
<comment type="interaction">
    <interactant intactId="EBI-1028277">
        <id>P11362</id>
    </interactant>
    <interactant intactId="EBI-520788">
        <id>P10686</id>
        <label>Plcg1</label>
    </interactant>
    <organismsDiffer>true</organismsDiffer>
    <experiments>4</experiments>
</comment>
<comment type="interaction">
    <interactant intactId="EBI-25852941">
        <id>P11362-2</id>
    </interactant>
    <interactant intactId="EBI-713450">
        <id>Q02363</id>
        <label>ID2</label>
    </interactant>
    <organismsDiffer>false</organismsDiffer>
    <experiments>3</experiments>
</comment>
<comment type="interaction">
    <interactant intactId="EBI-25852941">
        <id>P11362-2</id>
    </interactant>
    <interactant intactId="EBI-1043580">
        <id>Q9BRX2</id>
        <label>PELO</label>
    </interactant>
    <organismsDiffer>false</organismsDiffer>
    <experiments>3</experiments>
</comment>
<comment type="interaction">
    <interactant intactId="EBI-15609945">
        <id>P11362-7</id>
    </interactant>
    <interactant intactId="EBI-977447">
        <id>P09038</id>
        <label>FGF2</label>
    </interactant>
    <organismsDiffer>false</organismsDiffer>
    <experiments>2</experiments>
</comment>
<comment type="interaction">
    <interactant intactId="EBI-15609945">
        <id>P11362-7</id>
    </interactant>
    <interactant intactId="EBI-1570828">
        <id>O35082</id>
        <label>Kl</label>
    </interactant>
    <organismsDiffer>true</organismsDiffer>
    <experiments>3</experiments>
</comment>
<comment type="interaction">
    <interactant intactId="EBI-6622185">
        <id>P11362-14</id>
    </interactant>
    <interactant intactId="EBI-977447">
        <id>P09038</id>
        <label>FGF2</label>
    </interactant>
    <organismsDiffer>false</organismsDiffer>
    <experiments>2</experiments>
</comment>
<comment type="subcellular location">
    <subcellularLocation>
        <location>Cell membrane</location>
        <topology>Single-pass type I membrane protein</topology>
    </subcellularLocation>
    <subcellularLocation>
        <location>Nucleus</location>
    </subcellularLocation>
    <subcellularLocation>
        <location>Cytoplasm</location>
        <location>Cytosol</location>
    </subcellularLocation>
    <subcellularLocation>
        <location>Cytoplasmic vesicle</location>
    </subcellularLocation>
    <text>After ligand binding, both receptor and ligand are rapidly internalized. Can translocate to the nucleus after internalization, or by translocation from the endoplasmic reticulum or Golgi apparatus to the cytosol, and from there to the nucleus.</text>
</comment>
<comment type="alternative products">
    <event type="alternative splicing"/>
    <isoform>
        <id>P11362-1</id>
        <name>1</name>
        <name>Alpha A1</name>
        <name>IV</name>
        <sequence type="displayed"/>
    </isoform>
    <isoform>
        <id>P11362-8</id>
        <name>2</name>
        <name>Alpha A2</name>
        <sequence type="described" ref="VSP_009842 VSP_009843"/>
    </isoform>
    <isoform>
        <id>P11362-17</id>
        <name>3</name>
        <name>Alpha A3</name>
        <sequence type="described" ref="VSP_009836 VSP_009837"/>
    </isoform>
    <isoform>
        <id>P11362-2</id>
        <name>4</name>
        <name>Alpha B1</name>
        <sequence type="described" ref="VSP_002960"/>
    </isoform>
    <isoform>
        <id>P11362-9</id>
        <name>5</name>
        <name>Alpha B2</name>
        <sequence type="described" ref="VSP_002960 VSP_009842 VSP_009843"/>
    </isoform>
    <isoform>
        <id>P11362-3</id>
        <name>6</name>
        <name>Beta A1</name>
        <name>II</name>
        <name>H2</name>
        <sequence type="described" ref="VSP_002958"/>
    </isoform>
    <isoform>
        <id>P11362-10</id>
        <name>7</name>
        <name>Beta A2</name>
        <sequence type="described" ref="VSP_002958 VSP_009842 VSP_009843"/>
    </isoform>
    <isoform>
        <id>P11362-4</id>
        <name>8</name>
        <name>Beta B1</name>
        <sequence type="described" ref="VSP_002958 VSP_002960"/>
    </isoform>
    <isoform>
        <id>P11362-11</id>
        <name>9</name>
        <name>Beta B2</name>
        <sequence type="described" ref="VSP_002958 VSP_002960 VSP_009842 VSP_009843"/>
    </isoform>
    <isoform>
        <id>P11362-5</id>
        <name>10</name>
        <name>Gamma A1</name>
        <sequence type="described" ref="VSP_002957"/>
    </isoform>
    <isoform>
        <id>P11362-12</id>
        <name>11</name>
        <name>Gamma A2</name>
        <sequence type="described" ref="VSP_002957 VSP_009842 VSP_009843"/>
    </isoform>
    <isoform>
        <id>P11362-6</id>
        <name>12</name>
        <name>Gamma B1</name>
        <sequence type="described" ref="VSP_002957 VSP_002960"/>
    </isoform>
    <isoform>
        <id>P11362-13</id>
        <name>13</name>
        <name>Gamma B2</name>
        <sequence type="described" ref="VSP_002957 VSP_002960 VSP_009842 VSP_009843"/>
    </isoform>
    <isoform>
        <id>P11362-7</id>
        <name>14</name>
        <name>A</name>
        <name>III</name>
        <sequence type="described" ref="VSP_002959"/>
    </isoform>
    <isoform>
        <id>P11362-14</id>
        <name>15</name>
        <name>I</name>
        <name>H3</name>
        <sequence type="described" ref="VSP_002958 VSP_002959"/>
    </isoform>
    <isoform>
        <id>P11362-15</id>
        <name>16</name>
        <name>V</name>
        <sequence type="described" ref="VSP_009838 VSP_009839"/>
    </isoform>
    <isoform>
        <id>P11362-16</id>
        <name>17</name>
        <name>H4</name>
        <sequence type="described" ref="VSP_002958 VSP_009840 VSP_009841"/>
    </isoform>
    <isoform>
        <id>P11362-18</id>
        <name>18</name>
        <name>H5</name>
        <sequence type="described" ref="VSP_002958 VSP_002959 VSP_009840 VSP_009841"/>
    </isoform>
    <isoform>
        <id>P11362-19</id>
        <name>19</name>
        <sequence type="described" ref="VSP_038470 VSP_002959 VSP_038471"/>
    </isoform>
    <isoform>
        <id>P11362-20</id>
        <name>20</name>
        <sequence type="described" ref="VSP_041916 VSP_041918"/>
    </isoform>
    <isoform>
        <id>P11362-21</id>
        <name>21</name>
        <sequence type="described" ref="VSP_041917 VSP_002959"/>
    </isoform>
</comment>
<comment type="tissue specificity">
    <text evidence="28">Detected in astrocytoma, neuroblastoma and adrenal cortex cell lines. Some isoforms are detected in foreskin fibroblast cell lines, however isoform 17, isoform 18 and isoform 19 are not detected in these cells.</text>
</comment>
<comment type="domain">
    <text>The second and third Ig-like domains directly interact with fibroblast growth factors (FGF) and heparan sulfate proteoglycans. Isoforms lacking the first Ig-like domain have higher affinity for fibroblast growth factors (FGF) and heparan sulfate proteoglycans than isoforms with all three Ig-like domains.</text>
</comment>
<comment type="PTM">
    <text evidence="27 45 47 67">Autophosphorylated. Binding of FGF family members together with heparan sulfate proteoglycan or heparin promotes receptor dimerization and autophosphorylation on tyrosine residues. Autophosphorylation occurs in trans between the two FGFR molecules present in the dimer and proceeds in a highly ordered manner. Initial autophosphorylation at Tyr-653 increases the kinase activity by a factor of 50 to 100. After this, Tyr-583 becomes phosphorylated, followed by phosphorylation of Tyr-463, Tyr-766, Tyr-583 and Tyr-585. In a third stage, Tyr-654 is autophosphorylated, resulting in a further tenfold increase of kinase activity. Phosphotyrosine residues provide docking sites for interacting proteins and so are crucial for FGFR1 function and its regulation.</text>
</comment>
<comment type="PTM">
    <text evidence="44 56">Ubiquitinated. FGFR1 is rapidly ubiquitinated by NEDD4 after autophosphorylation, leading to internalization and lysosomal degradation. CBL is recruited to activated FGFR1 via FRS2 and GRB2, and mediates ubiquitination and subsequent degradation of FGFR1.</text>
</comment>
<comment type="PTM">
    <text evidence="24 26 39">N-glycosylated in the endoplasmic reticulum. The N-glycan chains undergo further maturation to an Endo H-resistant form in the Golgi apparatus.</text>
</comment>
<comment type="disease" evidence="66">
    <disease id="DI-00924">
        <name>Pfeiffer syndrome</name>
        <acronym>PS</acronym>
        <description>A syndrome characterized by the association of craniosynostosis, broad and deviated thumbs and big toes, and partial syndactyly of the fingers and toes. Three subtypes are known: mild autosomal dominant form (type 1); cloverleaf skull, elbow ankylosis, early death, sporadic (type 2); craniosynostosis, early demise, sporadic (type 3).</description>
        <dbReference type="MIM" id="101600"/>
    </disease>
    <text>The disease is caused by variants affecting the gene represented in this entry.</text>
</comment>
<comment type="disease" evidence="14 17 21 23 31 32 33 34 37 49 55 57 59 62 63">
    <disease id="DI-00618">
        <name>Hypogonadotropic hypogonadism 2 with or without anosmia</name>
        <acronym>HH2</acronym>
        <description>A disorder characterized by absent or incomplete sexual maturation by the age of 18 years, in conjunction with low levels of circulating gonadotropins and testosterone and no other abnormalities of the hypothalamic-pituitary axis. In some cases, it is associated with non-reproductive phenotypes, such as anosmia, cleft palate, and sensorineural hearing loss. Anosmia or hyposmia is related to the absence or hypoplasia of the olfactory bulbs and tracts. Hypogonadism is due to deficiency in gonadotropin-releasing hormone and probably results from a failure of embryonic migration of gonadotropin-releasing hormone-synthesizing neurons. In the presence of anosmia, idiopathic hypogonadotropic hypogonadism is referred to as Kallmann syndrome, whereas in the presence of a normal sense of smell, it has been termed normosmic idiopathic hypogonadotropic hypogonadism (nIHH).</description>
        <dbReference type="MIM" id="147950"/>
    </disease>
    <text evidence="59">The disease is caused by variants affecting distinct genetic loci, including the gene represented in this entry. Some patients carrying mutations in FGFR1 also have a mutation other HH-associated genes including DUSP6, FGF8, FGF17, FLRT3, GNRH1, GNRHR, HS6ST1, IL17RD, ANOS1, KISS1R, NSMF, PROKR2, SPRY4 and TACR3 (PubMed:23643382).</text>
</comment>
<comment type="disease" evidence="22 25">
    <disease id="DI-02110">
        <name>Osteoglophonic dysplasia</name>
        <acronym>OGD</acronym>
        <description>Characterized by craniosynostosis, prominent supraorbital ridge, and depressed nasal bridge, as well as by rhizomelic dwarfism and nonossifying bone lesions. Inheritance is autosomal dominant.</description>
        <dbReference type="MIM" id="166250"/>
    </disease>
    <text>The disease is caused by variants affecting the gene represented in this entry.</text>
</comment>
<comment type="disease" evidence="60 61">
    <disease id="DI-03909">
        <name>Hartsfield syndrome</name>
        <acronym>HRTFDS</acronym>
        <description>A syndrome characterized by the triad of holoprosencephaly, ectrodactyly, and cleft/lip palate. Profound intellectual disability is also present. Multiple other congenital anomalies usually occur.</description>
        <dbReference type="MIM" id="615465"/>
    </disease>
    <text>The disease is caused by variants affecting the gene represented in this entry.</text>
</comment>
<comment type="disease" evidence="11">
    <disease id="DI-02068">
        <name>Trigonocephaly 1</name>
        <acronym>TRIGNO1</acronym>
        <description>A keel-shaped deformation of the forehead, caused by premature fusion of the metopic sutures. It results in a triangular shape of the head.</description>
        <dbReference type="MIM" id="190440"/>
    </disease>
    <text>The disease is caused by variants affecting the gene represented in this entry.</text>
</comment>
<comment type="disease">
    <text evidence="8 18 35 41 58 70 71">Chromosomal aberrations involving FGFR1 are a cause of chromosome 8p11 myeloproliferative syndrome. Translocation t(8;13)(p11;q12) with ZMYM2. Translocation t(6;8)(q27;p11) with CEP43. Insertion ins(12;8)(p11;p11p22) with FGFR1OP2. Translocation t(8;9)(p12;q33) with CNTRL. Translocation t(2;8)(q12;p11) with RANBP2. Chromosome 8p11 myeloproliferative syndrome is characterized by myeloid hyperplasia, eosinophilia and T-cell or B-cell lymphoblastic lymphoma. In general it progresses to acute myeloid leukemia. The fusion proteins FGFR1OP2-FGFR1, CEP43-FGFR1 or FGFR1-CEP43 may exhibit constitutive kinase activity and be responsible for the transforming activity. The fusion protein CNTRL-FGFR1 is found in the cytoplasm, exhibits constitutive kinase activity and may be responsible for the transforming activity.</text>
</comment>
<comment type="disease" evidence="45 64">
    <disease id="DI-04665">
        <name>Encephalocraniocutaneous lipomatosis</name>
        <acronym>ECCL</acronym>
        <description>A sporadically occurring, neurocutaneous disorder characterized by ocular anomalies, skin lesions, and central nervous system anomalies. Clinical features include a well-demarcated hairless fatty nevus on the scalp, benign ocular tumors, intracranial and intraspinal lipomas, and congenital abnormalities of the meninges. Seizures, spasticity, and intellectual disability can be present.</description>
        <dbReference type="MIM" id="613001"/>
    </disease>
    <text>The disease is caused by variants affecting the gene represented in this entry.</text>
</comment>
<comment type="disease" evidence="10">
    <disease id="DI-00602">
        <name>Jackson-Weiss syndrome</name>
        <acronym>JWS</acronym>
        <description>An autosomal dominant craniosynostosis syndrome characterized by craniofacial abnormalities and abnormality of the feet: broad great toes with medial deviation and tarsal-metatarsal coalescence.</description>
        <dbReference type="MIM" id="123150"/>
    </disease>
    <text>The disease is caused by variants affecting the gene represented in this entry.</text>
</comment>
<comment type="similarity">
    <text evidence="4">Belongs to the protein kinase superfamily. Tyr protein kinase family. Fibroblast growth factor receptor subfamily.</text>
</comment>
<comment type="sequence caution" evidence="85">
    <conflict type="erroneous initiation">
        <sequence resource="EMBL-CDS" id="BAD92156"/>
    </conflict>
    <text>Extended N-terminus.</text>
</comment>
<comment type="online information" name="Atlas of Genetics and Cytogenetics in Oncology and Haematology">
    <link uri="https://atlasgeneticsoncology.org/gene/113/FGFR1"/>
</comment>
<gene>
    <name type="primary">FGFR1</name>
    <name type="synonym">BFGFR</name>
    <name type="synonym">CEK</name>
    <name type="synonym">FGFBR</name>
    <name type="synonym">FLG</name>
    <name type="synonym">FLT2</name>
    <name type="synonym">HBGFR</name>
</gene>
<feature type="signal peptide">
    <location>
        <begin position="1"/>
        <end position="21"/>
    </location>
</feature>
<feature type="chain" id="PRO_0000016780" description="Fibroblast growth factor receptor 1">
    <location>
        <begin position="22"/>
        <end position="822"/>
    </location>
</feature>
<feature type="topological domain" description="Extracellular" evidence="2">
    <location>
        <begin position="22"/>
        <end position="376"/>
    </location>
</feature>
<feature type="transmembrane region" description="Helical" evidence="2">
    <location>
        <begin position="377"/>
        <end position="397"/>
    </location>
</feature>
<feature type="topological domain" description="Cytoplasmic" evidence="2">
    <location>
        <begin position="398"/>
        <end position="822"/>
    </location>
</feature>
<feature type="domain" description="Ig-like C2-type 1">
    <location>
        <begin position="25"/>
        <end position="119"/>
    </location>
</feature>
<feature type="domain" description="Ig-like C2-type 2">
    <location>
        <begin position="158"/>
        <end position="246"/>
    </location>
</feature>
<feature type="domain" description="Ig-like C2-type 3">
    <location>
        <begin position="255"/>
        <end position="357"/>
    </location>
</feature>
<feature type="domain" description="Protein kinase" evidence="4">
    <location>
        <begin position="478"/>
        <end position="767"/>
    </location>
</feature>
<feature type="region of interest" description="Disordered" evidence="6">
    <location>
        <begin position="120"/>
        <end position="154"/>
    </location>
</feature>
<feature type="region of interest" description="Heparin-binding">
    <location>
        <begin position="160"/>
        <end position="177"/>
    </location>
</feature>
<feature type="region of interest" description="Disordered" evidence="6">
    <location>
        <begin position="778"/>
        <end position="822"/>
    </location>
</feature>
<feature type="compositionally biased region" description="Acidic residues" evidence="6">
    <location>
        <begin position="125"/>
        <end position="135"/>
    </location>
</feature>
<feature type="compositionally biased region" description="Basic and acidic residues" evidence="6">
    <location>
        <begin position="136"/>
        <end position="145"/>
    </location>
</feature>
<feature type="compositionally biased region" description="Polar residues" evidence="6">
    <location>
        <begin position="778"/>
        <end position="792"/>
    </location>
</feature>
<feature type="active site" description="Proton acceptor" evidence="4 5 45">
    <location>
        <position position="623"/>
    </location>
</feature>
<feature type="binding site">
    <location>
        <begin position="484"/>
        <end position="490"/>
    </location>
    <ligand>
        <name>ATP</name>
        <dbReference type="ChEBI" id="CHEBI:30616"/>
    </ligand>
</feature>
<feature type="binding site">
    <location>
        <position position="514"/>
    </location>
    <ligand>
        <name>ATP</name>
        <dbReference type="ChEBI" id="CHEBI:30616"/>
    </ligand>
</feature>
<feature type="binding site">
    <location>
        <begin position="562"/>
        <end position="564"/>
    </location>
    <ligand>
        <name>ATP</name>
        <dbReference type="ChEBI" id="CHEBI:30616"/>
    </ligand>
</feature>
<feature type="binding site">
    <location>
        <position position="568"/>
    </location>
    <ligand>
        <name>ATP</name>
        <dbReference type="ChEBI" id="CHEBI:30616"/>
    </ligand>
</feature>
<feature type="binding site">
    <location>
        <position position="627"/>
    </location>
    <ligand>
        <name>ATP</name>
        <dbReference type="ChEBI" id="CHEBI:30616"/>
    </ligand>
</feature>
<feature type="binding site">
    <location>
        <position position="641"/>
    </location>
    <ligand>
        <name>ATP</name>
        <dbReference type="ChEBI" id="CHEBI:30616"/>
    </ligand>
</feature>
<feature type="site" description="Breakpoint for translocation to form CEP43-FGFR1 or FGFR1-CEP43 fusion proteins" evidence="71">
    <location>
        <begin position="428"/>
        <end position="429"/>
    </location>
</feature>
<feature type="site" description="Breakpoint for translocation to form CNTRL-FGFR1 OR FGFR1-CNTRL fusion proteins" evidence="8">
    <location>
        <begin position="428"/>
        <end position="429"/>
    </location>
</feature>
<feature type="site" description="Breakpoint for translocation to form FGFR1OP2-FGFR1" evidence="18 35 41">
    <location>
        <begin position="428"/>
        <end position="429"/>
    </location>
</feature>
<feature type="site" description="Mediates interaction with PLCG1 and SHB">
    <location>
        <position position="766"/>
    </location>
</feature>
<feature type="modified residue" description="Phosphotyrosine; by autocatalysis" evidence="27 45 67">
    <location>
        <position position="463"/>
    </location>
</feature>
<feature type="modified residue" description="Phosphotyrosine; by autocatalysis" evidence="27 45 67">
    <location>
        <position position="583"/>
    </location>
</feature>
<feature type="modified residue" description="Phosphotyrosine; by autocatalysis" evidence="27 45 67">
    <location>
        <position position="585"/>
    </location>
</feature>
<feature type="modified residue" description="Phosphotyrosine; by autocatalysis" evidence="27 45 47 67">
    <location>
        <position position="653"/>
    </location>
</feature>
<feature type="modified residue" description="Phosphotyrosine; by autocatalysis" evidence="27 45 47 67">
    <location>
        <position position="654"/>
    </location>
</feature>
<feature type="modified residue" description="Phosphotyrosine; by autocatalysis" evidence="45 67">
    <location>
        <position position="730"/>
    </location>
</feature>
<feature type="modified residue" description="Phosphotyrosine; by autocatalysis" evidence="47">
    <location>
        <position position="766"/>
    </location>
</feature>
<feature type="glycosylation site" description="N-linked (GlcNAc...) asparagine" evidence="2">
    <location>
        <position position="77"/>
    </location>
</feature>
<feature type="glycosylation site" description="N-linked (GlcNAc...) asparagine" evidence="2">
    <location>
        <position position="117"/>
    </location>
</feature>
<feature type="glycosylation site" description="N-linked (GlcNAc...) asparagine" evidence="2">
    <location>
        <position position="227"/>
    </location>
</feature>
<feature type="glycosylation site" description="N-linked (GlcNAc...) asparagine" evidence="2">
    <location>
        <position position="240"/>
    </location>
</feature>
<feature type="glycosylation site" description="N-linked (GlcNAc...) asparagine" evidence="2">
    <location>
        <position position="264"/>
    </location>
</feature>
<feature type="glycosylation site" description="N-linked (GlcNAc...) asparagine" evidence="24">
    <location>
        <position position="296"/>
    </location>
</feature>
<feature type="glycosylation site" description="N-linked (GlcNAc...) asparagine" evidence="2">
    <location>
        <position position="317"/>
    </location>
</feature>
<feature type="glycosylation site" description="N-linked (GlcNAc...) asparagine" evidence="2">
    <location>
        <position position="330"/>
    </location>
</feature>
<feature type="disulfide bond" evidence="3">
    <location>
        <begin position="55"/>
        <end position="101"/>
    </location>
</feature>
<feature type="disulfide bond">
    <location>
        <begin position="178"/>
        <end position="230"/>
    </location>
</feature>
<feature type="disulfide bond">
    <location>
        <begin position="277"/>
        <end position="341"/>
    </location>
</feature>
<feature type="splice variant" id="VSP_002957" description="In isoform 10, isoform 11, isoform 12 and isoform 13." evidence="79">
    <location>
        <begin position="1"/>
        <end position="160"/>
    </location>
</feature>
<feature type="splice variant" id="VSP_041916" description="In isoform 20." evidence="84">
    <original>MWSWKCLLFWAVLVTATLCTARPSPTLPEQ</original>
    <variation>MAAVTRDFGEMLLHSGRVLPAE</variation>
    <location>
        <begin position="1"/>
        <end position="30"/>
    </location>
</feature>
<feature type="splice variant" id="VSP_041917" description="In isoform 21." evidence="73">
    <original>M</original>
    <variation>MEARVSLKRRIELTVEYPWRCGALSPTSNCRTGM</variation>
    <location>
        <position position="1"/>
    </location>
</feature>
<feature type="splice variant" id="VSP_002958" description="In isoform 6, isoform 7, isoform 8, isoform 9, isoform 15, isoform 17 and isoform 18." evidence="73 74 75 79 81 82 83">
    <location>
        <begin position="31"/>
        <end position="119"/>
    </location>
</feature>
<feature type="splice variant" id="VSP_009836" description="In isoform 3." evidence="79">
    <original>QPWGAPVEVESFLVHPGDLLQLRCRLRDDV</original>
    <variation>CPDLQEAKSCSASFHSITPLPFGLGTRLSD</variation>
    <location>
        <begin position="32"/>
        <end position="61"/>
    </location>
</feature>
<feature type="splice variant" id="VSP_009837" description="In isoform 3." evidence="79">
    <location>
        <begin position="62"/>
        <end position="822"/>
    </location>
</feature>
<feature type="splice variant" id="VSP_038470" description="In isoform 19." evidence="76 80">
    <original>S</original>
    <variation>SVPI</variation>
    <location>
        <position position="119"/>
    </location>
</feature>
<feature type="splice variant" id="VSP_009838" description="In isoform 16." evidence="75">
    <original>DALPSSEDDDDDDDSSSEEKETDNTKPNRMP</original>
    <variation>ACPDLQEAKWCSASFHSITPLPFGLGTRLSD</variation>
    <location>
        <begin position="120"/>
        <end position="150"/>
    </location>
</feature>
<feature type="splice variant" id="VSP_002959" description="In isoform 14, isoform 15, isoform 18, isoform 19 and isoform 21." evidence="73 74 75 76 77 78 80 81 82 83 84">
    <location>
        <begin position="148"/>
        <end position="149"/>
    </location>
</feature>
<feature type="splice variant" id="VSP_009839" description="In isoform 16." evidence="75">
    <location>
        <begin position="151"/>
        <end position="822"/>
    </location>
</feature>
<feature type="splice variant" id="VSP_009840" description="In isoform 17 and isoform 18." evidence="82">
    <original>TAGVNTTDKEMEVLHLRNVSFEDAGEYTCLAGNSIGLSHHSAWLTVLEALEERPAVMTSPLYLEIIIYCTGAFLISCMV</original>
    <variation>VIMAPVFVGQSTGKETTVSGAQVPVGRLSCPRMGSFLTLQAHTLHLSRDLATSPRTSNRGHKVEVSWEQRAAGMGGAGL</variation>
    <location>
        <begin position="313"/>
        <end position="391"/>
    </location>
</feature>
<feature type="splice variant" id="VSP_038471" description="In isoform 19." evidence="76 80">
    <original>TAGVNTTDKEMEVLHLRNVSFEDAGEYTCLAGNSIGLSHHSAWLTVLE</original>
    <variation>HSGINSSDAEVLTLFNVTEAQSGEYVCKVSNYIGEANQSAWLTVTRP</variation>
    <location>
        <begin position="313"/>
        <end position="360"/>
    </location>
</feature>
<feature type="splice variant" id="VSP_009841" description="In isoform 17 and isoform 18." evidence="82">
    <location>
        <begin position="392"/>
        <end position="822"/>
    </location>
</feature>
<feature type="splice variant" id="VSP_041918" description="In isoform 20." evidence="84">
    <location>
        <begin position="427"/>
        <end position="428"/>
    </location>
</feature>
<feature type="splice variant" id="VSP_002960" description="In isoform 4, isoform 5, isoform 8, isoform 9, isoform 12 and isoform 13." evidence="74 79">
    <location>
        <begin position="428"/>
        <end position="429"/>
    </location>
</feature>
<feature type="splice variant" id="VSP_009842" description="In isoform 2, isoform 5, isoform 7, isoform 9, isoform 11 and isoform 13." evidence="79">
    <original>CIHRDLAARNVLVTEDNVMKIADFGLARDIHHIDYYKKTTNGRL</original>
    <variation>VWNLKAPLVHTPRPGSQECPGDRGQCDEDSRLWPRTGHSPHRLL</variation>
    <location>
        <begin position="619"/>
        <end position="662"/>
    </location>
</feature>
<feature type="splice variant" id="VSP_009843" description="In isoform 2, isoform 5, isoform 7, isoform 9, isoform 11 and isoform 13." evidence="79">
    <location>
        <begin position="663"/>
        <end position="822"/>
    </location>
</feature>
<feature type="sequence variant" id="VAR_074012" description="In HH2; uncertain significance; dbSNP:rs760884357." evidence="63">
    <original>W</original>
    <variation>C</variation>
    <location>
        <position position="4"/>
    </location>
</feature>
<feature type="sequence variant" id="VAR_019290" description="In dbSNP:rs17175750." evidence="72">
    <original>R</original>
    <variation>S</variation>
    <location>
        <position position="22"/>
    </location>
</feature>
<feature type="sequence variant" id="VAR_030968" description="In HH2; phenotype consistent with normosmic idiopathic hypogonadotropic hypogonadism; dbSNP:rs121909640." evidence="34">
    <original>G</original>
    <variation>S</variation>
    <location>
        <position position="48"/>
    </location>
</feature>
<feature type="sequence variant" id="VAR_072993" description="In HH2; dbSNP:rs140254426." evidence="62">
    <original>G</original>
    <variation>R</variation>
    <location>
        <position position="70"/>
    </location>
</feature>
<feature type="sequence variant" id="VAR_030969" description="In dbSNP:rs767195580." evidence="37">
    <original>N</original>
    <variation>K</variation>
    <location>
        <position position="77"/>
    </location>
</feature>
<feature type="sequence variant" id="VAR_030970" description="In HH2; dbSNP:rs1554570706." evidence="33">
    <original>R</original>
    <variation>C</variation>
    <location>
        <position position="78"/>
    </location>
</feature>
<feature type="sequence variant" id="VAR_074013" description="In HH2; uncertain significance; dbSNP:rs2150958177." evidence="63">
    <original>S</original>
    <variation>C</variation>
    <location>
        <position position="96"/>
    </location>
</feature>
<feature type="sequence variant" id="VAR_017885" description="In HH2; dbSNP:rs2150957969." evidence="14">
    <original>G</original>
    <variation>D</variation>
    <location>
        <position position="97"/>
    </location>
</feature>
<feature type="sequence variant" id="VAR_017886" description="In HH2; impairs the tertiary folding resulting in incomplete glycosylation and reduced cell surface expression; dbSNP:rs727505373." evidence="14 49">
    <original>Y</original>
    <variation>C</variation>
    <location>
        <position position="99"/>
    </location>
</feature>
<feature type="sequence variant" id="VAR_030971" description="In HH2." evidence="37">
    <original>C</original>
    <variation>F</variation>
    <location>
        <position position="101"/>
    </location>
</feature>
<feature type="sequence variant" id="VAR_030972" description="In HH2; dbSNP:rs55642501." evidence="21 33">
    <original>V</original>
    <variation>I</variation>
    <location>
        <position position="102"/>
    </location>
</feature>
<feature type="sequence variant" id="VAR_072994" description="In HH2; dbSNP:rs747842199." evidence="62">
    <original>V</original>
    <variation>I</variation>
    <location>
        <position position="116"/>
    </location>
</feature>
<feature type="sequence variant" id="VAR_069288" description="In HH2; some patients also carry GNRHR mutations; dbSNP:rs780765366." evidence="49 59">
    <original>N</original>
    <variation>S</variation>
    <location>
        <position position="117"/>
    </location>
</feature>
<feature type="sequence variant" id="VAR_042201" description="In a breast infiltrating ductal carcinoma sample; somatic mutation; dbSNP:rs121913473." evidence="40">
    <original>S</original>
    <variation>L</variation>
    <location>
        <position position="125"/>
    </location>
</feature>
<feature type="sequence variant" id="VAR_030973" description="In HH2; dbSNP:rs765615419." evidence="21">
    <original>D</original>
    <variation>A</variation>
    <location>
        <position position="129"/>
    </location>
</feature>
<feature type="sequence variant" id="VAR_070851" description="In HRTFDS; dbSNP:rs397515481." evidence="60">
    <original>L</original>
    <variation>S</variation>
    <location>
        <position position="165"/>
    </location>
</feature>
<feature type="sequence variant" id="VAR_017887" description="In HH2; with cleft palate, corpus callosum agenesis, unilateral deafness and fusion of fourth and fifth metacarpal bones; dbSNP:rs121909630." evidence="14">
    <original>A</original>
    <variation>S</variation>
    <location>
        <position position="167"/>
    </location>
</feature>
<feature type="sequence variant" id="VAR_072995" description="In HH2." evidence="62">
    <original>V</original>
    <variation>A</variation>
    <location>
        <position position="174"/>
    </location>
</feature>
<feature type="sequence variant" id="VAR_030974" description="In HH2; with severe ear anomalies; dbSNP:rs2150914483 and dbSNP:rs2150914598." evidence="32">
    <original>C</original>
    <variation>S</variation>
    <location>
        <position position="178"/>
    </location>
</feature>
<feature type="sequence variant" id="VAR_070852" description="In HRTFDS; dbSNP:rs869025669." evidence="60">
    <original>L</original>
    <variation>S</variation>
    <location>
        <position position="191"/>
    </location>
</feature>
<feature type="sequence variant" id="VAR_030975" description="In dbSNP:rs17851623." evidence="20">
    <original>W</original>
    <variation>G</variation>
    <location>
        <position position="213"/>
    </location>
</feature>
<feature type="sequence variant" id="VAR_030976" description="In HH2; dbSNP:rs2150863079." evidence="33">
    <original>D</original>
    <variation>H</variation>
    <location>
        <position position="224"/>
    </location>
</feature>
<feature type="sequence variant" id="VAR_069289" description="In HH2; some patients also carry KISS1R mutations; impairs the tertiary folding resulting in incomplete glycosylation and reduced cell surface expression." evidence="49 59">
    <original>Y</original>
    <variation>D</variation>
    <location>
        <position position="228"/>
    </location>
</feature>
<feature type="sequence variant" id="VAR_030977" description="In HH2; dbSNP:rs2150859908." evidence="33">
    <original>G</original>
    <variation>D</variation>
    <location>
        <position position="237"/>
    </location>
</feature>
<feature type="sequence variant" id="VAR_030978" description="In HH2; with or without anosmia; also found in a family member with isolated anosmia; may impair proper folding; dbSNP:rs121909635." evidence="31">
    <original>G</original>
    <variation>S</variation>
    <location>
        <position position="237"/>
    </location>
</feature>
<feature type="sequence variant" id="VAR_069290" description="In HH2; some patients also carry PROKR2 and GNRH1 mutations; impairs the tertiary folding resulting in incomplete glycosylation and reduced cell surface expression; dbSNP:rs2150859323." evidence="49 59">
    <original>I</original>
    <variation>T</variation>
    <location>
        <position position="239"/>
    </location>
</feature>
<feature type="sequence variant" id="VAR_030979" description="In HH2." evidence="34">
    <original>L</original>
    <variation>P</variation>
    <location>
        <position position="245"/>
    </location>
</feature>
<feature type="sequence variant" id="VAR_069291" description="In HH2; with or without anosmia; results in Kallmann syndrome in the presence of HS6ST1 mutation TRP-306; reduces receptor affinity for fibroblast growth factor; dbSNP:rs121909645." evidence="49 55 59 62">
    <original>R</original>
    <variation>Q</variation>
    <location>
        <position position="250"/>
    </location>
</feature>
<feature type="sequence variant" id="VAR_030980" description="In HH2; dbSNP:rs2150826896." evidence="34 37">
    <original>R</original>
    <variation>W</variation>
    <location>
        <position position="250"/>
    </location>
</feature>
<feature type="sequence variant" id="VAR_004111" description="In PS and JWS; dbSNP:rs121909627." evidence="10 66">
    <original>P</original>
    <variation>R</variation>
    <location>
        <position position="252"/>
    </location>
</feature>
<feature type="sequence variant" id="VAR_042202" description="In a lung bronchoalveolar carcinoma sample; somatic mutation; dbSNP:rs121913472." evidence="40">
    <original>P</original>
    <variation>T</variation>
    <location>
        <position position="252"/>
    </location>
</feature>
<feature type="sequence variant" id="VAR_030981" description="In HH2; dbSNP:rs1820085287." evidence="33">
    <original>R</original>
    <variation>Q</variation>
    <location>
        <position position="254"/>
    </location>
</feature>
<feature type="sequence variant" id="VAR_030982" description="In HH2; dbSNP:rs2150822504." evidence="37">
    <original>G</original>
    <variation>D</variation>
    <location>
        <position position="270"/>
    </location>
</feature>
<feature type="sequence variant" id="VAR_030983" description="In HH2; dbSNP:rs1131691929." evidence="21 33">
    <original>V</original>
    <variation>M</variation>
    <location>
        <position position="273"/>
    </location>
</feature>
<feature type="sequence variant" id="VAR_030984" description="In HH2; also found in a family member with isolated anosmia; dbSNP:rs727505369." evidence="33">
    <original>E</original>
    <variation>G</variation>
    <location>
        <position position="274"/>
    </location>
</feature>
<feature type="sequence variant" id="VAR_017888" description="In HH2; dbSNP:rs2150821010." evidence="14">
    <original>C</original>
    <variation>Y</variation>
    <location>
        <position position="277"/>
    </location>
</feature>
<feature type="sequence variant" id="VAR_030985" description="In HH2; dbSNP:rs1554562012." evidence="37">
    <original>P</original>
    <variation>R</variation>
    <location>
        <position position="283"/>
    </location>
</feature>
<feature type="sequence variant" id="VAR_030986" description="In TRIGNO1; dbSNP:rs121909633." evidence="11">
    <original>I</original>
    <variation>T</variation>
    <location>
        <position position="300"/>
    </location>
</feature>
<feature type="sequence variant" id="VAR_080328" description="In HH2." evidence="37">
    <location>
        <begin position="324"/>
        <end position="822"/>
    </location>
</feature>
<feature type="sequence variant" id="VAR_030987" description="In OGD; dbSNP:rs121909632." evidence="22 25">
    <original>N</original>
    <variation>I</variation>
    <location>
        <position position="330"/>
    </location>
</feature>
<feature type="sequence variant" id="VAR_030988" description="In HH2; dbSNP:rs2150756580." evidence="37">
    <original>S</original>
    <variation>C</variation>
    <location>
        <position position="332"/>
    </location>
</feature>
<feature type="sequence variant" id="VAR_030989" description="In HH2; dbSNP:rs2150755221." evidence="33">
    <original>Y</original>
    <variation>C</variation>
    <location>
        <position position="339"/>
    </location>
</feature>
<feature type="sequence variant" id="VAR_069954" description="In HH2; phenotype consistent with Kallmann syndrome; the patient also carries a splice site mutation in NSMF; dbSNP:rs121909638." evidence="59">
    <original>L</original>
    <variation>S</variation>
    <location>
        <position position="342"/>
    </location>
</feature>
<feature type="sequence variant" id="VAR_030990" description="In HH2; dbSNP:rs1818935081." evidence="34">
    <original>A</original>
    <variation>V</variation>
    <location>
        <position position="343"/>
    </location>
</feature>
<feature type="sequence variant" id="VAR_030991" description="In HH2; also found in a family member with isolated anosmia; dbSNP:rs2150754128." evidence="33">
    <original>S</original>
    <variation>C</variation>
    <location>
        <position position="346"/>
    </location>
</feature>
<feature type="sequence variant" id="VAR_069955" description="In HH2; phenotype consistent with Kallmann syndrome; the patient also carries a mutation in IL17RD; dbSNP:rs886037634." evidence="59 62">
    <original>G</original>
    <variation>R</variation>
    <location>
        <position position="348"/>
    </location>
</feature>
<feature type="sequence variant" id="VAR_030992" description="In HH2; with or without anosmia; dbSNP:rs121909641." evidence="34">
    <original>P</original>
    <variation>L</variation>
    <location>
        <position position="366"/>
    </location>
</feature>
<feature type="sequence variant" id="VAR_030993" description="In OGD; elevated basal activity and increased FGF2-mediated activity; dbSNP:rs121909631." evidence="22">
    <original>Y</original>
    <variation>C</variation>
    <location>
        <position position="374"/>
    </location>
</feature>
<feature type="sequence variant" id="VAR_030994" description="In OGD; dbSNP:rs121909634." evidence="22 25">
    <original>C</original>
    <variation>R</variation>
    <location>
        <position position="381"/>
    </location>
</feature>
<feature type="sequence variant" id="VAR_069292" description="In HH2; some patients also carry GNRHR mutations; dbSNP:rs121909637." evidence="49 59">
    <original>R</original>
    <variation>L</variation>
    <location>
        <position position="470"/>
    </location>
</feature>
<feature type="sequence variant" id="VAR_069956" description="In HH2; phenotype consistent with Kallmann syndrome; the patient also carries a rare variant in SPRY4; dbSNP:rs397515444." evidence="59">
    <original>P</original>
    <variation>T</variation>
    <location>
        <position position="483"/>
    </location>
</feature>
<feature type="sequence variant" id="VAR_070853" description="In HRTFDS; dbSNP:rs869025670." evidence="60">
    <original>G</original>
    <variation>R</variation>
    <location>
        <position position="490"/>
    </location>
</feature>
<feature type="sequence variant" id="VAR_030995" description="In HH2; dbSNP:rs749758370." evidence="21">
    <original>A</original>
    <variation>T</variation>
    <location>
        <position position="520"/>
    </location>
</feature>
<feature type="sequence variant" id="VAR_030996" description="In HH2; dbSNP:rs2150627992." evidence="33">
    <original>I</original>
    <variation>V</variation>
    <location>
        <position position="538"/>
    </location>
</feature>
<feature type="sequence variant" id="VAR_075853" description="In ECCL; somatic mutation; activating mutation; strongly increased speed of the first autophosphorylation and loss of the normal sequential order of autophosphorylation; dbSNP:rs779707422." evidence="45 64">
    <original>N</original>
    <variation>K</variation>
    <location>
        <position position="546"/>
    </location>
</feature>
<feature type="sequence variant" id="VAR_075854" description="In dbSNP:rs2150591693." evidence="64">
    <original>V</original>
    <variation>M</variation>
    <location>
        <position position="561"/>
    </location>
</feature>
<feature type="sequence variant" id="VAR_017889" description="In HH2; with bimanual synkinesis; dbSNP:rs121909629." evidence="14">
    <original>V</original>
    <variation>M</variation>
    <location>
        <position position="607"/>
    </location>
</feature>
<feature type="sequence variant" id="VAR_069293" description="In HH2; some patients also carry GNRHR mutations; impairs tyrosine kinase activity; dbSNP:rs2150581560." evidence="49 59">
    <original>K</original>
    <variation>N</variation>
    <location>
        <position position="618"/>
    </location>
</feature>
<feature type="sequence variant" id="VAR_030997" description="In HH2; dbSNP:rs2150565397." evidence="37">
    <original>H</original>
    <variation>R</variation>
    <location>
        <position position="621"/>
    </location>
</feature>
<feature type="sequence variant" id="VAR_080329" description="In HH2." evidence="14">
    <location>
        <begin position="622"/>
        <end position="822"/>
    </location>
</feature>
<feature type="sequence variant" id="VAR_030998" description="In HH2; with severe ear anomalies; dbSNP:rs121909628." evidence="32">
    <original>R</original>
    <variation>G</variation>
    <location>
        <position position="622"/>
    </location>
</feature>
<feature type="sequence variant" id="VAR_030999" description="In HH2; dbSNP:rs1815818452." evidence="32">
    <original>R</original>
    <variation>Q</variation>
    <location>
        <position position="622"/>
    </location>
</feature>
<feature type="sequence variant" id="VAR_070854" description="In HRTFDS; dbSNP:rs398122946." evidence="60">
    <original>D</original>
    <variation>Y</variation>
    <location>
        <position position="623"/>
    </location>
</feature>
<feature type="sequence variant" id="VAR_071460" description="In HRTFDS; dbSNP:rs869025671." evidence="61">
    <original>R</original>
    <variation>T</variation>
    <location>
        <position position="627"/>
    </location>
</feature>
<feature type="sequence variant" id="VAR_070855" description="In HRTFDS; dbSNP:rs869025672." evidence="60">
    <original>N</original>
    <variation>K</variation>
    <location>
        <position position="628"/>
    </location>
</feature>
<feature type="sequence variant" id="VAR_075855" description="In ECCL; somatic mutation; dbSNP:rs869320694." evidence="64">
    <original>K</original>
    <variation>E</variation>
    <location>
        <position position="656"/>
    </location>
</feature>
<feature type="sequence variant" id="VAR_080330" description="In HH2." evidence="37">
    <location>
        <begin position="661"/>
        <end position="822"/>
    </location>
</feature>
<feature type="sequence variant" id="VAR_042203" description="In a lung large cell carcinoma sample; somatic mutation; dbSNP:rs1057518620." evidence="40">
    <original>V</original>
    <variation>L</variation>
    <location>
        <position position="664"/>
    </location>
</feature>
<feature type="sequence variant" id="VAR_017890" description="In HH2; with cleft palate; dbSNP:rs1563433902." evidence="14">
    <original>W</original>
    <variation>R</variation>
    <location>
        <position position="666"/>
    </location>
</feature>
<feature type="sequence variant" id="VAR_069957" description="In HH2; phenotype consistent with Kallmann syndrome; the patient also carries a rare variant in FLRT3; dbSNP:rs397515446." evidence="59">
    <original>E</original>
    <variation>K</variation>
    <location>
        <position position="670"/>
    </location>
</feature>
<feature type="sequence variant" id="VAR_069294" description="In HH2; dbSNP:rs2150550526." evidence="49">
    <original>A</original>
    <variation>P</variation>
    <location>
        <position position="671"/>
    </location>
</feature>
<feature type="sequence variant" id="VAR_031000" description="In HH2; dbSNP:rs2150537416." evidence="37">
    <original>S</original>
    <variation>F</variation>
    <location>
        <position position="685"/>
    </location>
</feature>
<feature type="sequence variant" id="VAR_031001" description="In HH2; dbSNP:rs727505376." evidence="23 57">
    <original>G</original>
    <variation>R</variation>
    <location>
        <position position="687"/>
    </location>
</feature>
<feature type="sequence variant" id="VAR_069958" description="In HH2; phenotype consistent with Kallmann syndrome; the patient also carries a rare variant in DUSP6; dbSNP:rs397515445." evidence="59">
    <original>E</original>
    <variation>G</variation>
    <location>
        <position position="692"/>
    </location>
</feature>
<feature type="sequence variant" id="VAR_031002" description="In HH2; dbSNP:rs763166714." evidence="37">
    <original>I</original>
    <variation>F</variation>
    <location>
        <position position="693"/>
    </location>
</feature>
<feature type="sequence variant" id="VAR_031003" description="In HH2; dbSNP:rs768957161." evidence="33">
    <original>G</original>
    <variation>R</variation>
    <location>
        <position position="703"/>
    </location>
</feature>
<feature type="sequence variant" id="VAR_031004" description="In HH2; dbSNP:rs768957161." evidence="33">
    <original>G</original>
    <variation>S</variation>
    <location>
        <position position="703"/>
    </location>
</feature>
<feature type="sequence variant" id="VAR_017891" description="In HH2; dbSNP:rs2150531555." evidence="14">
    <original>M</original>
    <variation>R</variation>
    <location>
        <position position="719"/>
    </location>
</feature>
<feature type="sequence variant" id="VAR_074014" description="In HH2; uncertain significance; dbSNP:rs1085307879." evidence="63">
    <original>M</original>
    <variation>V</variation>
    <location>
        <position position="719"/>
    </location>
</feature>
<feature type="sequence variant" id="VAR_031005" description="In HH2; associated in cis with K-724; also found in a family member with isolated anosmia; reduced tyrosine kinase activity; dbSNP:rs267606805." evidence="31 59">
    <original>P</original>
    <variation>H</variation>
    <location>
        <position position="722"/>
    </location>
</feature>
<feature type="sequence variant" id="VAR_031006" description="In HH2; dbSNP:rs121909642." evidence="34">
    <original>P</original>
    <variation>S</variation>
    <location>
        <position position="722"/>
    </location>
</feature>
<feature type="sequence variant" id="VAR_031007" description="In HH2; associated in cis with H-722; also found in a family member with isolated anosmia; reduced tyrosine kinase activity; dbSNP:rs267606806." evidence="31 59">
    <original>N</original>
    <variation>K</variation>
    <location>
        <position position="724"/>
    </location>
</feature>
<feature type="sequence variant" id="VAR_070856" description="In HRTFDS; dbSNP:rs398122945." evidence="60">
    <original>C</original>
    <variation>Y</variation>
    <location>
        <position position="725"/>
    </location>
</feature>
<feature type="sequence variant" id="VAR_031008" description="In HH2; dbSNP:rs2150521592." evidence="17 23">
    <original>P</original>
    <variation>S</variation>
    <location>
        <position position="745"/>
    </location>
</feature>
<feature type="sequence variant" id="VAR_069959" description="In HH2; the patient also carries a rare variant in FGF8; dbSNP:rs121909644." evidence="59">
    <original>D</original>
    <variation>Y</variation>
    <location>
        <position position="768"/>
    </location>
</feature>
<feature type="sequence variant" id="VAR_031009" description="In dbSNP:rs2956723." evidence="33">
    <original>L</original>
    <variation>V</variation>
    <location>
        <position position="769"/>
    </location>
</feature>
<feature type="sequence variant" id="VAR_017892" description="In dbSNP:rs56234888." evidence="14 37">
    <original>P</original>
    <variation>S</variation>
    <location>
        <position position="772"/>
    </location>
</feature>
<feature type="sequence variant" id="VAR_031010" description="In HH2; also found in a family member with isolated anosmia; dbSNP:rs781328162." evidence="34">
    <original>V</original>
    <variation>I</variation>
    <location>
        <position position="795"/>
    </location>
</feature>
<feature type="sequence variant" id="VAR_019291" description="In dbSNP:rs17182456." evidence="72">
    <original>G</original>
    <variation>R</variation>
    <location>
        <position position="818"/>
    </location>
</feature>
<feature type="sequence variant" id="VAR_019292" description="In dbSNP:rs17182463." evidence="37 72">
    <original>R</original>
    <variation>C</variation>
    <location>
        <position position="822"/>
    </location>
</feature>
<feature type="mutagenesis site" description="Loss of kinase activity." evidence="19">
    <original>K</original>
    <variation>A</variation>
    <location>
        <position position="514"/>
    </location>
</feature>
<feature type="mutagenesis site" description="Strongly reduced autophosphorylation in response to FGF signaling. No effect on in vitro kinase activity." evidence="51">
    <original>R</original>
    <variation>E</variation>
    <location>
        <position position="577"/>
    </location>
</feature>
<feature type="mutagenesis site" description="Abolishes interaction with PLCG1.">
    <original>R</original>
    <variation>V</variation>
    <location>
        <position position="609"/>
    </location>
</feature>
<feature type="mutagenesis site" description="Loss of kinase activity." evidence="45">
    <original>D</original>
    <variation>A</variation>
    <location>
        <position position="623"/>
    </location>
</feature>
<feature type="mutagenesis site" description="No effect on kinase activity. Loss of autophosphorylation and kinase activity; when associated with F-654." evidence="67">
    <original>Y</original>
    <variation>F</variation>
    <location>
        <position position="653"/>
    </location>
</feature>
<feature type="mutagenesis site" description="Reduced kinase activity. Loss of autophosphorylation and kinase activity; when associated with F-653." evidence="67">
    <original>Y</original>
    <variation>F</variation>
    <location>
        <position position="654"/>
    </location>
</feature>
<feature type="mutagenesis site" description="Abolishes interaction with PLCG1.">
    <original>D</original>
    <variation>V</variation>
    <location>
        <position position="755"/>
    </location>
</feature>
<feature type="mutagenesis site" description="Abolishes interaction with PLCG1 and SHB. Decreases phosphorylation of FRS2, activation of RAS and MAP kinase signaling and stimulation of cell proliferation." evidence="13 15 16 65">
    <original>Y</original>
    <variation>F</variation>
    <location>
        <position position="766"/>
    </location>
</feature>
<feature type="sequence conflict" description="In Ref. 8; AAA35958/AAA35959." evidence="85" ref="8">
    <original>S</original>
    <variation>C</variation>
    <location>
        <position position="24"/>
    </location>
</feature>
<feature type="sequence conflict" description="In Ref. 3; AAA35837." evidence="85" ref="3">
    <original>K</original>
    <variation>E</variation>
    <location>
        <position position="192"/>
    </location>
</feature>
<feature type="sequence conflict" description="In Ref. 5; AAA35835." evidence="85" ref="5">
    <original>G</original>
    <variation>S</variation>
    <location>
        <position position="194"/>
    </location>
</feature>
<feature type="sequence conflict" description="In Ref. 16; no nucleotide entry." evidence="85" ref="16">
    <original>E</original>
    <variation>G</variation>
    <location>
        <position position="196"/>
    </location>
</feature>
<feature type="sequence conflict" description="In Ref. 12; BAD96438." evidence="85" ref="12">
    <original>S</original>
    <variation>F</variation>
    <location>
        <position position="223"/>
    </location>
</feature>
<feature type="sequence conflict" description="In Ref. 8; AAA35958/AAA35959." evidence="85" ref="8">
    <original>V</original>
    <variation>A</variation>
    <location>
        <position position="308"/>
    </location>
</feature>
<feature type="sequence conflict" description="In Ref. 18; CAA68679." evidence="85" ref="18">
    <original>E</original>
    <variation>Q</variation>
    <location>
        <position position="364"/>
    </location>
</feature>
<feature type="sequence conflict" description="In Ref. 1; AAA75007." evidence="85" ref="1">
    <original>P</original>
    <variation>L</variation>
    <location>
        <position position="469"/>
    </location>
</feature>
<feature type="sequence conflict" description="In Ref. 12; BAD96438." evidence="85" ref="12">
    <original>K</original>
    <variation>R</variation>
    <location>
        <position position="482"/>
    </location>
</feature>
<feature type="sequence conflict" description="In Ref. 12; BAD96438." evidence="85" ref="12">
    <original>R</original>
    <variation>W</variation>
    <location>
        <position position="576"/>
    </location>
</feature>
<feature type="sequence conflict" description="In Ref. 4; CAA36101." evidence="85" ref="4">
    <original>G</original>
    <variation>R</variation>
    <location>
        <position position="817"/>
    </location>
</feature>
<feature type="strand" evidence="86">
    <location>
        <begin position="40"/>
        <end position="42"/>
    </location>
</feature>
<feature type="strand" evidence="86">
    <location>
        <begin position="51"/>
        <end position="54"/>
    </location>
</feature>
<feature type="strand" evidence="86">
    <location>
        <begin position="63"/>
        <end position="72"/>
    </location>
</feature>
<feature type="strand" evidence="86">
    <location>
        <begin position="77"/>
        <end position="81"/>
    </location>
</feature>
<feature type="strand" evidence="86">
    <location>
        <begin position="83"/>
        <end position="88"/>
    </location>
</feature>
<feature type="turn" evidence="86">
    <location>
        <begin position="93"/>
        <end position="95"/>
    </location>
</feature>
<feature type="strand" evidence="86">
    <location>
        <begin position="97"/>
        <end position="105"/>
    </location>
</feature>
<feature type="strand" evidence="86">
    <location>
        <begin position="108"/>
        <end position="116"/>
    </location>
</feature>
<feature type="strand" evidence="98">
    <location>
        <begin position="151"/>
        <end position="156"/>
    </location>
</feature>
<feature type="helix" evidence="98">
    <location>
        <begin position="159"/>
        <end position="161"/>
    </location>
</feature>
<feature type="strand" evidence="98">
    <location>
        <begin position="165"/>
        <end position="169"/>
    </location>
</feature>
<feature type="strand" evidence="98">
    <location>
        <begin position="174"/>
        <end position="177"/>
    </location>
</feature>
<feature type="strand" evidence="98">
    <location>
        <begin position="180"/>
        <end position="184"/>
    </location>
</feature>
<feature type="strand" evidence="98">
    <location>
        <begin position="187"/>
        <end position="192"/>
    </location>
</feature>
<feature type="helix" evidence="98">
    <location>
        <begin position="199"/>
        <end position="201"/>
    </location>
</feature>
<feature type="strand" evidence="98">
    <location>
        <begin position="207"/>
        <end position="209"/>
    </location>
</feature>
<feature type="turn" evidence="98">
    <location>
        <begin position="210"/>
        <end position="213"/>
    </location>
</feature>
<feature type="strand" evidence="98">
    <location>
        <begin position="214"/>
        <end position="217"/>
    </location>
</feature>
<feature type="helix" evidence="98">
    <location>
        <begin position="222"/>
        <end position="224"/>
    </location>
</feature>
<feature type="strand" evidence="98">
    <location>
        <begin position="226"/>
        <end position="234"/>
    </location>
</feature>
<feature type="strand" evidence="98">
    <location>
        <begin position="237"/>
        <end position="248"/>
    </location>
</feature>
<feature type="strand" evidence="98">
    <location>
        <begin position="265"/>
        <end position="268"/>
    </location>
</feature>
<feature type="strand" evidence="97">
    <location>
        <begin position="269"/>
        <end position="271"/>
    </location>
</feature>
<feature type="strand" evidence="98">
    <location>
        <begin position="273"/>
        <end position="276"/>
    </location>
</feature>
<feature type="strand" evidence="98">
    <location>
        <begin position="286"/>
        <end position="293"/>
    </location>
</feature>
<feature type="strand" evidence="99">
    <location>
        <begin position="296"/>
        <end position="300"/>
    </location>
</feature>
<feature type="strand" evidence="99">
    <location>
        <begin position="302"/>
        <end position="304"/>
    </location>
</feature>
<feature type="strand" evidence="98">
    <location>
        <begin position="307"/>
        <end position="313"/>
    </location>
</feature>
<feature type="strand" evidence="90">
    <location>
        <begin position="316"/>
        <end position="318"/>
    </location>
</feature>
<feature type="helix" evidence="98">
    <location>
        <begin position="320"/>
        <end position="323"/>
    </location>
</feature>
<feature type="strand" evidence="98">
    <location>
        <begin position="325"/>
        <end position="328"/>
    </location>
</feature>
<feature type="strand" evidence="99">
    <location>
        <begin position="333"/>
        <end position="335"/>
    </location>
</feature>
<feature type="strand" evidence="98">
    <location>
        <begin position="337"/>
        <end position="345"/>
    </location>
</feature>
<feature type="strand" evidence="98">
    <location>
        <begin position="348"/>
        <end position="359"/>
    </location>
</feature>
<feature type="turn" evidence="96">
    <location>
        <begin position="461"/>
        <end position="463"/>
    </location>
</feature>
<feature type="turn" evidence="95">
    <location>
        <begin position="469"/>
        <end position="471"/>
    </location>
</feature>
<feature type="helix" evidence="95">
    <location>
        <begin position="475"/>
        <end position="477"/>
    </location>
</feature>
<feature type="strand" evidence="95">
    <location>
        <begin position="478"/>
        <end position="486"/>
    </location>
</feature>
<feature type="strand" evidence="95">
    <location>
        <begin position="488"/>
        <end position="499"/>
    </location>
</feature>
<feature type="strand" evidence="95">
    <location>
        <begin position="501"/>
        <end position="503"/>
    </location>
</feature>
<feature type="strand" evidence="95">
    <location>
        <begin position="508"/>
        <end position="516"/>
    </location>
</feature>
<feature type="helix" evidence="95">
    <location>
        <begin position="522"/>
        <end position="538"/>
    </location>
</feature>
<feature type="strand" evidence="95">
    <location>
        <begin position="547"/>
        <end position="551"/>
    </location>
</feature>
<feature type="strand" evidence="95">
    <location>
        <begin position="553"/>
        <end position="555"/>
    </location>
</feature>
<feature type="strand" evidence="95">
    <location>
        <begin position="558"/>
        <end position="562"/>
    </location>
</feature>
<feature type="helix" evidence="95">
    <location>
        <begin position="569"/>
        <end position="574"/>
    </location>
</feature>
<feature type="strand" evidence="100">
    <location>
        <begin position="579"/>
        <end position="583"/>
    </location>
</feature>
<feature type="strand" evidence="93">
    <location>
        <begin position="584"/>
        <end position="586"/>
    </location>
</feature>
<feature type="helix" evidence="89">
    <location>
        <begin position="591"/>
        <end position="593"/>
    </location>
</feature>
<feature type="helix" evidence="95">
    <location>
        <begin position="597"/>
        <end position="616"/>
    </location>
</feature>
<feature type="helix" evidence="95">
    <location>
        <begin position="626"/>
        <end position="628"/>
    </location>
</feature>
<feature type="strand" evidence="95">
    <location>
        <begin position="629"/>
        <end position="631"/>
    </location>
</feature>
<feature type="strand" evidence="95">
    <location>
        <begin position="637"/>
        <end position="639"/>
    </location>
</feature>
<feature type="strand" evidence="88">
    <location>
        <begin position="641"/>
        <end position="643"/>
    </location>
</feature>
<feature type="helix" evidence="95">
    <location>
        <begin position="648"/>
        <end position="650"/>
    </location>
</feature>
<feature type="strand" evidence="92">
    <location>
        <begin position="653"/>
        <end position="655"/>
    </location>
</feature>
<feature type="strand" evidence="94">
    <location>
        <begin position="658"/>
        <end position="660"/>
    </location>
</feature>
<feature type="helix" evidence="95">
    <location>
        <begin position="663"/>
        <end position="666"/>
    </location>
</feature>
<feature type="helix" evidence="95">
    <location>
        <begin position="669"/>
        <end position="674"/>
    </location>
</feature>
<feature type="strand" evidence="87">
    <location>
        <begin position="676"/>
        <end position="678"/>
    </location>
</feature>
<feature type="helix" evidence="95">
    <location>
        <begin position="679"/>
        <end position="694"/>
    </location>
</feature>
<feature type="helix" evidence="95">
    <location>
        <begin position="706"/>
        <end position="714"/>
    </location>
</feature>
<feature type="strand" evidence="91">
    <location>
        <begin position="722"/>
        <end position="724"/>
    </location>
</feature>
<feature type="helix" evidence="95">
    <location>
        <begin position="727"/>
        <end position="736"/>
    </location>
</feature>
<feature type="helix" evidence="95">
    <location>
        <begin position="741"/>
        <end position="743"/>
    </location>
</feature>
<feature type="helix" evidence="95">
    <location>
        <begin position="747"/>
        <end position="760"/>
    </location>
</feature>
<feature type="sequence variant" id="VAR_082843" description="In HH2; uncertain significance." evidence="63">
    <original>A</original>
    <variation>T</variation>
    <location sequence="P11362-19">
        <position position="353"/>
    </location>
</feature>
<sequence length="822" mass="91868">MWSWKCLLFWAVLVTATLCTARPSPTLPEQAQPWGAPVEVESFLVHPGDLLQLRCRLRDDVQSINWLRDGVQLAESNRTRITGEEVEVQDSVPADSGLYACVTSSPSGSDTTYFSVNVSDALPSSEDDDDDDDSSSEEKETDNTKPNRMPVAPYWTSPEKMEKKLHAVPAAKTVKFKCPSSGTPNPTLRWLKNGKEFKPDHRIGGYKVRYATWSIIMDSVVPSDKGNYTCIVENEYGSINHTYQLDVVERSPHRPILQAGLPANKTVALGSNVEFMCKVYSDPQPHIQWLKHIEVNGSKIGPDNLPYVQILKTAGVNTTDKEMEVLHLRNVSFEDAGEYTCLAGNSIGLSHHSAWLTVLEALEERPAVMTSPLYLEIIIYCTGAFLISCMVGSVIVYKMKSGTKKSDFHSQMAVHKLAKSIPLRRQVTVSADSSASMNSGVLLVRPSRLSSSGTPMLAGVSEYELPEDPRWELPRDRLVLGKPLGEGCFGQVVLAEAIGLDKDKPNRVTKVAVKMLKSDATEKDLSDLISEMEMMKMIGKHKNIINLLGACTQDGPLYVIVEYASKGNLREYLQARRPPGLEYCYNPSHNPEEQLSSKDLVSCAYQVARGMEYLASKKCIHRDLAARNVLVTEDNVMKIADFGLARDIHHIDYYKKTTNGRLPVKWMAPEALFDRIYTHQSDVWSFGVLLWEIFTLGGSPYPGVPVEELFKLLKEGHRMDKPSNCTNELYMMMRDCWHAVPSQRPTFKQLVEDLDRIVALTSNQEYLDLSMPLDQYSPSFPDTRSSTCSSGEDSVFSHEPLPEEPCLPRHPAQLANGGLKRR</sequence>
<protein>
    <recommendedName>
        <fullName>Fibroblast growth factor receptor 1</fullName>
        <shortName>FGFR-1</shortName>
        <ecNumber evidence="15 19 44 45 47 51 67">2.7.10.1</ecNumber>
    </recommendedName>
    <alternativeName>
        <fullName>Basic fibroblast growth factor receptor 1</fullName>
        <shortName>BFGFR</shortName>
        <shortName>bFGF-R-1</shortName>
    </alternativeName>
    <alternativeName>
        <fullName>Fms-like tyrosine kinase 2</fullName>
        <shortName>FLT-2</shortName>
    </alternativeName>
    <alternativeName>
        <fullName>N-sam</fullName>
    </alternativeName>
    <alternativeName>
        <fullName>Proto-oncogene c-Fgr</fullName>
    </alternativeName>
    <cdAntigenName>CD331</cdAntigenName>
</protein>
<organism>
    <name type="scientific">Homo sapiens</name>
    <name type="common">Human</name>
    <dbReference type="NCBI Taxonomy" id="9606"/>
    <lineage>
        <taxon>Eukaryota</taxon>
        <taxon>Metazoa</taxon>
        <taxon>Chordata</taxon>
        <taxon>Craniata</taxon>
        <taxon>Vertebrata</taxon>
        <taxon>Euteleostomi</taxon>
        <taxon>Mammalia</taxon>
        <taxon>Eutheria</taxon>
        <taxon>Euarchontoglires</taxon>
        <taxon>Primates</taxon>
        <taxon>Haplorrhini</taxon>
        <taxon>Catarrhini</taxon>
        <taxon>Hominidae</taxon>
        <taxon>Homo</taxon>
    </lineage>
</organism>
<accession>P11362</accession>
<accession>A8K6T9</accession>
<accession>A8K8V5</accession>
<accession>C1KBH8</accession>
<accession>P17049</accession>
<accession>Q02063</accession>
<accession>Q02065</accession>
<accession>Q14306</accession>
<accession>Q14307</accession>
<accession>Q53H63</accession>
<accession>Q59H40</accession>
<accession>Q5BJG2</accession>
<accession>Q8N685</accession>
<accession>Q9UD50</accession>
<accession>Q9UDF0</accession>
<accession>Q9UDF1</accession>
<accession>Q9UDF2</accession>
<name>FGFR1_HUMAN</name>
<evidence type="ECO:0000250" key="1">
    <source>
        <dbReference type="UniProtKB" id="P16092"/>
    </source>
</evidence>
<evidence type="ECO:0000255" key="2"/>
<evidence type="ECO:0000255" key="3">
    <source>
        <dbReference type="PROSITE-ProRule" id="PRU00114"/>
    </source>
</evidence>
<evidence type="ECO:0000255" key="4">
    <source>
        <dbReference type="PROSITE-ProRule" id="PRU00159"/>
    </source>
</evidence>
<evidence type="ECO:0000255" key="5">
    <source>
        <dbReference type="PROSITE-ProRule" id="PRU10028"/>
    </source>
</evidence>
<evidence type="ECO:0000256" key="6">
    <source>
        <dbReference type="SAM" id="MobiDB-lite"/>
    </source>
</evidence>
<evidence type="ECO:0000269" key="7">
    <source>
    </source>
</evidence>
<evidence type="ECO:0000269" key="8">
    <source>
    </source>
</evidence>
<evidence type="ECO:0000269" key="9">
    <source>
    </source>
</evidence>
<evidence type="ECO:0000269" key="10">
    <source>
    </source>
</evidence>
<evidence type="ECO:0000269" key="11">
    <source>
    </source>
</evidence>
<evidence type="ECO:0000269" key="12">
    <source>
    </source>
</evidence>
<evidence type="ECO:0000269" key="13">
    <source>
    </source>
</evidence>
<evidence type="ECO:0000269" key="14">
    <source>
    </source>
</evidence>
<evidence type="ECO:0000269" key="15">
    <source>
    </source>
</evidence>
<evidence type="ECO:0000269" key="16">
    <source>
    </source>
</evidence>
<evidence type="ECO:0000269" key="17">
    <source>
    </source>
</evidence>
<evidence type="ECO:0000269" key="18">
    <source>
    </source>
</evidence>
<evidence type="ECO:0000269" key="19">
    <source>
    </source>
</evidence>
<evidence type="ECO:0000269" key="20">
    <source>
    </source>
</evidence>
<evidence type="ECO:0000269" key="21">
    <source>
    </source>
</evidence>
<evidence type="ECO:0000269" key="22">
    <source>
    </source>
</evidence>
<evidence type="ECO:0000269" key="23">
    <source>
    </source>
</evidence>
<evidence type="ECO:0000269" key="24">
    <source>
    </source>
</evidence>
<evidence type="ECO:0000269" key="25">
    <source>
    </source>
</evidence>
<evidence type="ECO:0000269" key="26">
    <source>
    </source>
</evidence>
<evidence type="ECO:0000269" key="27">
    <source>
    </source>
</evidence>
<evidence type="ECO:0000269" key="28">
    <source>
    </source>
</evidence>
<evidence type="ECO:0000269" key="29">
    <source>
    </source>
</evidence>
<evidence type="ECO:0000269" key="30">
    <source>
    </source>
</evidence>
<evidence type="ECO:0000269" key="31">
    <source>
    </source>
</evidence>
<evidence type="ECO:0000269" key="32">
    <source>
    </source>
</evidence>
<evidence type="ECO:0000269" key="33">
    <source>
    </source>
</evidence>
<evidence type="ECO:0000269" key="34">
    <source>
    </source>
</evidence>
<evidence type="ECO:0000269" key="35">
    <source>
    </source>
</evidence>
<evidence type="ECO:0000269" key="36">
    <source>
    </source>
</evidence>
<evidence type="ECO:0000269" key="37">
    <source>
    </source>
</evidence>
<evidence type="ECO:0000269" key="38">
    <source>
    </source>
</evidence>
<evidence type="ECO:0000269" key="39">
    <source>
    </source>
</evidence>
<evidence type="ECO:0000269" key="40">
    <source>
    </source>
</evidence>
<evidence type="ECO:0000269" key="41">
    <source>
    </source>
</evidence>
<evidence type="ECO:0000269" key="42">
    <source>
    </source>
</evidence>
<evidence type="ECO:0000269" key="43">
    <source>
    </source>
</evidence>
<evidence type="ECO:0000269" key="44">
    <source>
    </source>
</evidence>
<evidence type="ECO:0000269" key="45">
    <source>
    </source>
</evidence>
<evidence type="ECO:0000269" key="46">
    <source>
    </source>
</evidence>
<evidence type="ECO:0000269" key="47">
    <source>
    </source>
</evidence>
<evidence type="ECO:0000269" key="48">
    <source>
    </source>
</evidence>
<evidence type="ECO:0000269" key="49">
    <source>
    </source>
</evidence>
<evidence type="ECO:0000269" key="50">
    <source>
    </source>
</evidence>
<evidence type="ECO:0000269" key="51">
    <source>
    </source>
</evidence>
<evidence type="ECO:0000269" key="52">
    <source>
    </source>
</evidence>
<evidence type="ECO:0000269" key="53">
    <source>
    </source>
</evidence>
<evidence type="ECO:0000269" key="54">
    <source>
    </source>
</evidence>
<evidence type="ECO:0000269" key="55">
    <source>
    </source>
</evidence>
<evidence type="ECO:0000269" key="56">
    <source>
    </source>
</evidence>
<evidence type="ECO:0000269" key="57">
    <source>
    </source>
</evidence>
<evidence type="ECO:0000269" key="58">
    <source>
    </source>
</evidence>
<evidence type="ECO:0000269" key="59">
    <source>
    </source>
</evidence>
<evidence type="ECO:0000269" key="60">
    <source>
    </source>
</evidence>
<evidence type="ECO:0000269" key="61">
    <source>
    </source>
</evidence>
<evidence type="ECO:0000269" key="62">
    <source>
    </source>
</evidence>
<evidence type="ECO:0000269" key="63">
    <source>
    </source>
</evidence>
<evidence type="ECO:0000269" key="64">
    <source>
    </source>
</evidence>
<evidence type="ECO:0000269" key="65">
    <source>
    </source>
</evidence>
<evidence type="ECO:0000269" key="66">
    <source>
    </source>
</evidence>
<evidence type="ECO:0000269" key="67">
    <source>
    </source>
</evidence>
<evidence type="ECO:0000269" key="68">
    <source>
    </source>
</evidence>
<evidence type="ECO:0000269" key="69">
    <source>
    </source>
</evidence>
<evidence type="ECO:0000269" key="70">
    <source>
    </source>
</evidence>
<evidence type="ECO:0000269" key="71">
    <source>
    </source>
</evidence>
<evidence type="ECO:0000269" key="72">
    <source ref="13"/>
</evidence>
<evidence type="ECO:0000303" key="73">
    <source>
    </source>
</evidence>
<evidence type="ECO:0000303" key="74">
    <source>
    </source>
</evidence>
<evidence type="ECO:0000303" key="75">
    <source>
    </source>
</evidence>
<evidence type="ECO:0000303" key="76">
    <source>
    </source>
</evidence>
<evidence type="ECO:0000303" key="77">
    <source>
    </source>
</evidence>
<evidence type="ECO:0000303" key="78">
    <source>
    </source>
</evidence>
<evidence type="ECO:0000303" key="79">
    <source>
    </source>
</evidence>
<evidence type="ECO:0000303" key="80">
    <source>
    </source>
</evidence>
<evidence type="ECO:0000303" key="81">
    <source>
    </source>
</evidence>
<evidence type="ECO:0000303" key="82">
    <source>
    </source>
</evidence>
<evidence type="ECO:0000303" key="83">
    <source>
    </source>
</evidence>
<evidence type="ECO:0000303" key="84">
    <source ref="12"/>
</evidence>
<evidence type="ECO:0000305" key="85"/>
<evidence type="ECO:0007829" key="86">
    <source>
        <dbReference type="PDB" id="2CR3"/>
    </source>
</evidence>
<evidence type="ECO:0007829" key="87">
    <source>
        <dbReference type="PDB" id="3GQI"/>
    </source>
</evidence>
<evidence type="ECO:0007829" key="88">
    <source>
        <dbReference type="PDB" id="3JS2"/>
    </source>
</evidence>
<evidence type="ECO:0007829" key="89">
    <source>
        <dbReference type="PDB" id="3KXX"/>
    </source>
</evidence>
<evidence type="ECO:0007829" key="90">
    <source>
        <dbReference type="PDB" id="3OJV"/>
    </source>
</evidence>
<evidence type="ECO:0007829" key="91">
    <source>
        <dbReference type="PDB" id="4RWL"/>
    </source>
</evidence>
<evidence type="ECO:0007829" key="92">
    <source>
        <dbReference type="PDB" id="4UWY"/>
    </source>
</evidence>
<evidence type="ECO:0007829" key="93">
    <source>
        <dbReference type="PDB" id="5A4C"/>
    </source>
</evidence>
<evidence type="ECO:0007829" key="94">
    <source>
        <dbReference type="PDB" id="5AM7"/>
    </source>
</evidence>
<evidence type="ECO:0007829" key="95">
    <source>
        <dbReference type="PDB" id="5EW8"/>
    </source>
</evidence>
<evidence type="ECO:0007829" key="96">
    <source>
        <dbReference type="PDB" id="5O49"/>
    </source>
</evidence>
<evidence type="ECO:0007829" key="97">
    <source>
        <dbReference type="PDB" id="5W21"/>
    </source>
</evidence>
<evidence type="ECO:0007829" key="98">
    <source>
        <dbReference type="PDB" id="5W59"/>
    </source>
</evidence>
<evidence type="ECO:0007829" key="99">
    <source>
        <dbReference type="PDB" id="7YSH"/>
    </source>
</evidence>
<evidence type="ECO:0007829" key="100">
    <source>
        <dbReference type="PDB" id="8JMZ"/>
    </source>
</evidence>
<keyword id="KW-0002">3D-structure</keyword>
<keyword id="KW-0025">Alternative splicing</keyword>
<keyword id="KW-0067">ATP-binding</keyword>
<keyword id="KW-1003">Cell membrane</keyword>
<keyword id="KW-0160">Chromosomal rearrangement</keyword>
<keyword id="KW-0989">Craniosynostosis</keyword>
<keyword id="KW-0963">Cytoplasm</keyword>
<keyword id="KW-0968">Cytoplasmic vesicle</keyword>
<keyword id="KW-0903">Direct protein sequencing</keyword>
<keyword id="KW-0225">Disease variant</keyword>
<keyword id="KW-1015">Disulfide bond</keyword>
<keyword id="KW-0242">Dwarfism</keyword>
<keyword id="KW-0325">Glycoprotein</keyword>
<keyword id="KW-0358">Heparin-binding</keyword>
<keyword id="KW-0370">Holoprosencephaly</keyword>
<keyword id="KW-1016">Hypogonadotropic hypogonadism</keyword>
<keyword id="KW-0393">Immunoglobulin domain</keyword>
<keyword id="KW-0991">Intellectual disability</keyword>
<keyword id="KW-0956">Kallmann syndrome</keyword>
<keyword id="KW-0418">Kinase</keyword>
<keyword id="KW-0472">Membrane</keyword>
<keyword id="KW-0547">Nucleotide-binding</keyword>
<keyword id="KW-0539">Nucleus</keyword>
<keyword id="KW-0597">Phosphoprotein</keyword>
<keyword id="KW-1267">Proteomics identification</keyword>
<keyword id="KW-0675">Receptor</keyword>
<keyword id="KW-1185">Reference proteome</keyword>
<keyword id="KW-0677">Repeat</keyword>
<keyword id="KW-0732">Signal</keyword>
<keyword id="KW-0804">Transcription</keyword>
<keyword id="KW-0805">Transcription regulation</keyword>
<keyword id="KW-0808">Transferase</keyword>
<keyword id="KW-0812">Transmembrane</keyword>
<keyword id="KW-1133">Transmembrane helix</keyword>
<keyword id="KW-0829">Tyrosine-protein kinase</keyword>
<keyword id="KW-0832">Ubl conjugation</keyword>
<dbReference type="EC" id="2.7.10.1" evidence="15 19 44 45 47 51 67"/>
<dbReference type="EMBL" id="M37722">
    <property type="protein sequence ID" value="AAA75007.1"/>
    <property type="molecule type" value="mRNA"/>
</dbReference>
<dbReference type="EMBL" id="X52833">
    <property type="protein sequence ID" value="CAA37015.1"/>
    <property type="molecule type" value="mRNA"/>
</dbReference>
<dbReference type="EMBL" id="M34185">
    <property type="protein sequence ID" value="AAA35836.1"/>
    <property type="molecule type" value="mRNA"/>
</dbReference>
<dbReference type="EMBL" id="M34186">
    <property type="protein sequence ID" value="AAA35837.1"/>
    <property type="molecule type" value="mRNA"/>
</dbReference>
<dbReference type="EMBL" id="M34187">
    <property type="protein sequence ID" value="AAA35838.1"/>
    <property type="molecule type" value="mRNA"/>
</dbReference>
<dbReference type="EMBL" id="M34188">
    <property type="protein sequence ID" value="AAA35839.1"/>
    <property type="molecule type" value="mRNA"/>
</dbReference>
<dbReference type="EMBL" id="X51803">
    <property type="protein sequence ID" value="CAA36101.1"/>
    <property type="molecule type" value="mRNA"/>
</dbReference>
<dbReference type="EMBL" id="M34641">
    <property type="protein sequence ID" value="AAA35835.1"/>
    <property type="molecule type" value="mRNA"/>
</dbReference>
<dbReference type="EMBL" id="M60485">
    <property type="protein sequence ID" value="AAA35840.1"/>
    <property type="molecule type" value="mRNA"/>
</dbReference>
<dbReference type="EMBL" id="X57118">
    <property type="protein sequence ID" value="CAA40400.1"/>
    <property type="molecule type" value="mRNA"/>
</dbReference>
<dbReference type="EMBL" id="X57119">
    <property type="protein sequence ID" value="CAA40401.1"/>
    <property type="molecule type" value="mRNA"/>
</dbReference>
<dbReference type="EMBL" id="X57120">
    <property type="protein sequence ID" value="CAA40402.1"/>
    <property type="molecule type" value="mRNA"/>
</dbReference>
<dbReference type="EMBL" id="X57121">
    <property type="protein sequence ID" value="CAA40403.1"/>
    <property type="molecule type" value="mRNA"/>
</dbReference>
<dbReference type="EMBL" id="X57122">
    <property type="protein sequence ID" value="CAA40404.1"/>
    <property type="molecule type" value="mRNA"/>
</dbReference>
<dbReference type="EMBL" id="M63887">
    <property type="protein sequence ID" value="AAA35958.1"/>
    <property type="molecule type" value="mRNA"/>
</dbReference>
<dbReference type="EMBL" id="M63888">
    <property type="protein sequence ID" value="AAA35959.1"/>
    <property type="molecule type" value="mRNA"/>
</dbReference>
<dbReference type="EMBL" id="M63889">
    <property type="protein sequence ID" value="AAA35960.1"/>
    <property type="molecule type" value="mRNA"/>
</dbReference>
<dbReference type="EMBL" id="X66945">
    <property type="protein sequence ID" value="CAA47375.1"/>
    <property type="molecule type" value="mRNA"/>
</dbReference>
<dbReference type="EMBL" id="FJ809917">
    <property type="protein sequence ID" value="ACO38646.1"/>
    <property type="molecule type" value="mRNA"/>
</dbReference>
<dbReference type="EMBL" id="AK291754">
    <property type="protein sequence ID" value="BAF84443.1"/>
    <property type="molecule type" value="mRNA"/>
</dbReference>
<dbReference type="EMBL" id="AK292470">
    <property type="protein sequence ID" value="BAF85159.1"/>
    <property type="molecule type" value="mRNA"/>
</dbReference>
<dbReference type="EMBL" id="AK309947">
    <property type="status" value="NOT_ANNOTATED_CDS"/>
    <property type="molecule type" value="mRNA"/>
</dbReference>
<dbReference type="EMBL" id="AB208919">
    <property type="protein sequence ID" value="BAD92156.1"/>
    <property type="status" value="ALT_INIT"/>
    <property type="molecule type" value="mRNA"/>
</dbReference>
<dbReference type="EMBL" id="AK222718">
    <property type="protein sequence ID" value="BAD96438.1"/>
    <property type="molecule type" value="mRNA"/>
</dbReference>
<dbReference type="EMBL" id="AY585209">
    <property type="protein sequence ID" value="AAS79322.1"/>
    <property type="molecule type" value="Genomic_DNA"/>
</dbReference>
<dbReference type="EMBL" id="AC087623">
    <property type="status" value="NOT_ANNOTATED_CDS"/>
    <property type="molecule type" value="Genomic_DNA"/>
</dbReference>
<dbReference type="EMBL" id="BC015035">
    <property type="protein sequence ID" value="AAH15035.1"/>
    <property type="molecule type" value="mRNA"/>
</dbReference>
<dbReference type="EMBL" id="BC018128">
    <property type="protein sequence ID" value="AAH18128.1"/>
    <property type="molecule type" value="mRNA"/>
</dbReference>
<dbReference type="EMBL" id="BC091494">
    <property type="protein sequence ID" value="AAH91494.1"/>
    <property type="molecule type" value="mRNA"/>
</dbReference>
<dbReference type="EMBL" id="Y00665">
    <property type="protein sequence ID" value="CAA68679.1"/>
    <property type="molecule type" value="mRNA"/>
</dbReference>
<dbReference type="CCDS" id="CCDS43730.1">
    <molecule id="P11362-3"/>
</dbReference>
<dbReference type="CCDS" id="CCDS43731.1">
    <molecule id="P11362-14"/>
</dbReference>
<dbReference type="CCDS" id="CCDS43732.1">
    <molecule id="P11362-7"/>
</dbReference>
<dbReference type="CCDS" id="CCDS55221.1">
    <molecule id="P11362-20"/>
</dbReference>
<dbReference type="CCDS" id="CCDS55222.1">
    <molecule id="P11362-2"/>
</dbReference>
<dbReference type="CCDS" id="CCDS6107.2">
    <molecule id="P11362-1"/>
</dbReference>
<dbReference type="PIR" id="A41266">
    <property type="entry name" value="A41266"/>
</dbReference>
<dbReference type="PIR" id="C36464">
    <property type="entry name" value="C36464"/>
</dbReference>
<dbReference type="PIR" id="C40862">
    <property type="entry name" value="C40862"/>
</dbReference>
<dbReference type="PIR" id="S11692">
    <property type="entry name" value="TVHUFG"/>
</dbReference>
<dbReference type="PIR" id="S19167">
    <property type="entry name" value="A40862"/>
</dbReference>
<dbReference type="RefSeq" id="NP_001167534.1">
    <molecule id="P11362-2"/>
    <property type="nucleotide sequence ID" value="NM_001174063.2"/>
</dbReference>
<dbReference type="RefSeq" id="NP_001167535.1">
    <molecule id="P11362-20"/>
    <property type="nucleotide sequence ID" value="NM_001174064.2"/>
</dbReference>
<dbReference type="RefSeq" id="NP_001167536.1">
    <molecule id="P11362-7"/>
    <property type="nucleotide sequence ID" value="NM_001174065.2"/>
</dbReference>
<dbReference type="RefSeq" id="NP_001167537.1">
    <molecule id="P11362-3"/>
    <property type="nucleotide sequence ID" value="NM_001174066.2"/>
</dbReference>
<dbReference type="RefSeq" id="NP_001167538.1">
    <molecule id="P11362-21"/>
    <property type="nucleotide sequence ID" value="NM_001174067.2"/>
</dbReference>
<dbReference type="RefSeq" id="NP_056934.2">
    <molecule id="P11362-7"/>
    <property type="nucleotide sequence ID" value="NM_015850.3"/>
</dbReference>
<dbReference type="RefSeq" id="NP_075593.1">
    <molecule id="P11362-3"/>
    <property type="nucleotide sequence ID" value="NM_023105.3"/>
</dbReference>
<dbReference type="RefSeq" id="NP_075594.1">
    <molecule id="P11362-14"/>
    <property type="nucleotide sequence ID" value="NM_023106.3"/>
</dbReference>
<dbReference type="RefSeq" id="NP_075598.2">
    <molecule id="P11362-1"/>
    <property type="nucleotide sequence ID" value="NM_023110.3"/>
</dbReference>
<dbReference type="PDB" id="1AGW">
    <property type="method" value="X-ray"/>
    <property type="resolution" value="2.40 A"/>
    <property type="chains" value="A/B=456-765"/>
</dbReference>
<dbReference type="PDB" id="1CVS">
    <property type="method" value="X-ray"/>
    <property type="resolution" value="2.80 A"/>
    <property type="chains" value="C/D=141-365"/>
</dbReference>
<dbReference type="PDB" id="1EVT">
    <property type="method" value="X-ray"/>
    <property type="resolution" value="2.80 A"/>
    <property type="chains" value="C/D=141-365"/>
</dbReference>
<dbReference type="PDB" id="1FGI">
    <property type="method" value="X-ray"/>
    <property type="resolution" value="2.50 A"/>
    <property type="chains" value="A/B=456-765"/>
</dbReference>
<dbReference type="PDB" id="1FGK">
    <property type="method" value="X-ray"/>
    <property type="resolution" value="2.00 A"/>
    <property type="chains" value="A/B=456-765"/>
</dbReference>
<dbReference type="PDB" id="1FQ9">
    <property type="method" value="X-ray"/>
    <property type="resolution" value="3.00 A"/>
    <property type="chains" value="C/D=141-365"/>
</dbReference>
<dbReference type="PDB" id="1XR0">
    <property type="method" value="NMR"/>
    <property type="chains" value="A=409-430"/>
</dbReference>
<dbReference type="PDB" id="2CR3">
    <property type="method" value="NMR"/>
    <property type="chains" value="A=38-123"/>
</dbReference>
<dbReference type="PDB" id="2FGI">
    <property type="method" value="X-ray"/>
    <property type="resolution" value="2.50 A"/>
    <property type="chains" value="A/B=456-765"/>
</dbReference>
<dbReference type="PDB" id="3C4F">
    <property type="method" value="X-ray"/>
    <property type="resolution" value="2.07 A"/>
    <property type="chains" value="A/B=464-765"/>
</dbReference>
<dbReference type="PDB" id="3DPK">
    <property type="method" value="X-ray"/>
    <property type="resolution" value="1.95 A"/>
    <property type="chains" value="A=577-615"/>
</dbReference>
<dbReference type="PDB" id="3GQI">
    <property type="method" value="X-ray"/>
    <property type="resolution" value="2.50 A"/>
    <property type="chains" value="A=458-774"/>
</dbReference>
<dbReference type="PDB" id="3GQL">
    <property type="method" value="X-ray"/>
    <property type="resolution" value="2.80 A"/>
    <property type="chains" value="A/B/C=458-774"/>
</dbReference>
<dbReference type="PDB" id="3JS2">
    <property type="method" value="X-ray"/>
    <property type="resolution" value="2.20 A"/>
    <property type="chains" value="A/B=458-765"/>
</dbReference>
<dbReference type="PDB" id="3KRJ">
    <property type="method" value="X-ray"/>
    <property type="resolution" value="2.10 A"/>
    <property type="chains" value="A=577-597"/>
</dbReference>
<dbReference type="PDB" id="3KRL">
    <property type="method" value="X-ray"/>
    <property type="resolution" value="2.40 A"/>
    <property type="chains" value="A=577-597"/>
</dbReference>
<dbReference type="PDB" id="3KXX">
    <property type="method" value="X-ray"/>
    <property type="resolution" value="3.20 A"/>
    <property type="chains" value="A/B/C/D=458-765"/>
</dbReference>
<dbReference type="PDB" id="3KY2">
    <property type="method" value="X-ray"/>
    <property type="resolution" value="2.70 A"/>
    <property type="chains" value="A/B=458-765"/>
</dbReference>
<dbReference type="PDB" id="3OJV">
    <property type="method" value="X-ray"/>
    <property type="resolution" value="2.60 A"/>
    <property type="chains" value="C/D=142-365"/>
</dbReference>
<dbReference type="PDB" id="3RHX">
    <property type="method" value="X-ray"/>
    <property type="resolution" value="2.01 A"/>
    <property type="chains" value="A/B=461-765"/>
</dbReference>
<dbReference type="PDB" id="3TT0">
    <property type="method" value="X-ray"/>
    <property type="resolution" value="2.80 A"/>
    <property type="chains" value="A/B=456-765"/>
</dbReference>
<dbReference type="PDB" id="4F63">
    <property type="method" value="X-ray"/>
    <property type="resolution" value="2.55 A"/>
    <property type="chains" value="A/B=458-765"/>
</dbReference>
<dbReference type="PDB" id="4F64">
    <property type="method" value="X-ray"/>
    <property type="resolution" value="2.05 A"/>
    <property type="chains" value="A/B=458-765"/>
</dbReference>
<dbReference type="PDB" id="4F65">
    <property type="method" value="X-ray"/>
    <property type="resolution" value="2.26 A"/>
    <property type="chains" value="A/B=458-765"/>
</dbReference>
<dbReference type="PDB" id="4NK9">
    <property type="method" value="X-ray"/>
    <property type="resolution" value="2.57 A"/>
    <property type="chains" value="A/B=458-765"/>
</dbReference>
<dbReference type="PDB" id="4NKA">
    <property type="method" value="X-ray"/>
    <property type="resolution" value="2.19 A"/>
    <property type="chains" value="A/B=458-765"/>
</dbReference>
<dbReference type="PDB" id="4NKS">
    <property type="method" value="X-ray"/>
    <property type="resolution" value="2.50 A"/>
    <property type="chains" value="A/B=458-765"/>
</dbReference>
<dbReference type="PDB" id="4RWI">
    <property type="method" value="X-ray"/>
    <property type="resolution" value="2.29 A"/>
    <property type="chains" value="A/B=458-765"/>
</dbReference>
<dbReference type="PDB" id="4RWJ">
    <property type="method" value="X-ray"/>
    <property type="resolution" value="2.49 A"/>
    <property type="chains" value="A/B=458-765"/>
</dbReference>
<dbReference type="PDB" id="4RWK">
    <property type="method" value="X-ray"/>
    <property type="resolution" value="2.98 A"/>
    <property type="chains" value="A/B=458-765"/>
</dbReference>
<dbReference type="PDB" id="4RWL">
    <property type="method" value="X-ray"/>
    <property type="resolution" value="2.19 A"/>
    <property type="chains" value="A/B=458-765"/>
</dbReference>
<dbReference type="PDB" id="4UWB">
    <property type="method" value="X-ray"/>
    <property type="resolution" value="2.31 A"/>
    <property type="chains" value="A/B=458-765"/>
</dbReference>
<dbReference type="PDB" id="4UWC">
    <property type="method" value="X-ray"/>
    <property type="resolution" value="1.96 A"/>
    <property type="chains" value="A/B=458-765"/>
</dbReference>
<dbReference type="PDB" id="4UWY">
    <property type="method" value="X-ray"/>
    <property type="resolution" value="2.31 A"/>
    <property type="chains" value="A/B=458-765"/>
</dbReference>
<dbReference type="PDB" id="4V01">
    <property type="method" value="X-ray"/>
    <property type="resolution" value="2.33 A"/>
    <property type="chains" value="A/B=458-765"/>
</dbReference>
<dbReference type="PDB" id="4V04">
    <property type="method" value="X-ray"/>
    <property type="resolution" value="2.12 A"/>
    <property type="chains" value="A/B=458-765"/>
</dbReference>
<dbReference type="PDB" id="4V05">
    <property type="method" value="X-ray"/>
    <property type="resolution" value="2.57 A"/>
    <property type="chains" value="A/B=458-765"/>
</dbReference>
<dbReference type="PDB" id="4WUN">
    <property type="method" value="X-ray"/>
    <property type="resolution" value="1.65 A"/>
    <property type="chains" value="A/B=459-765"/>
</dbReference>
<dbReference type="PDB" id="4ZSA">
    <property type="method" value="X-ray"/>
    <property type="resolution" value="2.00 A"/>
    <property type="chains" value="A/B=458-765"/>
</dbReference>
<dbReference type="PDB" id="5A46">
    <property type="method" value="X-ray"/>
    <property type="resolution" value="2.63 A"/>
    <property type="chains" value="A/B=437-822"/>
</dbReference>
<dbReference type="PDB" id="5A4C">
    <property type="method" value="X-ray"/>
    <property type="resolution" value="2.09 A"/>
    <property type="chains" value="A/B=461-765"/>
</dbReference>
<dbReference type="PDB" id="5AM6">
    <property type="method" value="X-ray"/>
    <property type="resolution" value="1.96 A"/>
    <property type="chains" value="A/B=458-765"/>
</dbReference>
<dbReference type="PDB" id="5AM7">
    <property type="method" value="X-ray"/>
    <property type="resolution" value="1.96 A"/>
    <property type="chains" value="A/B=458-765"/>
</dbReference>
<dbReference type="PDB" id="5B7V">
    <property type="method" value="X-ray"/>
    <property type="resolution" value="2.15 A"/>
    <property type="chains" value="A/B=456-765"/>
</dbReference>
<dbReference type="PDB" id="5EW8">
    <property type="method" value="X-ray"/>
    <property type="resolution" value="1.63 A"/>
    <property type="chains" value="A/B=458-765"/>
</dbReference>
<dbReference type="PDB" id="5FLF">
    <property type="method" value="X-ray"/>
    <property type="resolution" value="2.58 A"/>
    <property type="chains" value="A/B/C/D/E=458-765"/>
</dbReference>
<dbReference type="PDB" id="5O49">
    <property type="method" value="X-ray"/>
    <property type="resolution" value="1.91 A"/>
    <property type="chains" value="A/B=458-765"/>
</dbReference>
<dbReference type="PDB" id="5O4A">
    <property type="method" value="X-ray"/>
    <property type="resolution" value="2.01 A"/>
    <property type="chains" value="A/B=458-765"/>
</dbReference>
<dbReference type="PDB" id="5UQ0">
    <property type="method" value="X-ray"/>
    <property type="resolution" value="2.30 A"/>
    <property type="chains" value="A/B=459-765"/>
</dbReference>
<dbReference type="PDB" id="5UR1">
    <property type="method" value="X-ray"/>
    <property type="resolution" value="2.20 A"/>
    <property type="chains" value="A/B=459-765"/>
</dbReference>
<dbReference type="PDB" id="5VND">
    <property type="method" value="X-ray"/>
    <property type="resolution" value="2.20 A"/>
    <property type="chains" value="A/B=458-765"/>
</dbReference>
<dbReference type="PDB" id="5W21">
    <property type="method" value="X-ray"/>
    <property type="resolution" value="3.00 A"/>
    <property type="chains" value="C=142-365"/>
</dbReference>
<dbReference type="PDB" id="5W59">
    <property type="method" value="X-ray"/>
    <property type="resolution" value="2.50 A"/>
    <property type="chains" value="B=142-365"/>
</dbReference>
<dbReference type="PDB" id="5Z0S">
    <property type="method" value="X-ray"/>
    <property type="resolution" value="2.45 A"/>
    <property type="chains" value="A/B=458-765"/>
</dbReference>
<dbReference type="PDB" id="5ZV2">
    <property type="method" value="X-ray"/>
    <property type="resolution" value="2.86 A"/>
    <property type="chains" value="A/B=461-764"/>
</dbReference>
<dbReference type="PDB" id="6C18">
    <property type="method" value="X-ray"/>
    <property type="resolution" value="2.30 A"/>
    <property type="chains" value="A/B=459-765"/>
</dbReference>
<dbReference type="PDB" id="6C19">
    <property type="method" value="X-ray"/>
    <property type="resolution" value="2.12 A"/>
    <property type="chains" value="A/B=459-765"/>
</dbReference>
<dbReference type="PDB" id="6C1B">
    <property type="method" value="X-ray"/>
    <property type="resolution" value="2.00 A"/>
    <property type="chains" value="A/B=459-765"/>
</dbReference>
<dbReference type="PDB" id="6C1C">
    <property type="method" value="X-ray"/>
    <property type="resolution" value="2.15 A"/>
    <property type="chains" value="A/B=459-765"/>
</dbReference>
<dbReference type="PDB" id="6C1O">
    <property type="method" value="X-ray"/>
    <property type="resolution" value="2.29 A"/>
    <property type="chains" value="A/B=459-765"/>
</dbReference>
<dbReference type="PDB" id="6ITJ">
    <property type="method" value="X-ray"/>
    <property type="resolution" value="1.99 A"/>
    <property type="chains" value="A/B=458-765"/>
</dbReference>
<dbReference type="PDB" id="6MZQ">
    <property type="method" value="X-ray"/>
    <property type="resolution" value="2.00 A"/>
    <property type="chains" value="A/B=459-765"/>
</dbReference>
<dbReference type="PDB" id="6MZW">
    <property type="method" value="X-ray"/>
    <property type="resolution" value="2.20 A"/>
    <property type="chains" value="A/B=459-765"/>
</dbReference>
<dbReference type="PDB" id="6NVL">
    <property type="method" value="X-ray"/>
    <property type="resolution" value="2.70 A"/>
    <property type="chains" value="A/B/C/D=458-765"/>
</dbReference>
<dbReference type="PDB" id="6P68">
    <property type="method" value="X-ray"/>
    <property type="resolution" value="2.90 A"/>
    <property type="chains" value="A/B/C=458-765"/>
</dbReference>
<dbReference type="PDB" id="6P69">
    <property type="method" value="X-ray"/>
    <property type="resolution" value="2.20 A"/>
    <property type="chains" value="A/B=458-765"/>
</dbReference>
<dbReference type="PDB" id="7OZB">
    <property type="method" value="X-ray"/>
    <property type="resolution" value="1.71 A"/>
    <property type="chains" value="AAA/BBB=458-765"/>
</dbReference>
<dbReference type="PDB" id="7OZD">
    <property type="method" value="X-ray"/>
    <property type="resolution" value="1.82 A"/>
    <property type="chains" value="AAA/BBB=458-765"/>
</dbReference>
<dbReference type="PDB" id="7OZF">
    <property type="method" value="X-ray"/>
    <property type="resolution" value="1.82 A"/>
    <property type="chains" value="AAA/BBB=458-765"/>
</dbReference>
<dbReference type="PDB" id="7WCL">
    <property type="method" value="X-ray"/>
    <property type="resolution" value="2.50 A"/>
    <property type="chains" value="A/B=458-765"/>
</dbReference>
<dbReference type="PDB" id="7YSH">
    <property type="method" value="EM"/>
    <property type="resolution" value="2.74 A"/>
    <property type="chains" value="D/E=142-366"/>
</dbReference>
<dbReference type="PDB" id="8JMZ">
    <property type="method" value="X-ray"/>
    <property type="resolution" value="1.99 A"/>
    <property type="chains" value="A/B=458-765"/>
</dbReference>
<dbReference type="PDB" id="8JQI">
    <property type="method" value="EM"/>
    <property type="resolution" value="4.10 A"/>
    <property type="chains" value="B=1-822"/>
</dbReference>
<dbReference type="PDB" id="8XLO">
    <property type="method" value="X-ray"/>
    <property type="resolution" value="2.36 A"/>
    <property type="chains" value="A/B=458-765"/>
</dbReference>
<dbReference type="PDB" id="8XZ7">
    <property type="method" value="X-ray"/>
    <property type="resolution" value="1.75 A"/>
    <property type="chains" value="A/B=458-765"/>
</dbReference>
<dbReference type="PDB" id="8Y22">
    <property type="method" value="X-ray"/>
    <property type="resolution" value="2.79 A"/>
    <property type="chains" value="A/B=458-765"/>
</dbReference>
<dbReference type="PDB" id="8YKI">
    <property type="method" value="X-ray"/>
    <property type="resolution" value="2.79 A"/>
    <property type="chains" value="A/B=461-774"/>
</dbReference>
<dbReference type="PDB" id="9CD5">
    <property type="method" value="X-ray"/>
    <property type="resolution" value="2.94 A"/>
    <property type="chains" value="A/B=458-765"/>
</dbReference>
<dbReference type="PDBsum" id="1AGW"/>
<dbReference type="PDBsum" id="1CVS"/>
<dbReference type="PDBsum" id="1EVT"/>
<dbReference type="PDBsum" id="1FGI"/>
<dbReference type="PDBsum" id="1FGK"/>
<dbReference type="PDBsum" id="1FQ9"/>
<dbReference type="PDBsum" id="1XR0"/>
<dbReference type="PDBsum" id="2CR3"/>
<dbReference type="PDBsum" id="2FGI"/>
<dbReference type="PDBsum" id="3C4F"/>
<dbReference type="PDBsum" id="3DPK"/>
<dbReference type="PDBsum" id="3GQI"/>
<dbReference type="PDBsum" id="3GQL"/>
<dbReference type="PDBsum" id="3JS2"/>
<dbReference type="PDBsum" id="3KRJ"/>
<dbReference type="PDBsum" id="3KRL"/>
<dbReference type="PDBsum" id="3KXX"/>
<dbReference type="PDBsum" id="3KY2"/>
<dbReference type="PDBsum" id="3OJV"/>
<dbReference type="PDBsum" id="3RHX"/>
<dbReference type="PDBsum" id="3TT0"/>
<dbReference type="PDBsum" id="4F63"/>
<dbReference type="PDBsum" id="4F64"/>
<dbReference type="PDBsum" id="4F65"/>
<dbReference type="PDBsum" id="4NK9"/>
<dbReference type="PDBsum" id="4NKA"/>
<dbReference type="PDBsum" id="4NKS"/>
<dbReference type="PDBsum" id="4RWI"/>
<dbReference type="PDBsum" id="4RWJ"/>
<dbReference type="PDBsum" id="4RWK"/>
<dbReference type="PDBsum" id="4RWL"/>
<dbReference type="PDBsum" id="4UWB"/>
<dbReference type="PDBsum" id="4UWC"/>
<dbReference type="PDBsum" id="4UWY"/>
<dbReference type="PDBsum" id="4V01"/>
<dbReference type="PDBsum" id="4V04"/>
<dbReference type="PDBsum" id="4V05"/>
<dbReference type="PDBsum" id="4WUN"/>
<dbReference type="PDBsum" id="4ZSA"/>
<dbReference type="PDBsum" id="5A46"/>
<dbReference type="PDBsum" id="5A4C"/>
<dbReference type="PDBsum" id="5AM6"/>
<dbReference type="PDBsum" id="5AM7"/>
<dbReference type="PDBsum" id="5B7V"/>
<dbReference type="PDBsum" id="5EW8"/>
<dbReference type="PDBsum" id="5FLF"/>
<dbReference type="PDBsum" id="5O49"/>
<dbReference type="PDBsum" id="5O4A"/>
<dbReference type="PDBsum" id="5UQ0"/>
<dbReference type="PDBsum" id="5UR1"/>
<dbReference type="PDBsum" id="5VND"/>
<dbReference type="PDBsum" id="5W21"/>
<dbReference type="PDBsum" id="5W59"/>
<dbReference type="PDBsum" id="5Z0S"/>
<dbReference type="PDBsum" id="5ZV2"/>
<dbReference type="PDBsum" id="6C18"/>
<dbReference type="PDBsum" id="6C19"/>
<dbReference type="PDBsum" id="6C1B"/>
<dbReference type="PDBsum" id="6C1C"/>
<dbReference type="PDBsum" id="6C1O"/>
<dbReference type="PDBsum" id="6ITJ"/>
<dbReference type="PDBsum" id="6MZQ"/>
<dbReference type="PDBsum" id="6MZW"/>
<dbReference type="PDBsum" id="6NVL"/>
<dbReference type="PDBsum" id="6P68"/>
<dbReference type="PDBsum" id="6P69"/>
<dbReference type="PDBsum" id="7OZB"/>
<dbReference type="PDBsum" id="7OZD"/>
<dbReference type="PDBsum" id="7OZF"/>
<dbReference type="PDBsum" id="7WCL"/>
<dbReference type="PDBsum" id="7YSH"/>
<dbReference type="PDBsum" id="8JMZ"/>
<dbReference type="PDBsum" id="8JQI"/>
<dbReference type="PDBsum" id="8XLO"/>
<dbReference type="PDBsum" id="8XZ7"/>
<dbReference type="PDBsum" id="8Y22"/>
<dbReference type="PDBsum" id="8YKI"/>
<dbReference type="PDBsum" id="9CD5"/>
<dbReference type="BMRB" id="P11362"/>
<dbReference type="EMDB" id="EMD-36573"/>
<dbReference type="SMR" id="P11362"/>
<dbReference type="BioGRID" id="108551">
    <property type="interactions" value="678"/>
</dbReference>
<dbReference type="CORUM" id="P11362"/>
<dbReference type="DIP" id="DIP-4019N"/>
<dbReference type="FunCoup" id="P11362">
    <property type="interactions" value="1666"/>
</dbReference>
<dbReference type="IntAct" id="P11362">
    <property type="interactions" value="548"/>
</dbReference>
<dbReference type="MINT" id="P11362"/>
<dbReference type="STRING" id="9606.ENSP00000393312"/>
<dbReference type="BindingDB" id="P11362"/>
<dbReference type="ChEMBL" id="CHEMBL3650"/>
<dbReference type="DrugBank" id="DB07840">
    <property type="generic name" value="(E)-[4-(3,5-Difluorophenyl)-3H-pyrrolo[2,3-b]pyridin-3-ylidene](3-methoxyphenyl)methanol"/>
</dbReference>
<dbReference type="DrugBank" id="DB07525">
    <property type="generic name" value="3-(3-methoxybenzyl)-1H-pyrrolo[2,3-b]pyridine"/>
</dbReference>
<dbReference type="DrugBank" id="DB08577">
    <property type="generic name" value="3-[(3-(2-CARBOXYETHYL)-4-METHYLPYRROL-2-YL)METHYLENE]-2-INDOLINONE"/>
</dbReference>
<dbReference type="DrugBank" id="DB02058">
    <property type="generic name" value="3-[4-(1-formylpiperazin-4-yl)-benzylidenyl]-2-indolinone"/>
</dbReference>
<dbReference type="DrugBank" id="DB12247">
    <property type="generic name" value="AZD-4547"/>
</dbReference>
<dbReference type="DrugBank" id="DB12903">
    <property type="generic name" value="DEBIO-1347"/>
</dbReference>
<dbReference type="DrugBank" id="DB14889">
    <property type="generic name" value="Derazantinib"/>
</dbReference>
<dbReference type="DrugBank" id="DB12147">
    <property type="generic name" value="Erdafitinib"/>
</dbReference>
<dbReference type="DrugBank" id="DB12010">
    <property type="generic name" value="Fostamatinib"/>
</dbReference>
<dbReference type="DrugBank" id="DB15149">
    <property type="generic name" value="Futibatinib"/>
</dbReference>
<dbReference type="DrugBank" id="DB01109">
    <property type="generic name" value="Heparin"/>
</dbReference>
<dbReference type="DrugBank" id="DB11886">
    <property type="generic name" value="Infigratinib"/>
</dbReference>
<dbReference type="DrugBank" id="DB09078">
    <property type="generic name" value="Lenvatinib"/>
</dbReference>
<dbReference type="DrugBank" id="DB11845">
    <property type="generic name" value="Lucitanib"/>
</dbReference>
<dbReference type="DrugBank" id="DB09079">
    <property type="generic name" value="Nintedanib"/>
</dbReference>
<dbReference type="DrugBank" id="DB12072">
    <property type="generic name" value="Orantinib"/>
</dbReference>
<dbReference type="DrugBank" id="DB00039">
    <property type="generic name" value="Palifermin"/>
</dbReference>
<dbReference type="DrugBank" id="DB08339">
    <property type="generic name" value="PD-166326"/>
</dbReference>
<dbReference type="DrugBank" id="DB17041">
    <property type="generic name" value="PD-173952"/>
</dbReference>
<dbReference type="DrugBank" id="DB02567">
    <property type="generic name" value="PD173955"/>
</dbReference>
<dbReference type="DrugBank" id="DB15102">
    <property type="generic name" value="Pemigatinib"/>
</dbReference>
<dbReference type="DrugBank" id="DB08901">
    <property type="generic name" value="Ponatinib"/>
</dbReference>
<dbReference type="DrugBank" id="DB15822">
    <property type="generic name" value="Pralsetinib"/>
</dbReference>
<dbReference type="DrugBank" id="DB08896">
    <property type="generic name" value="Regorafenib"/>
</dbReference>
<dbReference type="DrugBank" id="DB15685">
    <property type="generic name" value="Selpercatinib"/>
</dbReference>
<dbReference type="DrugBank" id="DB06436">
    <property type="generic name" value="Semaxanib"/>
</dbReference>
<dbReference type="DrugBank" id="DB00398">
    <property type="generic name" value="Sorafenib"/>
</dbReference>
<dbReference type="DrugBank" id="DB15106">
    <property type="generic name" value="Surufatinib"/>
</dbReference>
<dbReference type="DrugBank" id="DB11800">
    <property type="generic name" value="Tivozanib"/>
</dbReference>
<dbReference type="DrugBank" id="DB05014">
    <property type="generic name" value="XL999"/>
</dbReference>
<dbReference type="DrugCentral" id="P11362"/>
<dbReference type="GuidetoPHARMACOLOGY" id="1808"/>
<dbReference type="TCDB" id="8.A.23.1.7">
    <property type="family name" value="the basigin (basigin) family"/>
</dbReference>
<dbReference type="CarbonylDB" id="P11362"/>
<dbReference type="GlyConnect" id="1239">
    <property type="glycosylation" value="8 N-Linked glycans (4 sites)"/>
</dbReference>
<dbReference type="GlyCosmos" id="P11362">
    <property type="glycosylation" value="10 sites, 10 glycans"/>
</dbReference>
<dbReference type="GlyGen" id="P11362">
    <property type="glycosylation" value="11 sites, 14 N-linked glycans (6 sites), 1 O-linked glycan (1 site)"/>
</dbReference>
<dbReference type="iPTMnet" id="P11362"/>
<dbReference type="PhosphoSitePlus" id="P11362"/>
<dbReference type="SwissPalm" id="P11362"/>
<dbReference type="BioMuta" id="FGFR1"/>
<dbReference type="DMDM" id="120046"/>
<dbReference type="CPTAC" id="CPTAC-1773"/>
<dbReference type="CPTAC" id="CPTAC-1780"/>
<dbReference type="CPTAC" id="CPTAC-2818"/>
<dbReference type="jPOST" id="P11362"/>
<dbReference type="MassIVE" id="P11362"/>
<dbReference type="PaxDb" id="9606-ENSP00000393312"/>
<dbReference type="PeptideAtlas" id="P11362"/>
<dbReference type="ProteomicsDB" id="52745">
    <molecule id="P11362-1"/>
</dbReference>
<dbReference type="ProteomicsDB" id="52746">
    <molecule id="P11362-10"/>
</dbReference>
<dbReference type="ProteomicsDB" id="52747">
    <molecule id="P11362-11"/>
</dbReference>
<dbReference type="ProteomicsDB" id="52748">
    <molecule id="P11362-12"/>
</dbReference>
<dbReference type="ProteomicsDB" id="52749">
    <molecule id="P11362-13"/>
</dbReference>
<dbReference type="ProteomicsDB" id="52750">
    <molecule id="P11362-14"/>
</dbReference>
<dbReference type="ProteomicsDB" id="52751">
    <molecule id="P11362-15"/>
</dbReference>
<dbReference type="ProteomicsDB" id="52752">
    <molecule id="P11362-16"/>
</dbReference>
<dbReference type="ProteomicsDB" id="52754">
    <molecule id="P11362-18"/>
</dbReference>
<dbReference type="ProteomicsDB" id="52755">
    <molecule id="P11362-19"/>
</dbReference>
<dbReference type="ProteomicsDB" id="52756">
    <molecule id="P11362-2"/>
</dbReference>
<dbReference type="ProteomicsDB" id="52757">
    <molecule id="P11362-20"/>
</dbReference>
<dbReference type="ProteomicsDB" id="52758">
    <molecule id="P11362-21"/>
</dbReference>
<dbReference type="ProteomicsDB" id="52759">
    <molecule id="P11362-3"/>
</dbReference>
<dbReference type="ProteomicsDB" id="52760">
    <molecule id="P11362-4"/>
</dbReference>
<dbReference type="ProteomicsDB" id="52761">
    <molecule id="P11362-5"/>
</dbReference>
<dbReference type="ProteomicsDB" id="52762">
    <molecule id="P11362-6"/>
</dbReference>
<dbReference type="ProteomicsDB" id="52763">
    <molecule id="P11362-7"/>
</dbReference>
<dbReference type="ProteomicsDB" id="52764">
    <molecule id="P11362-8"/>
</dbReference>
<dbReference type="ProteomicsDB" id="52765">
    <molecule id="P11362-9"/>
</dbReference>
<dbReference type="ABCD" id="P11362">
    <property type="antibodies" value="10 sequenced antibodies"/>
</dbReference>
<dbReference type="Antibodypedia" id="11015">
    <property type="antibodies" value="2561 antibodies from 48 providers"/>
</dbReference>
<dbReference type="DNASU" id="2260"/>
<dbReference type="Ensembl" id="ENST00000326324.10">
    <molecule id="P11362-14"/>
    <property type="protein sequence ID" value="ENSP00000327229.6"/>
    <property type="gene ID" value="ENSG00000077782.23"/>
</dbReference>
<dbReference type="Ensembl" id="ENST00000335922.9">
    <molecule id="P11362-20"/>
    <property type="protein sequence ID" value="ENSP00000337247.5"/>
    <property type="gene ID" value="ENSG00000077782.23"/>
</dbReference>
<dbReference type="Ensembl" id="ENST00000356207.9">
    <molecule id="P11362-3"/>
    <property type="protein sequence ID" value="ENSP00000348537.5"/>
    <property type="gene ID" value="ENSG00000077782.23"/>
</dbReference>
<dbReference type="Ensembl" id="ENST00000397091.9">
    <molecule id="P11362-7"/>
    <property type="protein sequence ID" value="ENSP00000380280.5"/>
    <property type="gene ID" value="ENSG00000077782.23"/>
</dbReference>
<dbReference type="Ensembl" id="ENST00000397108.8">
    <molecule id="P11362-7"/>
    <property type="protein sequence ID" value="ENSP00000380297.4"/>
    <property type="gene ID" value="ENSG00000077782.23"/>
</dbReference>
<dbReference type="Ensembl" id="ENST00000397113.6">
    <molecule id="P11362-7"/>
    <property type="protein sequence ID" value="ENSP00000380302.2"/>
    <property type="gene ID" value="ENSG00000077782.23"/>
</dbReference>
<dbReference type="Ensembl" id="ENST00000447712.7">
    <molecule id="P11362-1"/>
    <property type="protein sequence ID" value="ENSP00000400162.2"/>
    <property type="gene ID" value="ENSG00000077782.23"/>
</dbReference>
<dbReference type="Ensembl" id="ENST00000484370.5">
    <molecule id="P11362-15"/>
    <property type="protein sequence ID" value="ENSP00000433163.1"/>
    <property type="gene ID" value="ENSG00000077782.23"/>
</dbReference>
<dbReference type="Ensembl" id="ENST00000532791.5">
    <molecule id="P11362-2"/>
    <property type="protein sequence ID" value="ENSP00000432972.1"/>
    <property type="gene ID" value="ENSG00000077782.23"/>
</dbReference>
<dbReference type="GeneID" id="2260"/>
<dbReference type="KEGG" id="hsa:2260"/>
<dbReference type="MANE-Select" id="ENST00000447712.7">
    <property type="protein sequence ID" value="ENSP00000400162.2"/>
    <property type="RefSeq nucleotide sequence ID" value="NM_023110.3"/>
    <property type="RefSeq protein sequence ID" value="NP_075598.2"/>
</dbReference>
<dbReference type="UCSC" id="uc003xlp.4">
    <molecule id="P11362-1"/>
    <property type="organism name" value="human"/>
</dbReference>
<dbReference type="AGR" id="HGNC:3688"/>
<dbReference type="CTD" id="2260"/>
<dbReference type="DisGeNET" id="2260"/>
<dbReference type="GeneCards" id="FGFR1"/>
<dbReference type="GeneReviews" id="FGFR1"/>
<dbReference type="HGNC" id="HGNC:3688">
    <property type="gene designation" value="FGFR1"/>
</dbReference>
<dbReference type="HPA" id="ENSG00000077782">
    <property type="expression patterns" value="Low tissue specificity"/>
</dbReference>
<dbReference type="MalaCards" id="FGFR1"/>
<dbReference type="MIM" id="101600">
    <property type="type" value="phenotype"/>
</dbReference>
<dbReference type="MIM" id="123150">
    <property type="type" value="phenotype"/>
</dbReference>
<dbReference type="MIM" id="136350">
    <property type="type" value="gene"/>
</dbReference>
<dbReference type="MIM" id="147950">
    <property type="type" value="phenotype"/>
</dbReference>
<dbReference type="MIM" id="166250">
    <property type="type" value="phenotype"/>
</dbReference>
<dbReference type="MIM" id="190440">
    <property type="type" value="phenotype"/>
</dbReference>
<dbReference type="MIM" id="613001">
    <property type="type" value="phenotype"/>
</dbReference>
<dbReference type="MIM" id="615465">
    <property type="type" value="phenotype"/>
</dbReference>
<dbReference type="neXtProt" id="NX_P11362"/>
<dbReference type="OpenTargets" id="ENSG00000077782"/>
<dbReference type="Orphanet" id="2396">
    <property type="disease" value="Encephalocraniocutaneous lipomatosis"/>
</dbReference>
<dbReference type="Orphanet" id="251579">
    <property type="disease" value="Giant cell glioblastoma"/>
</dbReference>
<dbReference type="Orphanet" id="251576">
    <property type="disease" value="Gliosarcoma"/>
</dbReference>
<dbReference type="Orphanet" id="2117">
    <property type="disease" value="Hartsfield syndrome"/>
</dbReference>
<dbReference type="Orphanet" id="478">
    <property type="disease" value="Kallmann syndrome"/>
</dbReference>
<dbReference type="Orphanet" id="93924">
    <property type="disease" value="Lobar holoprosencephaly"/>
</dbReference>
<dbReference type="Orphanet" id="280200">
    <property type="disease" value="Microform holoprosencephaly"/>
</dbReference>
<dbReference type="Orphanet" id="168953">
    <property type="disease" value="Myeloid/lymphoid neoplasm associated with FGFR1 rearrangement"/>
</dbReference>
<dbReference type="Orphanet" id="3366">
    <property type="disease" value="Non-syndromic metopic craniosynostosis"/>
</dbReference>
<dbReference type="Orphanet" id="432">
    <property type="disease" value="Normosmic congenital hypogonadotropic hypogonadism"/>
</dbReference>
<dbReference type="Orphanet" id="99798">
    <property type="disease" value="Oligodontia"/>
</dbReference>
<dbReference type="Orphanet" id="2645">
    <property type="disease" value="Osteoglosphonic dysplasia"/>
</dbReference>
<dbReference type="Orphanet" id="93258">
    <property type="disease" value="Pfeiffer syndrome type 1"/>
</dbReference>
<dbReference type="Orphanet" id="251615">
    <property type="disease" value="Pilomyxoid astrocytoma"/>
</dbReference>
<dbReference type="Orphanet" id="314950">
    <property type="disease" value="Primary hypereosinophilic syndrome"/>
</dbReference>
<dbReference type="Orphanet" id="220386">
    <property type="disease" value="Semilobar holoprosencephaly"/>
</dbReference>
<dbReference type="Orphanet" id="3157">
    <property type="disease" value="Septo-optic dysplasia spectrum"/>
</dbReference>
<dbReference type="PharmGKB" id="PA28127"/>
<dbReference type="VEuPathDB" id="HostDB:ENSG00000077782"/>
<dbReference type="eggNOG" id="KOG0200">
    <property type="taxonomic scope" value="Eukaryota"/>
</dbReference>
<dbReference type="GeneTree" id="ENSGT00940000155860"/>
<dbReference type="HOGENOM" id="CLU_000288_74_3_1"/>
<dbReference type="InParanoid" id="P11362"/>
<dbReference type="OMA" id="YVQILKX"/>
<dbReference type="OrthoDB" id="5984265at2759"/>
<dbReference type="PAN-GO" id="P11362">
    <property type="GO annotations" value="8 GO annotations based on evolutionary models"/>
</dbReference>
<dbReference type="PhylomeDB" id="P11362"/>
<dbReference type="TreeFam" id="TF316307"/>
<dbReference type="BRENDA" id="2.7.10.1">
    <property type="organism ID" value="2681"/>
</dbReference>
<dbReference type="PathwayCommons" id="P11362"/>
<dbReference type="Reactome" id="R-HSA-109704">
    <property type="pathway name" value="PI3K Cascade"/>
</dbReference>
<dbReference type="Reactome" id="R-HSA-1257604">
    <property type="pathway name" value="PIP3 activates AKT signaling"/>
</dbReference>
<dbReference type="Reactome" id="R-HSA-1839120">
    <property type="pathway name" value="Signaling by FGFR1 amplification mutants"/>
</dbReference>
<dbReference type="Reactome" id="R-HSA-1839122">
    <property type="pathway name" value="Signaling by activated point mutants of FGFR1"/>
</dbReference>
<dbReference type="Reactome" id="R-HSA-190370">
    <molecule id="P11362-19"/>
    <property type="pathway name" value="FGFR1b ligand binding and activation"/>
</dbReference>
<dbReference type="Reactome" id="R-HSA-190373">
    <molecule id="P11362-1"/>
    <property type="pathway name" value="FGFR1c ligand binding and activation"/>
</dbReference>
<dbReference type="Reactome" id="R-HSA-190374">
    <molecule id="P11362-1"/>
    <property type="pathway name" value="FGFR1c and Klotho ligand binding and activation"/>
</dbReference>
<dbReference type="Reactome" id="R-HSA-2219530">
    <property type="pathway name" value="Constitutive Signaling by Aberrant PI3K in Cancer"/>
</dbReference>
<dbReference type="Reactome" id="R-HSA-375165">
    <molecule id="P11362-1"/>
    <property type="pathway name" value="NCAM signaling for neurite out-growth"/>
</dbReference>
<dbReference type="Reactome" id="R-HSA-445144">
    <molecule id="P11362-1"/>
    <property type="pathway name" value="Signal transduction by L1"/>
</dbReference>
<dbReference type="Reactome" id="R-HSA-5654219">
    <property type="pathway name" value="Phospholipase C-mediated cascade: FGFR1"/>
</dbReference>
<dbReference type="Reactome" id="R-HSA-5654687">
    <property type="pathway name" value="Downstream signaling of activated FGFR1"/>
</dbReference>
<dbReference type="Reactome" id="R-HSA-5654688">
    <property type="pathway name" value="SHC-mediated cascade:FGFR1"/>
</dbReference>
<dbReference type="Reactome" id="R-HSA-5654689">
    <property type="pathway name" value="PI-3K cascade:FGFR1"/>
</dbReference>
<dbReference type="Reactome" id="R-HSA-5654693">
    <property type="pathway name" value="FRS-mediated FGFR1 signaling"/>
</dbReference>
<dbReference type="Reactome" id="R-HSA-5654726">
    <property type="pathway name" value="Negative regulation of FGFR1 signaling"/>
</dbReference>
<dbReference type="Reactome" id="R-HSA-5655302">
    <property type="pathway name" value="Signaling by FGFR1 in disease"/>
</dbReference>
<dbReference type="Reactome" id="R-HSA-5673001">
    <property type="pathway name" value="RAF/MAP kinase cascade"/>
</dbReference>
<dbReference type="Reactome" id="R-HSA-6811558">
    <property type="pathway name" value="PI5P, PP2A and IER3 Regulate PI3K/AKT Signaling"/>
</dbReference>
<dbReference type="Reactome" id="R-HSA-8853336">
    <property type="pathway name" value="Signaling by plasma membrane FGFR1 fusions"/>
</dbReference>
<dbReference type="Reactome" id="R-HSA-9758919">
    <property type="pathway name" value="Epithelial-Mesenchymal Transition (EMT) during gastrulation"/>
</dbReference>
<dbReference type="Reactome" id="R-HSA-9793380">
    <property type="pathway name" value="Formation of paraxial mesoderm"/>
</dbReference>
<dbReference type="SignaLink" id="P11362"/>
<dbReference type="SIGNOR" id="P11362"/>
<dbReference type="BioGRID-ORCS" id="2260">
    <property type="hits" value="68 hits in 1199 CRISPR screens"/>
</dbReference>
<dbReference type="CD-CODE" id="804901D1">
    <property type="entry name" value="Nuclear speckle"/>
</dbReference>
<dbReference type="CD-CODE" id="8C2F96ED">
    <property type="entry name" value="Centrosome"/>
</dbReference>
<dbReference type="CD-CODE" id="91857CE7">
    <property type="entry name" value="Nucleolus"/>
</dbReference>
<dbReference type="ChiTaRS" id="FGFR1">
    <property type="organism name" value="human"/>
</dbReference>
<dbReference type="EvolutionaryTrace" id="P11362"/>
<dbReference type="GeneWiki" id="Fibroblast_growth_factor_receptor_1"/>
<dbReference type="GenomeRNAi" id="2260"/>
<dbReference type="Pharos" id="P11362">
    <property type="development level" value="Tclin"/>
</dbReference>
<dbReference type="PRO" id="PR:P11362"/>
<dbReference type="Proteomes" id="UP000005640">
    <property type="component" value="Chromosome 8"/>
</dbReference>
<dbReference type="RNAct" id="P11362">
    <property type="molecule type" value="protein"/>
</dbReference>
<dbReference type="Bgee" id="ENSG00000077782">
    <property type="expression patterns" value="Expressed in buccal mucosa cell and 209 other cell types or tissues"/>
</dbReference>
<dbReference type="ExpressionAtlas" id="P11362">
    <property type="expression patterns" value="baseline and differential"/>
</dbReference>
<dbReference type="GO" id="GO:0031410">
    <property type="term" value="C:cytoplasmic vesicle"/>
    <property type="evidence" value="ECO:0007669"/>
    <property type="project" value="UniProtKB-KW"/>
</dbReference>
<dbReference type="GO" id="GO:0005829">
    <property type="term" value="C:cytosol"/>
    <property type="evidence" value="ECO:0007669"/>
    <property type="project" value="UniProtKB-SubCell"/>
</dbReference>
<dbReference type="GO" id="GO:0005576">
    <property type="term" value="C:extracellular region"/>
    <property type="evidence" value="ECO:0000303"/>
    <property type="project" value="UniProtKB"/>
</dbReference>
<dbReference type="GO" id="GO:0098978">
    <property type="term" value="C:glutamatergic synapse"/>
    <property type="evidence" value="ECO:0007669"/>
    <property type="project" value="Ensembl"/>
</dbReference>
<dbReference type="GO" id="GO:0016020">
    <property type="term" value="C:membrane"/>
    <property type="evidence" value="ECO:0000303"/>
    <property type="project" value="UniProtKB"/>
</dbReference>
<dbReference type="GO" id="GO:0005634">
    <property type="term" value="C:nucleus"/>
    <property type="evidence" value="ECO:0007669"/>
    <property type="project" value="UniProtKB-SubCell"/>
</dbReference>
<dbReference type="GO" id="GO:0005886">
    <property type="term" value="C:plasma membrane"/>
    <property type="evidence" value="ECO:0000314"/>
    <property type="project" value="UniProtKB"/>
</dbReference>
<dbReference type="GO" id="GO:0098794">
    <property type="term" value="C:postsynapse"/>
    <property type="evidence" value="ECO:0007669"/>
    <property type="project" value="Ensembl"/>
</dbReference>
<dbReference type="GO" id="GO:0043235">
    <property type="term" value="C:receptor complex"/>
    <property type="evidence" value="ECO:0000314"/>
    <property type="project" value="MGI"/>
</dbReference>
<dbReference type="GO" id="GO:0005524">
    <property type="term" value="F:ATP binding"/>
    <property type="evidence" value="ECO:0007669"/>
    <property type="project" value="UniProtKB-KW"/>
</dbReference>
<dbReference type="GO" id="GO:0017134">
    <property type="term" value="F:fibroblast growth factor binding"/>
    <property type="evidence" value="ECO:0000314"/>
    <property type="project" value="UniProtKB"/>
</dbReference>
<dbReference type="GO" id="GO:0005007">
    <property type="term" value="F:fibroblast growth factor receptor activity"/>
    <property type="evidence" value="ECO:0000314"/>
    <property type="project" value="UniProtKB"/>
</dbReference>
<dbReference type="GO" id="GO:0008201">
    <property type="term" value="F:heparin binding"/>
    <property type="evidence" value="ECO:0000314"/>
    <property type="project" value="UniProtKB"/>
</dbReference>
<dbReference type="GO" id="GO:0042802">
    <property type="term" value="F:identical protein binding"/>
    <property type="evidence" value="ECO:0000353"/>
    <property type="project" value="IntAct"/>
</dbReference>
<dbReference type="GO" id="GO:0042803">
    <property type="term" value="F:protein homodimerization activity"/>
    <property type="evidence" value="ECO:0000353"/>
    <property type="project" value="UniProtKB"/>
</dbReference>
<dbReference type="GO" id="GO:0004713">
    <property type="term" value="F:protein tyrosine kinase activity"/>
    <property type="evidence" value="ECO:0000314"/>
    <property type="project" value="UniProtKB"/>
</dbReference>
<dbReference type="GO" id="GO:0090722">
    <property type="term" value="F:receptor-receptor interaction"/>
    <property type="evidence" value="ECO:0000314"/>
    <property type="project" value="ParkinsonsUK-UCL"/>
</dbReference>
<dbReference type="GO" id="GO:0042169">
    <property type="term" value="F:SH2 domain binding"/>
    <property type="evidence" value="ECO:0007669"/>
    <property type="project" value="Ensembl"/>
</dbReference>
<dbReference type="GO" id="GO:0001525">
    <property type="term" value="P:angiogenesis"/>
    <property type="evidence" value="ECO:0007669"/>
    <property type="project" value="Ensembl"/>
</dbReference>
<dbReference type="GO" id="GO:0060117">
    <property type="term" value="P:auditory receptor cell development"/>
    <property type="evidence" value="ECO:0007669"/>
    <property type="project" value="Ensembl"/>
</dbReference>
<dbReference type="GO" id="GO:0060445">
    <property type="term" value="P:branching involved in salivary gland morphogenesis"/>
    <property type="evidence" value="ECO:0007669"/>
    <property type="project" value="Ensembl"/>
</dbReference>
<dbReference type="GO" id="GO:0055074">
    <property type="term" value="P:calcium ion homeostasis"/>
    <property type="evidence" value="ECO:0007669"/>
    <property type="project" value="Ensembl"/>
</dbReference>
<dbReference type="GO" id="GO:0060038">
    <property type="term" value="P:cardiac muscle cell proliferation"/>
    <property type="evidence" value="ECO:0007669"/>
    <property type="project" value="Ensembl"/>
</dbReference>
<dbReference type="GO" id="GO:0048469">
    <property type="term" value="P:cell maturation"/>
    <property type="evidence" value="ECO:0007669"/>
    <property type="project" value="Ensembl"/>
</dbReference>
<dbReference type="GO" id="GO:0016477">
    <property type="term" value="P:cell migration"/>
    <property type="evidence" value="ECO:0000304"/>
    <property type="project" value="UniProtKB"/>
</dbReference>
<dbReference type="GO" id="GO:0030031">
    <property type="term" value="P:cell projection assembly"/>
    <property type="evidence" value="ECO:0007669"/>
    <property type="project" value="Ensembl"/>
</dbReference>
<dbReference type="GO" id="GO:0044344">
    <property type="term" value="P:cellular response to fibroblast growth factor stimulus"/>
    <property type="evidence" value="ECO:0000314"/>
    <property type="project" value="BHF-UCL"/>
</dbReference>
<dbReference type="GO" id="GO:0071529">
    <property type="term" value="P:cementum mineralization"/>
    <property type="evidence" value="ECO:0007669"/>
    <property type="project" value="Ensembl"/>
</dbReference>
<dbReference type="GO" id="GO:0002062">
    <property type="term" value="P:chondrocyte differentiation"/>
    <property type="evidence" value="ECO:0007669"/>
    <property type="project" value="Ensembl"/>
</dbReference>
<dbReference type="GO" id="GO:0043009">
    <property type="term" value="P:chordate embryonic development"/>
    <property type="evidence" value="ECO:0000304"/>
    <property type="project" value="UniProtKB"/>
</dbReference>
<dbReference type="GO" id="GO:0071344">
    <property type="term" value="P:diphosphate metabolic process"/>
    <property type="evidence" value="ECO:0007669"/>
    <property type="project" value="Ensembl"/>
</dbReference>
<dbReference type="GO" id="GO:0030326">
    <property type="term" value="P:embryonic limb morphogenesis"/>
    <property type="evidence" value="ECO:0007669"/>
    <property type="project" value="Ensembl"/>
</dbReference>
<dbReference type="GO" id="GO:0001837">
    <property type="term" value="P:epithelial to mesenchymal transition"/>
    <property type="evidence" value="ECO:0000315"/>
    <property type="project" value="BHF-UCL"/>
</dbReference>
<dbReference type="GO" id="GO:0008543">
    <property type="term" value="P:fibroblast growth factor receptor signaling pathway"/>
    <property type="evidence" value="ECO:0000314"/>
    <property type="project" value="UniProtKB"/>
</dbReference>
<dbReference type="GO" id="GO:0035607">
    <property type="term" value="P:fibroblast growth factor receptor signaling pathway involved in orbitofrontal cortex development"/>
    <property type="evidence" value="ECO:0007669"/>
    <property type="project" value="Ensembl"/>
</dbReference>
<dbReference type="GO" id="GO:0010467">
    <property type="term" value="P:gene expression"/>
    <property type="evidence" value="ECO:0007669"/>
    <property type="project" value="Ensembl"/>
</dbReference>
<dbReference type="GO" id="GO:0001701">
    <property type="term" value="P:in utero embryonic development"/>
    <property type="evidence" value="ECO:0007669"/>
    <property type="project" value="Ensembl"/>
</dbReference>
<dbReference type="GO" id="GO:0042472">
    <property type="term" value="P:inner ear morphogenesis"/>
    <property type="evidence" value="ECO:0007669"/>
    <property type="project" value="Ensembl"/>
</dbReference>
<dbReference type="GO" id="GO:0060484">
    <property type="term" value="P:lung-associated mesenchyme development"/>
    <property type="evidence" value="ECO:0007669"/>
    <property type="project" value="Ensembl"/>
</dbReference>
<dbReference type="GO" id="GO:0000165">
    <property type="term" value="P:MAPK cascade"/>
    <property type="evidence" value="ECO:0000304"/>
    <property type="project" value="ProtInc"/>
</dbReference>
<dbReference type="GO" id="GO:0010463">
    <property type="term" value="P:mesenchymal cell proliferation"/>
    <property type="evidence" value="ECO:0007669"/>
    <property type="project" value="Ensembl"/>
</dbReference>
<dbReference type="GO" id="GO:0030901">
    <property type="term" value="P:midbrain development"/>
    <property type="evidence" value="ECO:0007669"/>
    <property type="project" value="Ensembl"/>
</dbReference>
<dbReference type="GO" id="GO:0042474">
    <property type="term" value="P:middle ear morphogenesis"/>
    <property type="evidence" value="ECO:0007669"/>
    <property type="project" value="Ensembl"/>
</dbReference>
<dbReference type="GO" id="GO:0090272">
    <property type="term" value="P:negative regulation of fibroblast growth factor production"/>
    <property type="evidence" value="ECO:0007669"/>
    <property type="project" value="Ensembl"/>
</dbReference>
<dbReference type="GO" id="GO:0000122">
    <property type="term" value="P:negative regulation of transcription by RNA polymerase II"/>
    <property type="evidence" value="ECO:0007669"/>
    <property type="project" value="Ensembl"/>
</dbReference>
<dbReference type="GO" id="GO:0001764">
    <property type="term" value="P:neuron migration"/>
    <property type="evidence" value="ECO:0000304"/>
    <property type="project" value="UniProtKB"/>
</dbReference>
<dbReference type="GO" id="GO:0031175">
    <property type="term" value="P:neuron projection development"/>
    <property type="evidence" value="ECO:0007669"/>
    <property type="project" value="Ensembl"/>
</dbReference>
<dbReference type="GO" id="GO:0001759">
    <property type="term" value="P:organ induction"/>
    <property type="evidence" value="ECO:0007669"/>
    <property type="project" value="Ensembl"/>
</dbReference>
<dbReference type="GO" id="GO:0042473">
    <property type="term" value="P:outer ear morphogenesis"/>
    <property type="evidence" value="ECO:0007669"/>
    <property type="project" value="Ensembl"/>
</dbReference>
<dbReference type="GO" id="GO:0048339">
    <property type="term" value="P:paraxial mesoderm development"/>
    <property type="evidence" value="ECO:0007669"/>
    <property type="project" value="Ensembl"/>
</dbReference>
<dbReference type="GO" id="GO:0018108">
    <property type="term" value="P:peptidyl-tyrosine phosphorylation"/>
    <property type="evidence" value="ECO:0000314"/>
    <property type="project" value="UniProtKB"/>
</dbReference>
<dbReference type="GO" id="GO:0048015">
    <property type="term" value="P:phosphatidylinositol-mediated signaling"/>
    <property type="evidence" value="ECO:0000304"/>
    <property type="project" value="UniProtKB"/>
</dbReference>
<dbReference type="GO" id="GO:0043536">
    <property type="term" value="P:positive regulation of blood vessel endothelial cell migration"/>
    <property type="evidence" value="ECO:0000316"/>
    <property type="project" value="BHF-UCL"/>
</dbReference>
<dbReference type="GO" id="GO:0060045">
    <property type="term" value="P:positive regulation of cardiac muscle cell proliferation"/>
    <property type="evidence" value="ECO:0007669"/>
    <property type="project" value="Ensembl"/>
</dbReference>
<dbReference type="GO" id="GO:0045597">
    <property type="term" value="P:positive regulation of cell differentiation"/>
    <property type="evidence" value="ECO:0000318"/>
    <property type="project" value="GO_Central"/>
</dbReference>
<dbReference type="GO" id="GO:0008284">
    <property type="term" value="P:positive regulation of cell population proliferation"/>
    <property type="evidence" value="ECO:0000314"/>
    <property type="project" value="UniProtKB"/>
</dbReference>
<dbReference type="GO" id="GO:2001028">
    <property type="term" value="P:positive regulation of endothelial cell chemotaxis"/>
    <property type="evidence" value="ECO:0000314"/>
    <property type="project" value="BHF-UCL"/>
</dbReference>
<dbReference type="GO" id="GO:0043406">
    <property type="term" value="P:positive regulation of MAP kinase activity"/>
    <property type="evidence" value="ECO:0000314"/>
    <property type="project" value="UniProtKB"/>
</dbReference>
<dbReference type="GO" id="GO:0043410">
    <property type="term" value="P:positive regulation of MAPK cascade"/>
    <property type="evidence" value="ECO:0000315"/>
    <property type="project" value="UniProtKB"/>
</dbReference>
<dbReference type="GO" id="GO:0090080">
    <property type="term" value="P:positive regulation of MAPKKK cascade by fibroblast growth factor receptor signaling pathway"/>
    <property type="evidence" value="ECO:0007669"/>
    <property type="project" value="Ensembl"/>
</dbReference>
<dbReference type="GO" id="GO:0002053">
    <property type="term" value="P:positive regulation of mesenchymal cell proliferation"/>
    <property type="evidence" value="ECO:0007669"/>
    <property type="project" value="Ensembl"/>
</dbReference>
<dbReference type="GO" id="GO:1903465">
    <property type="term" value="P:positive regulation of mitotic cell cycle DNA replication"/>
    <property type="evidence" value="ECO:0007669"/>
    <property type="project" value="Ensembl"/>
</dbReference>
<dbReference type="GO" id="GO:0045666">
    <property type="term" value="P:positive regulation of neuron differentiation"/>
    <property type="evidence" value="ECO:0000315"/>
    <property type="project" value="UniProtKB"/>
</dbReference>
<dbReference type="GO" id="GO:0010976">
    <property type="term" value="P:positive regulation of neuron projection development"/>
    <property type="evidence" value="ECO:0007669"/>
    <property type="project" value="Ensembl"/>
</dbReference>
<dbReference type="GO" id="GO:2000830">
    <property type="term" value="P:positive regulation of parathyroid hormone secretion"/>
    <property type="evidence" value="ECO:0007669"/>
    <property type="project" value="Ensembl"/>
</dbReference>
<dbReference type="GO" id="GO:0051897">
    <property type="term" value="P:positive regulation of phosphatidylinositol 3-kinase/protein kinase B signal transduction"/>
    <property type="evidence" value="ECO:0000316"/>
    <property type="project" value="BHF-UCL"/>
</dbReference>
<dbReference type="GO" id="GO:0010518">
    <property type="term" value="P:positive regulation of phospholipase activity"/>
    <property type="evidence" value="ECO:0000304"/>
    <property type="project" value="UniProtKB"/>
</dbReference>
<dbReference type="GO" id="GO:2000648">
    <property type="term" value="P:positive regulation of stem cell proliferation"/>
    <property type="evidence" value="ECO:0007669"/>
    <property type="project" value="Ensembl"/>
</dbReference>
<dbReference type="GO" id="GO:1905564">
    <property type="term" value="P:positive regulation of vascular endothelial cell proliferation"/>
    <property type="evidence" value="ECO:0000316"/>
    <property type="project" value="BHF-UCL"/>
</dbReference>
<dbReference type="GO" id="GO:0046777">
    <property type="term" value="P:protein autophosphorylation"/>
    <property type="evidence" value="ECO:0000314"/>
    <property type="project" value="UniProtKB"/>
</dbReference>
<dbReference type="GO" id="GO:0006468">
    <property type="term" value="P:protein phosphorylation"/>
    <property type="evidence" value="ECO:0000303"/>
    <property type="project" value="UniProtKB"/>
</dbReference>
<dbReference type="GO" id="GO:0060665">
    <property type="term" value="P:regulation of branching involved in salivary gland morphogenesis by mesenchymal-epithelial signaling"/>
    <property type="evidence" value="ECO:0007669"/>
    <property type="project" value="Ensembl"/>
</dbReference>
<dbReference type="GO" id="GO:0045595">
    <property type="term" value="P:regulation of cell differentiation"/>
    <property type="evidence" value="ECO:0000304"/>
    <property type="project" value="UniProtKB"/>
</dbReference>
<dbReference type="GO" id="GO:2001239">
    <property type="term" value="P:regulation of extrinsic apoptotic signaling pathway in absence of ligand"/>
    <property type="evidence" value="ECO:0007669"/>
    <property type="project" value="Ensembl"/>
</dbReference>
<dbReference type="GO" id="GO:0048378">
    <property type="term" value="P:regulation of lateral mesodermal cell fate specification"/>
    <property type="evidence" value="ECO:0007669"/>
    <property type="project" value="Ensembl"/>
</dbReference>
<dbReference type="GO" id="GO:0010966">
    <property type="term" value="P:regulation of phosphate transport"/>
    <property type="evidence" value="ECO:0007669"/>
    <property type="project" value="Ensembl"/>
</dbReference>
<dbReference type="GO" id="GO:0099151">
    <property type="term" value="P:regulation of postsynaptic density assembly"/>
    <property type="evidence" value="ECO:0007669"/>
    <property type="project" value="Ensembl"/>
</dbReference>
<dbReference type="GO" id="GO:1904383">
    <property type="term" value="P:response to sodium phosphate"/>
    <property type="evidence" value="ECO:0007669"/>
    <property type="project" value="Ensembl"/>
</dbReference>
<dbReference type="GO" id="GO:0007605">
    <property type="term" value="P:sensory perception of sound"/>
    <property type="evidence" value="ECO:0007669"/>
    <property type="project" value="Ensembl"/>
</dbReference>
<dbReference type="GO" id="GO:0001501">
    <property type="term" value="P:skeletal system development"/>
    <property type="evidence" value="ECO:0000304"/>
    <property type="project" value="ProtInc"/>
</dbReference>
<dbReference type="GO" id="GO:0048705">
    <property type="term" value="P:skeletal system morphogenesis"/>
    <property type="evidence" value="ECO:0000304"/>
    <property type="project" value="UniProtKB"/>
</dbReference>
<dbReference type="GO" id="GO:0048863">
    <property type="term" value="P:stem cell differentiation"/>
    <property type="evidence" value="ECO:0007669"/>
    <property type="project" value="Ensembl"/>
</dbReference>
<dbReference type="GO" id="GO:0072089">
    <property type="term" value="P:stem cell proliferation"/>
    <property type="evidence" value="ECO:0007669"/>
    <property type="project" value="Ensembl"/>
</dbReference>
<dbReference type="GO" id="GO:0001657">
    <property type="term" value="P:ureteric bud development"/>
    <property type="evidence" value="ECO:0007669"/>
    <property type="project" value="Ensembl"/>
</dbReference>
<dbReference type="GO" id="GO:0021847">
    <property type="term" value="P:ventricular zone neuroblast division"/>
    <property type="evidence" value="ECO:0007669"/>
    <property type="project" value="Ensembl"/>
</dbReference>
<dbReference type="GO" id="GO:0070640">
    <property type="term" value="P:vitamin D3 metabolic process"/>
    <property type="evidence" value="ECO:0007669"/>
    <property type="project" value="Ensembl"/>
</dbReference>
<dbReference type="CDD" id="cd04973">
    <property type="entry name" value="IgI_1_FGFR"/>
    <property type="match status" value="1"/>
</dbReference>
<dbReference type="CDD" id="cd05857">
    <property type="entry name" value="IgI_2_FGFR"/>
    <property type="match status" value="1"/>
</dbReference>
<dbReference type="CDD" id="cd05098">
    <property type="entry name" value="PTKc_FGFR1"/>
    <property type="match status" value="1"/>
</dbReference>
<dbReference type="FunFam" id="1.10.510.10:FF:000007">
    <property type="entry name" value="Fibroblast growth factor receptor"/>
    <property type="match status" value="1"/>
</dbReference>
<dbReference type="FunFam" id="2.60.40.10:FF:000016">
    <property type="entry name" value="Fibroblast growth factor receptor"/>
    <property type="match status" value="1"/>
</dbReference>
<dbReference type="FunFam" id="2.60.40.10:FF:000020">
    <property type="entry name" value="Fibroblast growth factor receptor"/>
    <property type="match status" value="1"/>
</dbReference>
<dbReference type="FunFam" id="2.60.40.10:FF:000408">
    <property type="entry name" value="Fibroblast growth factor receptor"/>
    <property type="match status" value="1"/>
</dbReference>
<dbReference type="FunFam" id="3.30.200.20:FF:000011">
    <property type="entry name" value="Fibroblast growth factor receptor"/>
    <property type="match status" value="1"/>
</dbReference>
<dbReference type="Gene3D" id="2.60.40.10">
    <property type="entry name" value="Immunoglobulins"/>
    <property type="match status" value="3"/>
</dbReference>
<dbReference type="Gene3D" id="3.30.200.20">
    <property type="entry name" value="Phosphorylase Kinase, domain 1"/>
    <property type="match status" value="1"/>
</dbReference>
<dbReference type="Gene3D" id="1.10.510.10">
    <property type="entry name" value="Transferase(Phosphotransferase) domain 1"/>
    <property type="match status" value="1"/>
</dbReference>
<dbReference type="IDEAL" id="IID00650"/>
<dbReference type="InterPro" id="IPR028174">
    <property type="entry name" value="FGF_rcpt_1"/>
</dbReference>
<dbReference type="InterPro" id="IPR016248">
    <property type="entry name" value="FGF_rcpt_fam"/>
</dbReference>
<dbReference type="InterPro" id="IPR007110">
    <property type="entry name" value="Ig-like_dom"/>
</dbReference>
<dbReference type="InterPro" id="IPR036179">
    <property type="entry name" value="Ig-like_dom_sf"/>
</dbReference>
<dbReference type="InterPro" id="IPR013783">
    <property type="entry name" value="Ig-like_fold"/>
</dbReference>
<dbReference type="InterPro" id="IPR013098">
    <property type="entry name" value="Ig_I-set"/>
</dbReference>
<dbReference type="InterPro" id="IPR003599">
    <property type="entry name" value="Ig_sub"/>
</dbReference>
<dbReference type="InterPro" id="IPR003598">
    <property type="entry name" value="Ig_sub2"/>
</dbReference>
<dbReference type="InterPro" id="IPR013151">
    <property type="entry name" value="Immunoglobulin_dom"/>
</dbReference>
<dbReference type="InterPro" id="IPR011009">
    <property type="entry name" value="Kinase-like_dom_sf"/>
</dbReference>
<dbReference type="InterPro" id="IPR000719">
    <property type="entry name" value="Prot_kinase_dom"/>
</dbReference>
<dbReference type="InterPro" id="IPR017441">
    <property type="entry name" value="Protein_kinase_ATP_BS"/>
</dbReference>
<dbReference type="InterPro" id="IPR050122">
    <property type="entry name" value="RTK"/>
</dbReference>
<dbReference type="InterPro" id="IPR001245">
    <property type="entry name" value="Ser-Thr/Tyr_kinase_cat_dom"/>
</dbReference>
<dbReference type="InterPro" id="IPR008266">
    <property type="entry name" value="Tyr_kinase_AS"/>
</dbReference>
<dbReference type="InterPro" id="IPR020635">
    <property type="entry name" value="Tyr_kinase_cat_dom"/>
</dbReference>
<dbReference type="PANTHER" id="PTHR24416:SF131">
    <property type="entry name" value="FIBROBLAST GROWTH FACTOR RECEPTOR 1"/>
    <property type="match status" value="1"/>
</dbReference>
<dbReference type="PANTHER" id="PTHR24416">
    <property type="entry name" value="TYROSINE-PROTEIN KINASE RECEPTOR"/>
    <property type="match status" value="1"/>
</dbReference>
<dbReference type="Pfam" id="PF07679">
    <property type="entry name" value="I-set"/>
    <property type="match status" value="2"/>
</dbReference>
<dbReference type="Pfam" id="PF00047">
    <property type="entry name" value="ig"/>
    <property type="match status" value="1"/>
</dbReference>
<dbReference type="Pfam" id="PF07714">
    <property type="entry name" value="PK_Tyr_Ser-Thr"/>
    <property type="match status" value="1"/>
</dbReference>
<dbReference type="PIRSF" id="PIRSF000628">
    <property type="entry name" value="FGFR"/>
    <property type="match status" value="1"/>
</dbReference>
<dbReference type="PRINTS" id="PR00109">
    <property type="entry name" value="TYRKINASE"/>
</dbReference>
<dbReference type="SMART" id="SM00409">
    <property type="entry name" value="IG"/>
    <property type="match status" value="3"/>
</dbReference>
<dbReference type="SMART" id="SM00408">
    <property type="entry name" value="IGc2"/>
    <property type="match status" value="3"/>
</dbReference>
<dbReference type="SMART" id="SM00219">
    <property type="entry name" value="TyrKc"/>
    <property type="match status" value="1"/>
</dbReference>
<dbReference type="SUPFAM" id="SSF48726">
    <property type="entry name" value="Immunoglobulin"/>
    <property type="match status" value="3"/>
</dbReference>
<dbReference type="SUPFAM" id="SSF56112">
    <property type="entry name" value="Protein kinase-like (PK-like)"/>
    <property type="match status" value="1"/>
</dbReference>
<dbReference type="PROSITE" id="PS50835">
    <property type="entry name" value="IG_LIKE"/>
    <property type="match status" value="3"/>
</dbReference>
<dbReference type="PROSITE" id="PS00107">
    <property type="entry name" value="PROTEIN_KINASE_ATP"/>
    <property type="match status" value="1"/>
</dbReference>
<dbReference type="PROSITE" id="PS50011">
    <property type="entry name" value="PROTEIN_KINASE_DOM"/>
    <property type="match status" value="1"/>
</dbReference>
<dbReference type="PROSITE" id="PS00109">
    <property type="entry name" value="PROTEIN_KINASE_TYR"/>
    <property type="match status" value="1"/>
</dbReference>
<reference key="1">
    <citation type="journal article" date="1990" name="Biochem. Biophys. Res. Commun.">
        <title>The complete amino acid sequence of the shorter form of human basic fibroblast growth factor receptor deduced from its cDNA.</title>
        <authorList>
            <person name="Itoh N."/>
            <person name="Terachi T."/>
            <person name="Ohta M."/>
            <person name="Seo M.K."/>
        </authorList>
    </citation>
    <scope>NUCLEOTIDE SEQUENCE [MRNA] (ISOFORM 15)</scope>
    <source>
        <tissue>Placenta</tissue>
    </source>
</reference>
<reference key="2">
    <citation type="journal article" date="1990" name="EMBO J.">
        <title>Cloning and expression of two distinct high-affinity receptors cross-reacting with acidic and basic fibroblast growth factors.</title>
        <authorList>
            <person name="Dionne C.A."/>
            <person name="Crumley G.R."/>
            <person name="Bellot F."/>
            <person name="Kaplow J.M."/>
            <person name="Searfoss G."/>
            <person name="Ruta M."/>
            <person name="Burgess W.H."/>
            <person name="Jaye M."/>
            <person name="Schlessinger J."/>
        </authorList>
    </citation>
    <scope>NUCLEOTIDE SEQUENCE [MRNA] (ISOFORM 1)</scope>
    <scope>INTERACTION WITH FGF1 AND FGF2</scope>
    <source>
        <tissue>Neonatal brain stem</tissue>
    </source>
</reference>
<reference key="3">
    <citation type="journal article" date="1990" name="Mol. Cell. Biol.">
        <title>Diverse forms of a receptor for acidic and basic fibroblast growth factors.</title>
        <authorList>
            <person name="Johnson D.E."/>
            <person name="Lee P.L."/>
            <person name="Lu J."/>
            <person name="Williams L.T."/>
        </authorList>
    </citation>
    <scope>NUCLEOTIDE SEQUENCE [MRNA] (ISOFORMS 6; 15; 17 AND 18)</scope>
</reference>
<reference key="4">
    <citation type="journal article" date="1990" name="Nucleic Acids Res.">
        <title>Complete sequence of a human receptor for acidic and basic fibroblast growth factors.</title>
        <authorList>
            <person name="Isacchi A."/>
            <person name="Bergonzoni L."/>
            <person name="Sarmientos P."/>
        </authorList>
    </citation>
    <scope>NUCLEOTIDE SEQUENCE [MRNA] (ISOFORM 1)</scope>
    <source>
        <tissue>Placenta</tissue>
    </source>
</reference>
<reference key="5">
    <citation type="journal article" date="1991" name="Growth Factors">
        <title>cDNA cloning and expression of a human FGF receptor which binds acidic and basic FGF.</title>
        <authorList>
            <person name="Wennstroem S."/>
            <person name="Sandstroem C."/>
            <person name="Claesson-Welsh L."/>
        </authorList>
    </citation>
    <scope>NUCLEOTIDE SEQUENCE [MRNA] (ISOFORM 14)</scope>
    <scope>INTERACTION WITH FGF1 AND FGF2</scope>
    <source>
        <tissue>Teratocarcinoma</tissue>
    </source>
</reference>
<reference key="6">
    <citation type="journal article" date="1991" name="Growth Factors">
        <title>Molecular cloning of a human basic fibroblast growth factor receptor cDNA and expression of a biologically active extracellular domain in a baculovirus system.</title>
        <authorList>
            <person name="Kiefer M.C."/>
            <person name="Baird A."/>
            <person name="George-Nascimento C."/>
            <person name="Nguyen T."/>
            <person name="Mason O.B."/>
            <person name="Boley L.J."/>
            <person name="Valenzuela P."/>
            <person name="Barr P.J."/>
        </authorList>
    </citation>
    <scope>NUCLEOTIDE SEQUENCE [MRNA] (ISOFORM 14)</scope>
</reference>
<reference key="7">
    <citation type="journal article" date="1991" name="Oncogene">
        <title>Alternative splicing generates at least five different isoforms of the human basic-FGF receptor.</title>
        <authorList>
            <person name="Eisemann A."/>
            <person name="Ahn J.A."/>
            <person name="Graziani G."/>
            <person name="Tronick S.R."/>
            <person name="Ron D."/>
        </authorList>
    </citation>
    <scope>NUCLEOTIDE SEQUENCE [MRNA] (ISOFORMS 1; 6; 14; 15 AND 16)</scope>
    <source>
        <tissue>Lung</tissue>
    </source>
</reference>
<reference key="8">
    <citation type="journal article" date="1991" name="Science">
        <title>Fibroblast growth factor receptors from liver vary in three structural domains.</title>
        <authorList>
            <person name="Hou J."/>
            <person name="Kan M."/>
            <person name="McKeehan K."/>
            <person name="McBride G."/>
            <person name="Adams P."/>
            <person name="McKeehan W.L."/>
        </authorList>
    </citation>
    <scope>NUCLEOTIDE SEQUENCE [MRNA] (ISOFORMS 1; 2; 3; 4; 5; 6; 7; 8; 9; 10; 11; 12 AND 13)</scope>
    <source>
        <tissue>Liver</tissue>
    </source>
</reference>
<reference key="9">
    <citation type="journal article" date="1992" name="Cancer Res.">
        <title>K-sam-related gene, N-sam, encodes fibroblast growth factor receptor and is expressed in T-lymphocytic tumors.</title>
        <authorList>
            <person name="Hattori Y."/>
            <person name="Odagiri H."/>
            <person name="Katoh O."/>
            <person name="Sakamoto H."/>
            <person name="Morita T."/>
            <person name="Shimotohno K."/>
            <person name="Tobinai K."/>
            <person name="Sugimura T."/>
            <person name="Terada M."/>
        </authorList>
    </citation>
    <scope>NUCLEOTIDE SEQUENCE [MRNA] (ISOFORM 1)</scope>
</reference>
<reference key="10">
    <citation type="journal article" date="2010" name="Hum. Reprod.">
        <title>A case of Kallmann syndrome carrying a missense mutation in alternatively spliced exon 8A encoding the immunoglobulin-like domain IIIb of fibroblast growth factor receptor 1.</title>
        <authorList>
            <person name="Miura K."/>
            <person name="Miura S."/>
            <person name="Yoshiura K."/>
            <person name="Seminara S."/>
            <person name="Hamaguchi D."/>
            <person name="Niikawa N."/>
            <person name="Masuzaki H."/>
        </authorList>
    </citation>
    <scope>NUCLEOTIDE SEQUENCE [MRNA] (ISOFORM 19)</scope>
    <scope>ROLE IN DISEASE</scope>
</reference>
<reference key="11">
    <citation type="journal article" date="2004" name="Nat. Genet.">
        <title>Complete sequencing and characterization of 21,243 full-length human cDNAs.</title>
        <authorList>
            <person name="Ota T."/>
            <person name="Suzuki Y."/>
            <person name="Nishikawa T."/>
            <person name="Otsuki T."/>
            <person name="Sugiyama T."/>
            <person name="Irie R."/>
            <person name="Wakamatsu A."/>
            <person name="Hayashi K."/>
            <person name="Sato H."/>
            <person name="Nagai K."/>
            <person name="Kimura K."/>
            <person name="Makita H."/>
            <person name="Sekine M."/>
            <person name="Obayashi M."/>
            <person name="Nishi T."/>
            <person name="Shibahara T."/>
            <person name="Tanaka T."/>
            <person name="Ishii S."/>
            <person name="Yamamoto J."/>
            <person name="Saito K."/>
            <person name="Kawai Y."/>
            <person name="Isono Y."/>
            <person name="Nakamura Y."/>
            <person name="Nagahari K."/>
            <person name="Murakami K."/>
            <person name="Yasuda T."/>
            <person name="Iwayanagi T."/>
            <person name="Wagatsuma M."/>
            <person name="Shiratori A."/>
            <person name="Sudo H."/>
            <person name="Hosoiri T."/>
            <person name="Kaku Y."/>
            <person name="Kodaira H."/>
            <person name="Kondo H."/>
            <person name="Sugawara M."/>
            <person name="Takahashi M."/>
            <person name="Kanda K."/>
            <person name="Yokoi T."/>
            <person name="Furuya T."/>
            <person name="Kikkawa E."/>
            <person name="Omura Y."/>
            <person name="Abe K."/>
            <person name="Kamihara K."/>
            <person name="Katsuta N."/>
            <person name="Sato K."/>
            <person name="Tanikawa M."/>
            <person name="Yamazaki M."/>
            <person name="Ninomiya K."/>
            <person name="Ishibashi T."/>
            <person name="Yamashita H."/>
            <person name="Murakawa K."/>
            <person name="Fujimori K."/>
            <person name="Tanai H."/>
            <person name="Kimata M."/>
            <person name="Watanabe M."/>
            <person name="Hiraoka S."/>
            <person name="Chiba Y."/>
            <person name="Ishida S."/>
            <person name="Ono Y."/>
            <person name="Takiguchi S."/>
            <person name="Watanabe S."/>
            <person name="Yosida M."/>
            <person name="Hotuta T."/>
            <person name="Kusano J."/>
            <person name="Kanehori K."/>
            <person name="Takahashi-Fujii A."/>
            <person name="Hara H."/>
            <person name="Tanase T.-O."/>
            <person name="Nomura Y."/>
            <person name="Togiya S."/>
            <person name="Komai F."/>
            <person name="Hara R."/>
            <person name="Takeuchi K."/>
            <person name="Arita M."/>
            <person name="Imose N."/>
            <person name="Musashino K."/>
            <person name="Yuuki H."/>
            <person name="Oshima A."/>
            <person name="Sasaki N."/>
            <person name="Aotsuka S."/>
            <person name="Yoshikawa Y."/>
            <person name="Matsunawa H."/>
            <person name="Ichihara T."/>
            <person name="Shiohata N."/>
            <person name="Sano S."/>
            <person name="Moriya S."/>
            <person name="Momiyama H."/>
            <person name="Satoh N."/>
            <person name="Takami S."/>
            <person name="Terashima Y."/>
            <person name="Suzuki O."/>
            <person name="Nakagawa S."/>
            <person name="Senoh A."/>
            <person name="Mizoguchi H."/>
            <person name="Goto Y."/>
            <person name="Shimizu F."/>
            <person name="Wakebe H."/>
            <person name="Hishigaki H."/>
            <person name="Watanabe T."/>
            <person name="Sugiyama A."/>
            <person name="Takemoto M."/>
            <person name="Kawakami B."/>
            <person name="Yamazaki M."/>
            <person name="Watanabe K."/>
            <person name="Kumagai A."/>
            <person name="Itakura S."/>
            <person name="Fukuzumi Y."/>
            <person name="Fujimori Y."/>
            <person name="Komiyama M."/>
            <person name="Tashiro H."/>
            <person name="Tanigami A."/>
            <person name="Fujiwara T."/>
            <person name="Ono T."/>
            <person name="Yamada K."/>
            <person name="Fujii Y."/>
            <person name="Ozaki K."/>
            <person name="Hirao M."/>
            <person name="Ohmori Y."/>
            <person name="Kawabata A."/>
            <person name="Hikiji T."/>
            <person name="Kobatake N."/>
            <person name="Inagaki H."/>
            <person name="Ikema Y."/>
            <person name="Okamoto S."/>
            <person name="Okitani R."/>
            <person name="Kawakami T."/>
            <person name="Noguchi S."/>
            <person name="Itoh T."/>
            <person name="Shigeta K."/>
            <person name="Senba T."/>
            <person name="Matsumura K."/>
            <person name="Nakajima Y."/>
            <person name="Mizuno T."/>
            <person name="Morinaga M."/>
            <person name="Sasaki M."/>
            <person name="Togashi T."/>
            <person name="Oyama M."/>
            <person name="Hata H."/>
            <person name="Watanabe M."/>
            <person name="Komatsu T."/>
            <person name="Mizushima-Sugano J."/>
            <person name="Satoh T."/>
            <person name="Shirai Y."/>
            <person name="Takahashi Y."/>
            <person name="Nakagawa K."/>
            <person name="Okumura K."/>
            <person name="Nagase T."/>
            <person name="Nomura N."/>
            <person name="Kikuchi H."/>
            <person name="Masuho Y."/>
            <person name="Yamashita R."/>
            <person name="Nakai K."/>
            <person name="Yada T."/>
            <person name="Nakamura Y."/>
            <person name="Ohara O."/>
            <person name="Isogai T."/>
            <person name="Sugano S."/>
        </authorList>
    </citation>
    <scope>NUCLEOTIDE SEQUENCE [LARGE SCALE MRNA] (ISOFORMS 6; 14 AND 21)</scope>
    <source>
        <tissue>Placenta</tissue>
        <tissue>Testis</tissue>
    </source>
</reference>
<reference key="12">
    <citation type="submission" date="2005-04" db="EMBL/GenBank/DDBJ databases">
        <authorList>
            <person name="Suzuki Y."/>
            <person name="Sugano S."/>
            <person name="Totoki Y."/>
            <person name="Toyoda A."/>
            <person name="Takeda T."/>
            <person name="Sakaki Y."/>
            <person name="Tanaka A."/>
            <person name="Yokoyama S."/>
        </authorList>
    </citation>
    <scope>NUCLEOTIDE SEQUENCE [LARGE SCALE MRNA] (ISOFORMS 14 AND 20)</scope>
    <source>
        <tissue>Brain</tissue>
        <tissue>Colon</tissue>
    </source>
</reference>
<reference key="13">
    <citation type="submission" date="2004-03" db="EMBL/GenBank/DDBJ databases">
        <authorList>
            <consortium name="NIEHS SNPs program"/>
        </authorList>
    </citation>
    <scope>NUCLEOTIDE SEQUENCE [GENOMIC DNA]</scope>
    <scope>VARIANTS SER-22; ARG-818 AND CYS-822</scope>
</reference>
<reference key="14">
    <citation type="journal article" date="2006" name="Nature">
        <title>DNA sequence and analysis of human chromosome 8.</title>
        <authorList>
            <person name="Nusbaum C."/>
            <person name="Mikkelsen T.S."/>
            <person name="Zody M.C."/>
            <person name="Asakawa S."/>
            <person name="Taudien S."/>
            <person name="Garber M."/>
            <person name="Kodira C.D."/>
            <person name="Schueler M.G."/>
            <person name="Shimizu A."/>
            <person name="Whittaker C.A."/>
            <person name="Chang J.L."/>
            <person name="Cuomo C.A."/>
            <person name="Dewar K."/>
            <person name="FitzGerald M.G."/>
            <person name="Yang X."/>
            <person name="Allen N.R."/>
            <person name="Anderson S."/>
            <person name="Asakawa T."/>
            <person name="Blechschmidt K."/>
            <person name="Bloom T."/>
            <person name="Borowsky M.L."/>
            <person name="Butler J."/>
            <person name="Cook A."/>
            <person name="Corum B."/>
            <person name="DeArellano K."/>
            <person name="DeCaprio D."/>
            <person name="Dooley K.T."/>
            <person name="Dorris L. III"/>
            <person name="Engels R."/>
            <person name="Gloeckner G."/>
            <person name="Hafez N."/>
            <person name="Hagopian D.S."/>
            <person name="Hall J.L."/>
            <person name="Ishikawa S.K."/>
            <person name="Jaffe D.B."/>
            <person name="Kamat A."/>
            <person name="Kudoh J."/>
            <person name="Lehmann R."/>
            <person name="Lokitsang T."/>
            <person name="Macdonald P."/>
            <person name="Major J.E."/>
            <person name="Matthews C.D."/>
            <person name="Mauceli E."/>
            <person name="Menzel U."/>
            <person name="Mihalev A.H."/>
            <person name="Minoshima S."/>
            <person name="Murayama Y."/>
            <person name="Naylor J.W."/>
            <person name="Nicol R."/>
            <person name="Nguyen C."/>
            <person name="O'Leary S.B."/>
            <person name="O'Neill K."/>
            <person name="Parker S.C.J."/>
            <person name="Polley A."/>
            <person name="Raymond C.K."/>
            <person name="Reichwald K."/>
            <person name="Rodriguez J."/>
            <person name="Sasaki T."/>
            <person name="Schilhabel M."/>
            <person name="Siddiqui R."/>
            <person name="Smith C.L."/>
            <person name="Sneddon T.P."/>
            <person name="Talamas J.A."/>
            <person name="Tenzin P."/>
            <person name="Topham K."/>
            <person name="Venkataraman V."/>
            <person name="Wen G."/>
            <person name="Yamazaki S."/>
            <person name="Young S.K."/>
            <person name="Zeng Q."/>
            <person name="Zimmer A.R."/>
            <person name="Rosenthal A."/>
            <person name="Birren B.W."/>
            <person name="Platzer M."/>
            <person name="Shimizu N."/>
            <person name="Lander E.S."/>
        </authorList>
    </citation>
    <scope>NUCLEOTIDE SEQUENCE [LARGE SCALE GENOMIC DNA]</scope>
</reference>
<reference key="15">
    <citation type="journal article" date="2004" name="Genome Res.">
        <title>The status, quality, and expansion of the NIH full-length cDNA project: the Mammalian Gene Collection (MGC).</title>
        <authorList>
            <consortium name="The MGC Project Team"/>
        </authorList>
    </citation>
    <scope>NUCLEOTIDE SEQUENCE [LARGE SCALE MRNA] (ISOFORMS 4; 14 AND 15)</scope>
    <scope>VARIANT GLY-213</scope>
    <source>
        <tissue>Pancreas</tissue>
        <tissue>Testis</tissue>
        <tissue>Uterus</tissue>
    </source>
</reference>
<reference key="16">
    <citation type="journal article" date="1994" name="Biochemistry">
        <title>Multivalent ligand-receptor binding interactions in the fibroblast growth factor system produce a cooperative growth factor and heparin mechanism for receptor dimerization.</title>
        <authorList>
            <person name="Pantoliano M.W."/>
            <person name="Horlick R.A."/>
            <person name="Springer B.A."/>
            <person name="Van Dyk D.E."/>
            <person name="Tobery T."/>
            <person name="Wetmore D.R."/>
            <person name="Lear J.D."/>
            <person name="Nahapetian A.T."/>
            <person name="Bradley J.D."/>
            <person name="Sisk W.P."/>
        </authorList>
    </citation>
    <scope>NUCLEOTIDE SEQUENCE [MRNA] OF 1-370 (ISOFORM 15)</scope>
    <scope>PROTEIN SEQUENCE OF 22-129 (ISOFORM 15)</scope>
</reference>
<reference key="17">
    <citation type="journal article" date="1994" name="Biochem. Biophys. Res. Commun.">
        <title>Distinct role of 2-O-, N-, and 6-O-sulfate groups of heparin in the formation of the ternary complex with basic fibroblast growth factor and soluble FGF receptor-1.</title>
        <authorList>
            <person name="Rusnati M."/>
            <person name="Coltrini D."/>
            <person name="Caccia P."/>
            <person name="Dell'Era P."/>
            <person name="Zoppetti G."/>
            <person name="Oreste P."/>
            <person name="Valsasina B."/>
            <person name="Presta M."/>
        </authorList>
    </citation>
    <scope>PROTEIN SEQUENCE OF 81-100 (ISOFORMS 1/2/4/5/14/16)</scope>
</reference>
<reference key="18">
    <citation type="journal article" date="1988" name="Oncogene">
        <title>A novel protein tyrosine kinase gene whose expression is modulated during endothelial cell differentiation.</title>
        <authorList>
            <person name="Ruta M."/>
            <person name="Howk R."/>
            <person name="Ricca G."/>
            <person name="Drohan W."/>
            <person name="Zabelshansky M."/>
            <person name="Laureys G."/>
            <person name="Barton D.E."/>
            <person name="Francke U."/>
            <person name="Schlessinger J."/>
            <person name="Givol D."/>
        </authorList>
    </citation>
    <scope>NUCLEOTIDE SEQUENCE [MRNA] OF 201-822 (ISOFORMS 1/6/10/14/15)</scope>
</reference>
<reference key="19">
    <citation type="journal article" date="1991" name="Mol. Cell. Biol.">
        <title>The human fibroblast growth factor receptor genes: a common structural arrangement underlies the mechanisms for generating receptor forms that differ in their third immunoglobulin domain.</title>
        <authorList>
            <person name="Johnson D.E."/>
            <person name="Lu J."/>
            <person name="Chen H."/>
            <person name="Werner S."/>
            <person name="Williams L.T."/>
        </authorList>
    </citation>
    <scope>NUCLEOTIDE SEQUENCE [GENOMIC DNA] OF 313-391 (ISOFORMS 17/18)</scope>
    <scope>NUCLEOTIDE SEQUENCE [GENOMIC DNA] OF 313-360 (ISOFORMS 1/2/4/5/6/7/8/9/10/11/12/13/14/15)</scope>
    <scope>NUCLEOTIDE SEQUENCE [GENOMIC DNA / MRNA] OF 313-360 (ISOFORM 19)</scope>
    <scope>TISSUE SPECIFICITY</scope>
    <source>
        <tissue>Foreskin fibroblast</tissue>
        <tissue>Umbilical vein</tissue>
    </source>
</reference>
<reference key="20">
    <citation type="journal article" date="1991" name="Mol. Cell. Biol.">
        <title>A novel c-fgr exon utilized in Epstein-Barr virus-infected B lymphocytes but not in normal monocytes.</title>
        <authorList>
            <person name="Gutkind S.J."/>
            <person name="Link D.C."/>
            <person name="Katamine S."/>
            <person name="Lacal P."/>
            <person name="Miki T."/>
            <person name="Ley T.J."/>
            <person name="Robbins K.C."/>
        </authorList>
    </citation>
    <scope>PARTIAL NUCLEOTIDE SEQUENCE [MRNA]</scope>
</reference>
<reference key="21">
    <citation type="journal article" date="1991" name="Mol. Cell. Biol.">
        <title>A tyrosine-phosphorylated carboxy-terminal peptide of the fibroblast growth factor receptor (Flg) is a binding site for the SH2 domain of phospholipase C-gamma 1.</title>
        <authorList>
            <person name="Mohammadi M."/>
            <person name="Honegger A.M."/>
            <person name="Rotin D."/>
            <person name="Fischer R."/>
            <person name="Bellot F."/>
            <person name="Li W."/>
            <person name="Dionne C.A."/>
            <person name="Jaye M."/>
            <person name="Rubinstein M."/>
            <person name="Schlessinger J."/>
        </authorList>
    </citation>
    <scope>INTERACTION WITH PLCG1</scope>
</reference>
<reference key="22">
    <citation type="journal article" date="1992" name="Nature">
        <title>Point mutation of an FGF receptor abolishes phosphatidylinositol turnover and Ca2+ flux but not mitogenesis.</title>
        <authorList>
            <person name="Peters K.G."/>
            <person name="Marie J."/>
            <person name="Wilson E."/>
            <person name="Ives H.E."/>
            <person name="Escobedo J."/>
            <person name="del Rosario M."/>
            <person name="Mirda D."/>
            <person name="Williams L.T."/>
        </authorList>
    </citation>
    <scope>MUTAGENESIS OF TYR-766</scope>
    <scope>FUNCTION</scope>
    <scope>CATALYTIC ACTIVITY</scope>
    <scope>AUTOPHOSPHORYLATION</scope>
    <scope>INTERACTION WITH PLCG1</scope>
</reference>
<reference key="23">
    <citation type="journal article" date="1992" name="Nature">
        <title>Point mutation in FGF receptor eliminates phosphatidylinositol hydrolysis without affecting mitogenesis.</title>
        <authorList>
            <person name="Mohammadi M."/>
            <person name="Dionne C.A."/>
            <person name="Li W."/>
            <person name="Lin N."/>
            <person name="Spivak T."/>
            <person name="Honegger A.M."/>
            <person name="Jaye M."/>
            <person name="Schlessinger J."/>
        </authorList>
    </citation>
    <scope>MUTAGENESIS OF TYR-766</scope>
    <scope>FUNCTION IN CELL PROLIFERATION</scope>
</reference>
<reference key="24">
    <citation type="journal article" date="1994" name="J. Biol. Chem.">
        <title>Internalization of fibroblast growth factor receptor is inhibited by a point mutation at tyrosine 766.</title>
        <authorList>
            <person name="Sorokin A."/>
            <person name="Mohammadi M."/>
            <person name="Huang J."/>
            <person name="Schlessinger J."/>
        </authorList>
    </citation>
    <scope>MUTAGENESIS OF TYR-766</scope>
    <scope>SUBCELLULAR LOCATION</scope>
</reference>
<reference key="25">
    <citation type="journal article" date="1996" name="Mol. Cell. Biol.">
        <title>Identification of six novel autophosphorylation sites on fibroblast growth factor receptor 1 and elucidation of their importance in receptor activation and signal transduction.</title>
        <authorList>
            <person name="Mohammadi M."/>
            <person name="Dikic I."/>
            <person name="Sorokin A."/>
            <person name="Burgess W.H."/>
            <person name="Jaye M."/>
            <person name="Schlessinger J."/>
        </authorList>
    </citation>
    <scope>PHOSPHORYLATION AT TYR-463; TYR-583; TYR-585; TYR-653; TYR-654 AND TYR-730</scope>
    <scope>CATALYTIC ACTIVITY</scope>
    <scope>ACTIVITY REGULATION</scope>
    <scope>FUNCTION IN PHOSPHORYLATION OF PLCG1 AND SHC1; ACTIVATION OF MAP KINASES AND REGULATION OF CELL PROLIFERATION AND DIFFERENTIATION</scope>
    <scope>MUTAGENESIS OF TYR-653 AND TYR-654</scope>
</reference>
<reference key="26">
    <citation type="journal article" date="1996" name="J. Biol. Chem.">
        <title>Receptor specificity of the fibroblast growth factor family.</title>
        <authorList>
            <person name="Ornitz D.M."/>
            <person name="Xu J."/>
            <person name="Colvin J.S."/>
            <person name="McEwen D.G."/>
            <person name="MacArthur C.A."/>
            <person name="Coulier F."/>
            <person name="Gao G."/>
            <person name="Goldfarb M."/>
        </authorList>
    </citation>
    <scope>INTERACTION WITH FGF1; FGF2; FGF4; FGF5; FGF6</scope>
    <scope>FUNCTION IN CELL PROLIFERATION</scope>
</reference>
<reference key="27">
    <citation type="journal article" date="1998" name="Blood">
        <title>Consistent fusion of ZNF198 to the fibroblast growth factor receptor-1 in the t(8;13)(p11;q12) myeloproliferative syndrome.</title>
        <authorList>
            <person name="Reiter A."/>
            <person name="Sohal J."/>
            <person name="Kulkarni S."/>
            <person name="Chase A."/>
            <person name="Macdonald D.H.C."/>
            <person name="Aguiar R.C.T."/>
            <person name="Goncalves C."/>
            <person name="Hernandez J.M."/>
            <person name="Jennings B.A."/>
            <person name="Goldman J.M."/>
            <person name="Cross N.C.P."/>
        </authorList>
    </citation>
    <scope>CHROMOSOMAL TRANSLOCATION WITH ZMYM2</scope>
</reference>
<reference key="28">
    <citation type="journal article" date="1998" name="Nature">
        <title>Structure of a heparin-linked biologically active dimer of fibroblast growth factor.</title>
        <authorList>
            <person name="DiGabriele A.D."/>
            <person name="Lax I."/>
            <person name="Chen D.I."/>
            <person name="Svahn C.M."/>
            <person name="Jaye M."/>
            <person name="Schlessinger J."/>
            <person name="Hendrickson W.A."/>
        </authorList>
    </citation>
    <scope>INTERACTION WITH FGF1</scope>
    <scope>PHOSPHORYLATION</scope>
</reference>
<reference key="29">
    <citation type="journal article" date="1999" name="Blood">
        <title>The t(6;8)(q27;p11) translocation in a stem cell myeloproliferative disorder fuses a novel gene, FOP, to fibroblast growth factor receptor 1.</title>
        <authorList>
            <person name="Popovici C."/>
            <person name="Zhang B."/>
            <person name="Gregoire M.-J."/>
            <person name="Jonveaux P."/>
            <person name="Lafage-Pochitaloff M."/>
            <person name="Birnbaum D."/>
            <person name="Pebusque M.-J."/>
        </authorList>
    </citation>
    <scope>CHROMOSOMAL TRANSLOCATION WITH CEP43</scope>
</reference>
<reference key="30">
    <citation type="journal article" date="1999" name="Mol. Cell. Biol.">
        <title>Grb10, a positive, stimulatory signaling adapter in platelet-derived growth factor BB-, insulin-like growth factor I-, and insulin-mediated mitogenesis.</title>
        <authorList>
            <person name="Wang J."/>
            <person name="Dai H."/>
            <person name="Yousaf N."/>
            <person name="Moussaif M."/>
            <person name="Deng Y."/>
            <person name="Boufelliga A."/>
            <person name="Swamy O.R."/>
            <person name="Leone M.E."/>
            <person name="Riedel H."/>
        </authorList>
    </citation>
    <scope>INTERACTION WITH GRB10</scope>
</reference>
<reference key="31">
    <citation type="journal article" date="2000" name="Am. J. Med. Genet.">
        <title>Clinical findings in a patient with FGFR1 P252R mutation and comparison with the literature.</title>
        <authorList>
            <person name="Roscioli T."/>
            <person name="Flanagan S."/>
            <person name="Kumar P."/>
            <person name="Masel J."/>
            <person name="Gattas M."/>
            <person name="Hyland V.J."/>
            <person name="Glass I.A."/>
        </authorList>
    </citation>
    <scope>INVOLVEMENT IN JWS</scope>
    <scope>VARIANT JWS ARG-252</scope>
</reference>
<reference key="32">
    <citation type="journal article" date="2000" name="Blood">
        <title>FGFR1 is fused to the centrosome-associated protein CEP110 in the 8p12 stem cell myeloproliferative disorder with t(8;9)(p12;q33).</title>
        <authorList>
            <person name="Guasch G."/>
            <person name="Mack G.J."/>
            <person name="Popovici C."/>
            <person name="Dastugue N."/>
            <person name="Birnbaum D."/>
            <person name="Rattner J.B."/>
            <person name="Pebusque M.-J."/>
        </authorList>
    </citation>
    <scope>CHROMOSOMAL TRANSLOCATION WITH CNTRL</scope>
</reference>
<reference key="33">
    <citation type="journal article" date="2001" name="Proc. Natl. Acad. Sci. U.S.A.">
        <title>Stimulation of phosphatidylinositol 3-kinase by fibroblast growth factor receptors is mediated by coordinated recruitment of multiple docking proteins.</title>
        <authorList>
            <person name="Ong S.H."/>
            <person name="Hadari Y.R."/>
            <person name="Gotoh N."/>
            <person name="Guy G.R."/>
            <person name="Schlessinger J."/>
            <person name="Lax I."/>
        </authorList>
    </citation>
    <scope>FUNCTION IN PHOSPHORYLATION OF FRS2 AND GAB1 AND IN ACTIVATION OF PIK3R1</scope>
</reference>
<reference key="34">
    <citation type="journal article" date="2002" name="Mol. Biol. Cell">
        <title>The Shb adaptor protein binds to tyrosine 766 in the FGFR-1 and regulates the Ras/MEK/MAPK pathway via FRS2 phosphorylation in endothelial cells.</title>
        <authorList>
            <person name="Cross M.J."/>
            <person name="Lu L."/>
            <person name="Magnusson P."/>
            <person name="Nyqvist D."/>
            <person name="Holmqvist K."/>
            <person name="Welsh M."/>
            <person name="Claesson-Welsh L."/>
        </authorList>
    </citation>
    <scope>FUNCTION IN ACTIVATION OF SIGNALING VIA RAS AND MAP KINASES AND CELL PROLIFERATION</scope>
    <scope>FUNCTION IN PHOSPHORYLATION OF FRS2; SHB AND PTPN11/SHP2</scope>
    <scope>INTERACTION WITH SHB AND FGF2</scope>
    <scope>MUTAGENESIS OF TYR-766</scope>
</reference>
<reference key="35">
    <citation type="journal article" date="2004" name="Genes Chromosomes Cancer">
        <title>Identification of a novel gene, FGFR1OP2, fused to FGFR1 in 8p11 myeloproliferative syndrome.</title>
        <authorList>
            <person name="Grand E.K."/>
            <person name="Grand F.H."/>
            <person name="Chase A.J."/>
            <person name="Ross F.M."/>
            <person name="Corcoran M.M."/>
            <person name="Oscier D.G."/>
            <person name="Cross N.C.P."/>
        </authorList>
    </citation>
    <scope>CHROMOSOMAL TRANSLOCATION WITH FGFR1OP2</scope>
</reference>
<reference key="36">
    <citation type="journal article" date="2004" name="J. Biol. Chem.">
        <title>90-kDa ribosomal S6 kinase is a direct target for the nuclear fibroblast growth factor receptor 1 (FGFR1): role in FGFR1 signaling.</title>
        <authorList>
            <person name="Hu Y."/>
            <person name="Fang X."/>
            <person name="Dunham S.M."/>
            <person name="Prada C."/>
            <person name="Stachowiak E.K."/>
            <person name="Stachowiak M.K."/>
        </authorList>
    </citation>
    <scope>FUNCTION IN ACTIVATION OF RPS6KA1 AND CREB1</scope>
    <scope>CATALYTIC ACTIVITY</scope>
    <scope>INTERACTION WITH RPS6KA1</scope>
    <scope>MUTAGENESIS OF LYS-514</scope>
    <scope>SUBCELLULAR LOCATION</scope>
</reference>
<reference key="37">
    <citation type="journal article" date="2005" name="J. Proteome Res.">
        <title>Human plasma N-glycoproteome analysis by immunoaffinity subtraction, hydrazide chemistry, and mass spectrometry.</title>
        <authorList>
            <person name="Liu T."/>
            <person name="Qian W.-J."/>
            <person name="Gritsenko M.A."/>
            <person name="Camp D.G. II"/>
            <person name="Monroe M.E."/>
            <person name="Moore R.J."/>
            <person name="Smith R.D."/>
        </authorList>
    </citation>
    <scope>GLYCOSYLATION [LARGE SCALE ANALYSIS] AT ASN-296</scope>
    <source>
        <tissue>Plasma</tissue>
    </source>
</reference>
<reference key="38">
    <citation type="journal article" date="2006" name="Blood">
        <title>Phosphotyrosine profiling identifies the KG-1 cell line as a model for the study of FGFR1 fusions in acute myeloid leukemia.</title>
        <authorList>
            <person name="Gu T.-L."/>
            <person name="Goss V.L."/>
            <person name="Reeves C."/>
            <person name="Popova L."/>
            <person name="Nardone J."/>
            <person name="Macneill J."/>
            <person name="Walters D.K."/>
            <person name="Wang Y."/>
            <person name="Rush J."/>
            <person name="Comb M.J."/>
            <person name="Druker B.J."/>
            <person name="Polakiewicz R.D."/>
        </authorList>
    </citation>
    <scope>CHROMOSOMAL TRANSLOCATION WITH FGFR1OP2</scope>
</reference>
<reference key="39">
    <citation type="journal article" date="2006" name="J. Biol. Chem.">
        <title>Receptor specificity of the fibroblast growth factor family. The complete mammalian FGF family.</title>
        <authorList>
            <person name="Zhang X."/>
            <person name="Ibrahimi O.A."/>
            <person name="Olsen S.K."/>
            <person name="Umemori H."/>
            <person name="Mohammadi M."/>
            <person name="Ornitz D.M."/>
        </authorList>
    </citation>
    <scope>INTERACTION WITH FGF1; FGF8; FGF10; FGF19; FGF21; FGF22 AND FGF23</scope>
    <scope>FUNCTION IN STIMULATION OF CELL PROLIFERATION</scope>
</reference>
<reference key="40">
    <citation type="journal article" date="2006" name="Mol. Biol. Cell">
        <title>Factors controlling fibroblast growth factor receptor-1's cytoplasmic trafficking and its regulation as revealed by FRAP analysis.</title>
        <authorList>
            <person name="Dunham-Ems S.M."/>
            <person name="Pudavar H.E."/>
            <person name="Myers J.M."/>
            <person name="Maher P.A."/>
            <person name="Prasad P.N."/>
            <person name="Stachowiak M.K."/>
        </authorList>
    </citation>
    <scope>SUBCELLULAR LOCATION</scope>
    <scope>GLYCOSYLATION</scope>
</reference>
<reference key="41">
    <citation type="journal article" date="2006" name="Mol. Cell">
        <title>Autophosphorylation of FGFR1 kinase is mediated by a sequential and precisely ordered reaction.</title>
        <authorList>
            <person name="Furdui C.M."/>
            <person name="Lew E.D."/>
            <person name="Schlessinger J."/>
            <person name="Anderson K.S."/>
        </authorList>
    </citation>
    <scope>PHOSPHORYLATION AT TYR-463; TYR-653; TYR-654; TYR-583 AND TYR-585</scope>
    <scope>IDENTIFICATION BY MASS SPECTROMETRY</scope>
</reference>
<reference key="42">
    <citation type="journal article" date="2007" name="Blood">
        <title>14-3-3 integrates pro-survival signals mediated by the AKT and MAPK pathways in ZNF198-FGFR1 transformed hematopoietic cells.</title>
        <authorList>
            <person name="Dong S."/>
            <person name="Kang S."/>
            <person name="Gu T."/>
            <person name="Kardar S."/>
            <person name="Fu H."/>
            <person name="Lonial S."/>
            <person name="Khoury H.J."/>
            <person name="Khuri F."/>
            <person name="Chen J."/>
        </authorList>
    </citation>
    <scope>CHROMOSOMAL TRANSLOCATION WITH FGFR1OP2</scope>
</reference>
<reference key="43">
    <citation type="journal article" date="2007" name="J. Biol. Chem.">
        <title>Tissue-specific expression of betaKlotho and fibroblast growth factor (FGF) receptor isoforms determines metabolic activity of FGF19 and FGF21.</title>
        <authorList>
            <person name="Kurosu H."/>
            <person name="Choi M."/>
            <person name="Ogawa Y."/>
            <person name="Dickson A.S."/>
            <person name="Goetz R."/>
            <person name="Eliseenkova A.V."/>
            <person name="Mohammadi M."/>
            <person name="Rosenblatt K.P."/>
            <person name="Kliewer S.A."/>
            <person name="Kuro-o M."/>
        </authorList>
    </citation>
    <scope>INTERACTION WITH FGF19; FGF21 AND KLB</scope>
    <scope>FUNCTION IN REGULATION OF GLUCOSE UPTAKE IN ADIPOCYTES</scope>
</reference>
<reference key="44">
    <citation type="journal article" date="2007" name="J. Cell. Physiol.">
        <title>Fibroblast growth factor receptor-induced phosphorylation of STAT1 at the Golgi apparatus without translocation to the nucleus.</title>
        <authorList>
            <person name="Citores L."/>
            <person name="Bai L."/>
            <person name="Sorensen V."/>
            <person name="Olsnes S."/>
        </authorList>
    </citation>
    <scope>FUNCTION IN STAT1 PHOSPHORYLATION</scope>
    <scope>GLYCOSYLATION</scope>
    <scope>PHOSPHORYLATION</scope>
</reference>
<reference key="45">
    <citation type="journal article" date="2008" name="J. Biol. Chem.">
        <title>Direct binding of integrin alphavbeta3 to FGF1 plays a role in FGF1 signaling.</title>
        <authorList>
            <person name="Mori S."/>
            <person name="Wu C.Y."/>
            <person name="Yamaji S."/>
            <person name="Saegusa J."/>
            <person name="Shi B."/>
            <person name="Ma Z."/>
            <person name="Kuwabara Y."/>
            <person name="Lam K.S."/>
            <person name="Isseroff R.R."/>
            <person name="Takada Y.K."/>
            <person name="Takada Y."/>
        </authorList>
    </citation>
    <scope>BINDING TO FGF1</scope>
    <scope>IDENTIFICATION IN A COMPLEX WITH INTEGRIN AND FGF1</scope>
</reference>
<reference key="46">
    <citation type="journal article" date="2008" name="Mol. Biol. Cell">
        <title>Ubiquitination of fibroblast growth factor receptor 1 is required for its intracellular sorting but not for its endocytosis.</title>
        <authorList>
            <person name="Haugsten E.M."/>
            <person name="Malecki J."/>
            <person name="Bjorklund S.M."/>
            <person name="Olsnes S."/>
            <person name="Wesche J."/>
        </authorList>
    </citation>
    <scope>UBIQUITINATION</scope>
    <scope>CATALYTIC ACTIVITY</scope>
    <scope>FUNCTION AS FGF1 RECEPTOR AND IN ACTIVATION OF PLCG1; FRS2; MAPK1/ERK2 AND MAPK3/ERK1</scope>
    <scope>ACTIVITY REGULATION</scope>
    <scope>SUBCELLULAR LOCATION</scope>
</reference>
<reference key="47">
    <citation type="journal article" date="2009" name="J. Biol. Chem.">
        <title>Novel mechanisms of fibroblast growth factor receptor 1 regulation by extracellular matrix protein anosmin-1.</title>
        <authorList>
            <person name="Hu Y."/>
            <person name="Guimond S.E."/>
            <person name="Travers P."/>
            <person name="Cadman S."/>
            <person name="Hohenester E."/>
            <person name="Turnbull J.E."/>
            <person name="Kim S.H."/>
            <person name="Bouloux P.M."/>
        </authorList>
    </citation>
    <scope>INTERACTION WITH ANOS1</scope>
</reference>
<reference key="48">
    <citation type="journal article" date="2009" name="Mol. Biol. Cell">
        <title>Fibroblast growth factor receptor-1 (FGFR1) nuclear dynamics reveal a novel mechanism in transcription control.</title>
        <authorList>
            <person name="Dunham-Ems S.M."/>
            <person name="Lee Y.W."/>
            <person name="Stachowiak E.K."/>
            <person name="Pudavar H."/>
            <person name="Claus P."/>
            <person name="Prasad P.N."/>
            <person name="Stachowiak M.K."/>
        </authorList>
    </citation>
    <scope>FUNCTION IN CHROMATIN BINDING AND TRANSCRIPTION REGULATION</scope>
    <scope>SUBCELLULAR LOCATION</scope>
</reference>
<reference key="49">
    <citation type="journal article" date="2009" name="Sci. Signal.">
        <title>The precise sequence of FGF receptor autophosphorylation is kinetically driven and is disrupted by oncogenic mutations.</title>
        <authorList>
            <person name="Lew E.D."/>
            <person name="Furdui C.M."/>
            <person name="Anderson K.S."/>
            <person name="Schlessinger J."/>
        </authorList>
    </citation>
    <scope>FUNCTION AS PROTO-ONCOGENE</scope>
    <scope>ACTIVE SITE</scope>
    <scope>MUTAGENESIS OF ASP-623</scope>
    <scope>CATALYTIC ACTIVITY</scope>
    <scope>PHOSPHORYLATION AT TYR-463; TYR-653; TYR-654; TYR-583; TYR-585 AND TYR-730</scope>
    <scope>CHARACTERIZATION OF VARIANT ECCL LYS-546</scope>
    <scope>IDENTIFICATION BY MASS SPECTROMETRY</scope>
    <scope>ACTIVITY REGULATION</scope>
</reference>
<reference key="50">
    <citation type="journal article" date="2010" name="PLoS ONE">
        <title>A novel fibroblast growth factor-1 (FGF1) mutant that acts as an FGF antagonist.</title>
        <authorList>
            <person name="Yamaji S."/>
            <person name="Saegusa J."/>
            <person name="Ieguchi K."/>
            <person name="Fujita M."/>
            <person name="Mori S."/>
            <person name="Takada Y.K."/>
            <person name="Takada Y."/>
        </authorList>
    </citation>
    <scope>BINDING TO FGF1</scope>
    <scope>IDENTIFICATION IN A COMPLEX WITH INTEGRIN AND FGF1</scope>
</reference>
<reference key="51">
    <citation type="journal article" date="2010" name="Proc. Natl. Acad. Sci. U.S.A.">
        <title>Isolated C-terminal tail of FGF23 alleviates hypophosphatemia by inhibiting FGF23-FGFR-Klotho complex formation.</title>
        <authorList>
            <person name="Goetz R."/>
            <person name="Nakada Y."/>
            <person name="Hu M.C."/>
            <person name="Kurosu H."/>
            <person name="Wang L."/>
            <person name="Nakatani T."/>
            <person name="Shi M."/>
            <person name="Eliseenkova A.V."/>
            <person name="Razzaque M.S."/>
            <person name="Moe O.W."/>
            <person name="Kuro-o M."/>
            <person name="Mohammadi M."/>
        </authorList>
    </citation>
    <scope>INTERACTION WITH FGF23 AND KLB</scope>
</reference>
<reference key="52">
    <citation type="journal article" date="2011" name="EMBO J.">
        <title>Nedd4-1 binds and ubiquitylates activated FGFR1 to control its endocytosis and function.</title>
        <authorList>
            <person name="Persaud A."/>
            <person name="Alberts P."/>
            <person name="Hayes M."/>
            <person name="Guettler S."/>
            <person name="Clarke I."/>
            <person name="Sicheri F."/>
            <person name="Dirks P."/>
            <person name="Ciruna B."/>
            <person name="Rotin D."/>
        </authorList>
    </citation>
    <scope>FUNCTION IN ACTIVATION OF AKT1; PLCG1; MAPK1/ERK2</scope>
    <scope>MAPK3/ERK1 AND MAP KINASE SIGNALING</scope>
    <scope>FUNCTION IN REGULATION OF NEURONAL DIFFERENTIATION AND EMBRYONIC DEVELOPMENT</scope>
    <scope>SUBCELLULAR LOCATION</scope>
    <scope>INTERACTION WITH NEDD4; PLCG1 AND FRS2</scope>
    <scope>UBIQUITINATION</scope>
    <scope>DEGRADATION</scope>
</reference>
<reference key="53">
    <citation type="journal article" date="2002" name="Int. J. Dev. Biol.">
        <title>The structure and function of vertebrate fibroblast growth factor receptor 1.</title>
        <authorList>
            <person name="Groth C."/>
            <person name="Lardelli M."/>
        </authorList>
    </citation>
    <scope>REVIEW ON ALTERNATIVE SPLICE FORMS; LIGANDS; SIGNALING PATHWAYS AND SUBCELLULAR LOCATION</scope>
</reference>
<reference key="54">
    <citation type="journal article" date="2005" name="Cytokine Growth Factor Rev.">
        <title>Cellular signaling by fibroblast growth factor receptors.</title>
        <authorList>
            <person name="Eswarakumar V.P."/>
            <person name="Lax I."/>
            <person name="Schlessinger J."/>
        </authorList>
    </citation>
    <scope>REVIEW ON FUNCTION; ROLE IN DISEASE; SIGNALING PATHWAYS; SUBUNIT; DOMAIN STRUCTURE; LIGAND SELECTIVITY AND ACTIVITY REGULATION</scope>
</reference>
<reference key="55">
    <citation type="journal article" date="2010" name="Nat. Rev. Cancer">
        <title>Fibroblast growth factor signalling: from development to cancer.</title>
        <authorList>
            <person name="Turner N."/>
            <person name="Grose R."/>
        </authorList>
    </citation>
    <scope>REVIEW ON FUNCTION IN FGF SIGNALING</scope>
</reference>
<reference key="56">
    <citation type="journal article" date="2010" name="Trends Endocrinol. Metab.">
        <title>Novel insights in FGFR1 regulation: lessons from Kallmann syndrome.</title>
        <authorList>
            <person name="Hu Y."/>
            <person name="Bouloux P.M."/>
        </authorList>
    </citation>
    <scope>REVIEW ON SIGNALING AND ROLE IN KALLMAN SYNDROME</scope>
</reference>
<reference key="57">
    <citation type="journal article" date="2016" name="Am. J. Hum. Genet.">
        <title>Mosaic activating mutations in FGFR1 cause encephalocraniocutaneous lipomatosis.</title>
        <authorList>
            <consortium name="University of Washington Center for Mendelian Genomics"/>
            <consortium name="Care4Rare Canada Consortium"/>
            <person name="Bennett J.T."/>
            <person name="Tan T.Y."/>
            <person name="Alcantara D."/>
            <person name="Tetrault M."/>
            <person name="Timms A.E."/>
            <person name="Jensen D."/>
            <person name="Collins S."/>
            <person name="Nowaczyk M.J."/>
            <person name="Lindhurst M.J."/>
            <person name="Christensen K.M."/>
            <person name="Braddock S.R."/>
            <person name="Brandling-Bennett H."/>
            <person name="Hennekam R.C."/>
            <person name="Chung B."/>
            <person name="Lehman A."/>
            <person name="Su J."/>
            <person name="Ng S."/>
            <person name="Amor D.J."/>
            <person name="Majewski J."/>
            <person name="Biesecker L.G."/>
            <person name="Boycott K.M."/>
            <person name="Dobyns W.B."/>
            <person name="O'Driscoll M."/>
            <person name="Moog U."/>
            <person name="McDonell L.M."/>
        </authorList>
    </citation>
    <scope>INVOLVEMENT IN ECCL</scope>
    <scope>VARIANTS ECCL LYS-546 AND GLU-656</scope>
    <scope>VARIANT MET-561</scope>
</reference>
<reference key="58">
    <citation type="journal article" date="1996" name="Cell">
        <title>Structure of the FGF receptor tyrosine kinase domain reveals a novel autoinhibitory mechanism.</title>
        <authorList>
            <person name="Mohammadi M."/>
            <person name="Schlessinger J."/>
            <person name="Hubbard S.R."/>
        </authorList>
    </citation>
    <scope>X-RAY CRYSTALLOGRAPHY (2.0 ANGSTROMS) OF 464-762</scope>
</reference>
<reference key="59">
    <citation type="journal article" date="1997" name="Science">
        <title>Structures of the tyrosine kinase domain of fibroblast growth factor receptor in complex with inhibitors.</title>
        <authorList>
            <person name="Mohammadi M."/>
            <person name="McMahon G."/>
            <person name="Sun L."/>
            <person name="Tang C."/>
            <person name="Hirth P."/>
            <person name="Yeh B.K."/>
            <person name="Hubbard S.R."/>
            <person name="Schlessinger J."/>
        </authorList>
    </citation>
    <scope>X-RAY CRYSTALLOGRAPHY (2.4 ANGSTROMS) OF 464-762 IN COMPLEX WITH SU4984</scope>
</reference>
<reference key="60">
    <citation type="journal article" date="2000" name="Cell">
        <title>Crystal structures of two FGF-FGFR complexes reveal the determinants of ligand-receptor specificity.</title>
        <authorList>
            <person name="Plotnikov A.N."/>
            <person name="Hubbard S.R."/>
            <person name="Schlessinger J."/>
            <person name="Mohammadi M."/>
        </authorList>
    </citation>
    <scope>X-RAY CRYSTALLOGRAPHY (2.8 ANGSTROMS) OF 141-365 IN COMPLEX WITH FGF1</scope>
    <scope>FUNCTION</scope>
    <scope>DISULFIDE BONDS</scope>
</reference>
<reference key="61">
    <citation type="journal article" date="2000" name="Mol. Cell">
        <title>Crystal structure of a ternary FGF-FGFR-heparin complex reveals a dual role for heparin in FGFR binding and dimerization.</title>
        <authorList>
            <person name="Schlessinger J."/>
            <person name="Plotnikov A.N."/>
            <person name="Ibrahimi O.A."/>
            <person name="Eliseenkova A.V."/>
            <person name="Yeh B.K."/>
            <person name="Yayon A."/>
            <person name="Linhardt R.J."/>
            <person name="Mohammadi M."/>
        </authorList>
    </citation>
    <scope>X-RAY CRYSTALLOGRAPHY (3.0 ANGSTROMS) OF 143-364 IN COMPLEX WITH FGF2 AND HEPARIN</scope>
    <scope>DISULFIDE BONDS</scope>
</reference>
<reference key="62">
    <citation type="submission" date="2005-11" db="PDB data bank">
        <title>Solution structure of the first Ig-like domain of human fibroblast growth factor receptor 1.</title>
        <authorList>
            <consortium name="RIKEN structural genomics initiative (RSGI)"/>
        </authorList>
    </citation>
    <scope>STRUCTURE BY NMR OF 38-124</scope>
</reference>
<reference key="63">
    <citation type="journal article" date="2009" name="Cell">
        <title>The selectivity of receptor tyrosine kinase signaling is controlled by a secondary SH2 domain binding site.</title>
        <authorList>
            <person name="Bae J.H."/>
            <person name="Lew E.D."/>
            <person name="Yuzawa S."/>
            <person name="Tome F."/>
            <person name="Lax I."/>
            <person name="Schlessinger J."/>
        </authorList>
    </citation>
    <scope>X-RAY CRYSTALLOGRAPHY (2.5 ANGSTROMS) OF 458-774 IN COMPLEX WITH PLCG1 AND ATP ANALOG</scope>
    <scope>FUNCTION</scope>
    <scope>CATALYTIC ACTIVITY</scope>
    <scope>SUBUNIT</scope>
    <scope>AUTOPHOSPHORYLATION</scope>
    <scope>PHOSPHORYLATION AT TYR-653; TYR-654 AND TYR-766</scope>
</reference>
<reference key="64">
    <citation type="journal article" date="2010" name="Proc. Natl. Acad. Sci. U.S.A.">
        <title>Asymmetric receptor contact is required for tyrosine autophosphorylation of fibroblast growth factor receptor in living cells.</title>
        <authorList>
            <person name="Bae J.H."/>
            <person name="Boggon T.J."/>
            <person name="Tome F."/>
            <person name="Mandiyan V."/>
            <person name="Lax I."/>
            <person name="Schlessinger J."/>
        </authorList>
    </citation>
    <scope>X-RAY CRYSTALLOGRAPHY (2.7 ANGSTROMS) OF 458-765 OF MUTANT GLU-577</scope>
    <scope>FUNCTION</scope>
    <scope>CATALYTIC ACTIVITY</scope>
    <scope>SUBUNIT</scope>
    <scope>MUTAGENESIS OF ARG-577</scope>
</reference>
<reference key="65">
    <citation type="journal article" date="2011" name="J. Biol. Chem.">
        <title>A novel mode of protein kinase inhibition exploiting hydrophobic motifs of autoinhibited kinases: discovery of ATP-independent inhibitors of fibroblast growth factor receptor.</title>
        <authorList>
            <person name="Eathiraj S."/>
            <person name="Palma R."/>
            <person name="Hirschi M."/>
            <person name="Volckova E."/>
            <person name="Nakuci E."/>
            <person name="Castro J."/>
            <person name="Chen C.R."/>
            <person name="Chan T.C."/>
            <person name="France D.S."/>
            <person name="Ashwell M.A."/>
        </authorList>
    </citation>
    <scope>X-RAY CRYSTALLOGRAPHY (2.01 ANGSTROMS) OF 461-765 IN COMPLEX WITH ARQ 069</scope>
    <scope>ACTIVITY REGULATION</scope>
</reference>
<reference key="66">
    <citation type="journal article" date="1994" name="Nat. Genet.">
        <title>A common mutation in the fibroblast growth factor receptor 1 gene in Pfeiffer syndrome.</title>
        <authorList>
            <person name="Muenke M."/>
            <person name="Schell U."/>
            <person name="Hehr A."/>
            <person name="Robin N.H."/>
            <person name="Losken H.W."/>
            <person name="Schinzel A."/>
            <person name="Pulleyn L.J."/>
            <person name="Rutland P."/>
            <person name="Reardon W."/>
            <person name="Malcolm S."/>
            <person name="Winter R.M."/>
        </authorList>
    </citation>
    <scope>VARIANT PS ARG-252</scope>
</reference>
<reference key="67">
    <citation type="journal article" date="2000" name="Cytogenet. Cell Genet.">
        <title>An unusual FGFR1 mutation (fibroblast growth factor receptor 1 mutation) in a girl with non-syndromic trigonocephaly.</title>
        <authorList>
            <person name="Kress W."/>
            <person name="Petersen B."/>
            <person name="Collmann H."/>
            <person name="Grimm T."/>
        </authorList>
    </citation>
    <scope>VARIANT TRIGNO1 THR-300</scope>
</reference>
<reference key="68">
    <citation type="journal article" date="2003" name="Nat. Genet.">
        <title>Loss-of-function mutations in FGFR1 cause autosomal dominant Kallmann syndrome.</title>
        <authorList>
            <person name="Dode C."/>
            <person name="Levilliers J."/>
            <person name="Dupont J.-M."/>
            <person name="De Paepe A."/>
            <person name="Le Du N."/>
            <person name="Soussi-Yanicostas N."/>
            <person name="Coimbra R.S."/>
            <person name="Delmaghani S."/>
            <person name="Compain-Nouaille S."/>
            <person name="Baverel F."/>
            <person name="Pecheux C."/>
            <person name="Le Tessier D."/>
            <person name="Cruaud C."/>
            <person name="Delpech M."/>
            <person name="Speleman F."/>
            <person name="Vermeulen S."/>
            <person name="Amalfitano A."/>
            <person name="Bachelot Y."/>
            <person name="Bouchard P."/>
            <person name="Cabrol S."/>
            <person name="Carel J.-C."/>
            <person name="Delemarre-van de Waal H."/>
            <person name="Goulet-Salmon B."/>
            <person name="Kottler M.-L."/>
            <person name="Richard O."/>
            <person name="Sanchez-Franco F."/>
            <person name="Saura R."/>
            <person name="Young J."/>
            <person name="Petit C."/>
            <person name="Hardelin J.-P."/>
        </authorList>
    </citation>
    <scope>VARIANTS HH2 ASP-97; CYS-99; SER-167; TYR-277; MET-607; 622-ARG--ARG-822 DEL; ARG-666 AND ARG-719</scope>
    <scope>VARIANT SER-772</scope>
</reference>
<reference key="69">
    <citation type="journal article" date="2004" name="J. Clin. Endocrinol. Metab.">
        <title>Clinical assessment and mutation analysis of Kallmann syndrome 1 (KAL1) and fibroblast growth factor receptor 1 (FGFR1, or KAL2) in five families and 18 sporadic patients.</title>
        <authorList>
            <person name="Sato N."/>
            <person name="Katsumata N."/>
            <person name="Kagami M."/>
            <person name="Hasegawa T."/>
            <person name="Hori N."/>
            <person name="Kawakita S."/>
            <person name="Minowada S."/>
            <person name="Shimotsuka A."/>
            <person name="Shishiba Y."/>
            <person name="Yokozawa M."/>
            <person name="Yasuda T."/>
            <person name="Nagasaki K."/>
            <person name="Hasegawa D."/>
            <person name="Hasegawa Y."/>
            <person name="Tachibana K."/>
            <person name="Naiki Y."/>
            <person name="Horikawa R."/>
            <person name="Tanaka T."/>
            <person name="Ogata T."/>
        </authorList>
    </citation>
    <scope>VARIANT HH2 SER-745</scope>
</reference>
<reference key="70">
    <citation type="journal article" date="2005" name="Am. J. Hum. Genet.">
        <title>Mutations that cause osteoglophonic dysplasia define novel roles for FGFR1 in bone elongation.</title>
        <authorList>
            <person name="White K.E."/>
            <person name="Cabral J.M."/>
            <person name="Davis S.I."/>
            <person name="Fishburn T."/>
            <person name="Evans W.E."/>
            <person name="Ichikawa S."/>
            <person name="Fields J."/>
            <person name="Yu X."/>
            <person name="Shaw N.J."/>
            <person name="McLellan N.J."/>
            <person name="McKeown C."/>
            <person name="FitzPatrick D."/>
            <person name="Yu K."/>
            <person name="Ornitz D.M."/>
            <person name="Econs M.J."/>
        </authorList>
    </citation>
    <scope>VARIANTS OGD ILE-330; CYS-374 AND ARG-381</scope>
    <scope>CHARACTERIZATION OF VARIANT OGD CYS-374</scope>
</reference>
<reference key="71">
    <citation type="journal article" date="2005" name="Hum. Mutat.">
        <title>Kallmann syndrome: 14 novel mutations in KAL1 and FGFR1 (KAL2).</title>
        <authorList>
            <person name="Albuisson J."/>
            <person name="Pecheux C."/>
            <person name="Carel J.-C."/>
            <person name="Lacombe D."/>
            <person name="Leheup B."/>
            <person name="Lapuzina P."/>
            <person name="Bouchard P."/>
            <person name="Legius E."/>
            <person name="Matthijs G."/>
            <person name="Wasniewska M."/>
            <person name="Delpech M."/>
            <person name="Young J."/>
            <person name="Hardelin J.-P."/>
            <person name="Dode C."/>
        </authorList>
    </citation>
    <scope>VARIANTS HH2 ILE-102; ALA-129; MET-273 AND THR-520</scope>
</reference>
<reference key="72">
    <citation type="journal article" date="2005" name="Hum. Reprod.">
        <title>Gonadotrophin therapy in Kallmann syndrome caused by heterozygous mutations of the gene for fibroblast growth factor receptor 1: report of three families: case report.</title>
        <authorList>
            <person name="Sato N."/>
            <person name="Hasegawa T."/>
            <person name="Hori N."/>
            <person name="Fukami M."/>
            <person name="Yoshimura Y."/>
            <person name="Ogata T."/>
        </authorList>
    </citation>
    <scope>VARIANTS HH2 ARG-687 AND SER-745</scope>
</reference>
<reference key="73">
    <citation type="journal article" date="2006" name="Am. J. Med. Genet. A">
        <title>Extended mutational analyses of FGFR1 in osteoglophonic dysplasia.</title>
        <authorList>
            <person name="Farrow E.G."/>
            <person name="Davis S.I."/>
            <person name="Mooney S.D."/>
            <person name="Beighton P."/>
            <person name="Mascarenhas L."/>
            <person name="Gutierrez Y.R."/>
            <person name="Pitukcheewanont P."/>
            <person name="White K.E."/>
        </authorList>
    </citation>
    <scope>VARIANTS OGD ILE-330 AND ARG-381</scope>
</reference>
<reference key="74">
    <citation type="journal article" date="2006" name="J. Clin. Endocrinol. Metab.">
        <title>Novel fibroblast growth factor receptor 1 mutations in patients with congenital hypogonadotropic hypogonadism with and without anosmia.</title>
        <authorList>
            <person name="Trarbach E.B."/>
            <person name="Costa E.M.F."/>
            <person name="Versiani B."/>
            <person name="de Castro M."/>
            <person name="Baptista M.T.M."/>
            <person name="Garmes H.M."/>
            <person name="de Mendonca B.B."/>
            <person name="Latronico A.C."/>
        </authorList>
    </citation>
    <scope>VARIANTS HH2 SER-48; PRO-245; TRP-250; VAL-343; LEU-366; SER-722 AND ILE-795</scope>
</reference>
<reference key="75">
    <citation type="journal article" date="2006" name="Mol. Cell. Endocrinol.">
        <title>Mutations in fibroblast growth factor receptor 1 cause Kallmann syndrome with a wide spectrum of reproductive phenotypes.</title>
        <authorList>
            <person name="Pitteloud N."/>
            <person name="Meysing A."/>
            <person name="Quinton R."/>
            <person name="Acierno J.S. Jr."/>
            <person name="Dwyer A.A."/>
            <person name="Plummer L."/>
            <person name="Fliers E."/>
            <person name="Boepple P."/>
            <person name="Hayes F."/>
            <person name="Seminara S."/>
            <person name="Hughes V.A."/>
            <person name="Ma J."/>
            <person name="Bouloux P."/>
            <person name="Mohammadi M."/>
            <person name="Crowley W.F. Jr."/>
        </authorList>
    </citation>
    <scope>VARIANTS HH2 CYS-78; ILE-102; HIS-224; ASP-237; GLN-254; MET-273; GLY-274; CYS-339; CYS-346; VAL-538; ARG-703 AND SER-703</scope>
    <scope>VARIANT VAL-769</scope>
</reference>
<reference key="76">
    <citation type="journal article" date="2006" name="Mol. Cell. Endocrinol.">
        <title>Paediatric phenotype of Kallmann syndrome due to mutations of fibroblast growth factor receptor 1 (FGFR1).</title>
        <authorList>
            <person name="Zenaty D."/>
            <person name="Bretones P."/>
            <person name="Lambe C."/>
            <person name="Guemas I."/>
            <person name="David M."/>
            <person name="Leger J."/>
            <person name="de Roux N."/>
        </authorList>
    </citation>
    <scope>VARIANTS HH2 SER-178; GLY-622 AND GLN-622</scope>
</reference>
<reference key="77">
    <citation type="journal article" date="2006" name="Proc. Natl. Acad. Sci. U.S.A.">
        <title>Mutations in fibroblast growth factor receptor 1 cause both Kallmann syndrome and normosmic idiopathic hypogonadotropic hypogonadism.</title>
        <authorList>
            <person name="Pitteloud N."/>
            <person name="Acierno J.S. Jr."/>
            <person name="Meysing A."/>
            <person name="Eliseenkova A.V."/>
            <person name="Ma J."/>
            <person name="Ibrahimi O.A."/>
            <person name="Metzger D.L."/>
            <person name="Hayes F.J."/>
            <person name="Dwyer A.A."/>
            <person name="Hughes V.A."/>
            <person name="Yialamas M."/>
            <person name="Hall J.E."/>
            <person name="Grant E."/>
            <person name="Mohammadi M."/>
            <person name="Crowley W.F. Jr."/>
        </authorList>
    </citation>
    <scope>VARIANTS HH2 SER-237; HIS-722 AND LYS-724</scope>
    <scope>CHARACTERIZATION OF VARIANTS HH2 SER-237; HIS-722 AND LYS-724</scope>
</reference>
<reference key="78">
    <citation type="journal article" date="2007" name="Hum. Mutat.">
        <title>Novel FGFR1 sequence variants in Kallmann syndrome, and genetic evidence that the FGFR1c isoform is required in olfactory bulb and palate morphogenesis.</title>
        <authorList>
            <person name="Dode C."/>
            <person name="Fouveaut C."/>
            <person name="Mortier G."/>
            <person name="Janssens S."/>
            <person name="Bertherat J."/>
            <person name="Mahoudeau J."/>
            <person name="Kottler M.-L."/>
            <person name="Chabrolle C."/>
            <person name="Gancel A."/>
            <person name="Francois I."/>
            <person name="Devriendt K."/>
            <person name="Wolczynski S."/>
            <person name="Pugeat M."/>
            <person name="Pineiro-Garcia A."/>
            <person name="Murat A."/>
            <person name="Bouchard P."/>
            <person name="Young J."/>
            <person name="Delpech M."/>
            <person name="Hardelin J.-P."/>
        </authorList>
    </citation>
    <scope>VARIANTS HH2 PHE-101; TRP-250; ASP-270; ARG-283; 324-GLU--ARG-822 DEL; CYS-332; ARG-621; 661-ARG--ARG-822 DEL; PHE-685 AND PHE-693</scope>
    <scope>VARIANTS LYS-77; SER-772 AND CYS-822</scope>
</reference>
<reference key="79">
    <citation type="journal article" date="2007" name="Nature">
        <title>Patterns of somatic mutation in human cancer genomes.</title>
        <authorList>
            <person name="Greenman C."/>
            <person name="Stephens P."/>
            <person name="Smith R."/>
            <person name="Dalgliesh G.L."/>
            <person name="Hunter C."/>
            <person name="Bignell G."/>
            <person name="Davies H."/>
            <person name="Teague J."/>
            <person name="Butler A."/>
            <person name="Stevens C."/>
            <person name="Edkins S."/>
            <person name="O'Meara S."/>
            <person name="Vastrik I."/>
            <person name="Schmidt E.E."/>
            <person name="Avis T."/>
            <person name="Barthorpe S."/>
            <person name="Bhamra G."/>
            <person name="Buck G."/>
            <person name="Choudhury B."/>
            <person name="Clements J."/>
            <person name="Cole J."/>
            <person name="Dicks E."/>
            <person name="Forbes S."/>
            <person name="Gray K."/>
            <person name="Halliday K."/>
            <person name="Harrison R."/>
            <person name="Hills K."/>
            <person name="Hinton J."/>
            <person name="Jenkinson A."/>
            <person name="Jones D."/>
            <person name="Menzies A."/>
            <person name="Mironenko T."/>
            <person name="Perry J."/>
            <person name="Raine K."/>
            <person name="Richardson D."/>
            <person name="Shepherd R."/>
            <person name="Small A."/>
            <person name="Tofts C."/>
            <person name="Varian J."/>
            <person name="Webb T."/>
            <person name="West S."/>
            <person name="Widaa S."/>
            <person name="Yates A."/>
            <person name="Cahill D.P."/>
            <person name="Louis D.N."/>
            <person name="Goldstraw P."/>
            <person name="Nicholson A.G."/>
            <person name="Brasseur F."/>
            <person name="Looijenga L."/>
            <person name="Weber B.L."/>
            <person name="Chiew Y.-E."/>
            <person name="DeFazio A."/>
            <person name="Greaves M.F."/>
            <person name="Green A.R."/>
            <person name="Campbell P."/>
            <person name="Birney E."/>
            <person name="Easton D.F."/>
            <person name="Chenevix-Trench G."/>
            <person name="Tan M.-H."/>
            <person name="Khoo S.K."/>
            <person name="Teh B.T."/>
            <person name="Yuen S.T."/>
            <person name="Leung S.Y."/>
            <person name="Wooster R."/>
            <person name="Futreal P.A."/>
            <person name="Stratton M.R."/>
        </authorList>
    </citation>
    <scope>VARIANTS [LARGE SCALE ANALYSIS] LEU-125; THR-252 AND LEU-664</scope>
</reference>
<reference key="80">
    <citation type="journal article" date="2009" name="J. Clin. Endocrinol. Metab.">
        <title>Impaired fibroblast growth factor receptor 1 signaling as a cause of normosmic idiopathic hypogonadotropic hypogonadism.</title>
        <authorList>
            <person name="Raivio T."/>
            <person name="Sidis Y."/>
            <person name="Plummer L."/>
            <person name="Chen H."/>
            <person name="Ma J."/>
            <person name="Mukherjee A."/>
            <person name="Jacobson-Dickman E."/>
            <person name="Quinton R."/>
            <person name="Van Vliet G."/>
            <person name="Lavoie H."/>
            <person name="Hughes V.A."/>
            <person name="Dwyer A."/>
            <person name="Hayes F.J."/>
            <person name="Xu S."/>
            <person name="Sparks S."/>
            <person name="Kaiser U.B."/>
            <person name="Mohammadi M."/>
            <person name="Pitteloud N."/>
        </authorList>
    </citation>
    <scope>VARIANTS HH2 CYS-99; SER-117; ASP-228; THR-239; GLN-250; LEU-470; ASN-618 AND PRO-671</scope>
    <scope>CHARACTERIZATION OF VARIANTS HH2 CYS-99; SER-117; ASP-228; THR-239; GLN-250; LEU-470; ASN-618 AND PRO-671</scope>
</reference>
<reference key="81">
    <citation type="journal article" date="2011" name="Proc. Natl. Acad. Sci. U.S.A.">
        <title>Heparan sulfate 6-O-sulfotransferase 1, a gene involved in extracellular sugar modifications, is mutated in patients with idiopathic hypogonadotrophic hypogonadism.</title>
        <authorList>
            <person name="Tornberg J."/>
            <person name="Sykiotis G.P."/>
            <person name="Keefe K."/>
            <person name="Plummer L."/>
            <person name="Hoang X."/>
            <person name="Hall J.E."/>
            <person name="Quinton R."/>
            <person name="Seminara S.B."/>
            <person name="Hughes V."/>
            <person name="Van Vliet G."/>
            <person name="Van Uum S."/>
            <person name="Crowley W.F."/>
            <person name="Habuchi H."/>
            <person name="Kimata K."/>
            <person name="Pitteloud N."/>
            <person name="Bulow H.E."/>
        </authorList>
    </citation>
    <scope>VARIANT HH2 GLN-250</scope>
</reference>
<reference key="82">
    <citation type="journal article" date="2012" name="PLoS Genet.">
        <title>SEMA3A, a gene involved in axonal pathfinding, is mutated in patients with Kallmann syndrome.</title>
        <authorList>
            <person name="Hanchate N.K."/>
            <person name="Giacobini P."/>
            <person name="Lhuillier P."/>
            <person name="Parkash J."/>
            <person name="Espy C."/>
            <person name="Fouveaut C."/>
            <person name="Leroy C."/>
            <person name="Baron S."/>
            <person name="Campagne C."/>
            <person name="Vanacker C."/>
            <person name="Collier F."/>
            <person name="Cruaud C."/>
            <person name="Meyer V."/>
            <person name="Garcia-Pinero A."/>
            <person name="Dewailly D."/>
            <person name="Cortet-Rudelli C."/>
            <person name="Gersak K."/>
            <person name="Metz C."/>
            <person name="Chabrier G."/>
            <person name="Pugeat M."/>
            <person name="Young J."/>
            <person name="Hardelin J.P."/>
            <person name="Prevot V."/>
            <person name="Dode C."/>
        </authorList>
    </citation>
    <scope>VARIANT HH2 ARG-687</scope>
</reference>
<reference key="83">
    <citation type="journal article" date="2013" name="Am. J. Hum. Genet.">
        <title>Mutations in FGF17, IL17RD, DUSP6, SPRY4, and FLRT3 are identified in individuals with congenital hypogonadotropic hypogonadism.</title>
        <authorList>
            <person name="Miraoui H."/>
            <person name="Dwyer A.A."/>
            <person name="Sykiotis G.P."/>
            <person name="Plummer L."/>
            <person name="Chung W."/>
            <person name="Feng B."/>
            <person name="Beenken A."/>
            <person name="Clarke J."/>
            <person name="Pers T.H."/>
            <person name="Dworzynski P."/>
            <person name="Keefe K."/>
            <person name="Niedziela M."/>
            <person name="Raivio T."/>
            <person name="Crowley W.F. Jr."/>
            <person name="Seminara S.B."/>
            <person name="Quinton R."/>
            <person name="Hughes V.A."/>
            <person name="Kumanov P."/>
            <person name="Young J."/>
            <person name="Yialamas M.A."/>
            <person name="Hall J.E."/>
            <person name="Van Vliet G."/>
            <person name="Chanoine J.P."/>
            <person name="Rubenstein J."/>
            <person name="Mohammadi M."/>
            <person name="Tsai P.S."/>
            <person name="Sidis Y."/>
            <person name="Lage K."/>
            <person name="Pitteloud N."/>
        </authorList>
    </citation>
    <scope>VARIANTS HH2 SER-117; ASP-228; THR-239; GLN-250; SER-342; ARG-348; LEU-470; THR-483; ASN-618; LYS-670; GLY-692; HIS-722; LYS-724 AND TYR-768</scope>
</reference>
<reference key="84">
    <citation type="journal article" date="2013" name="J. Med. Genet.">
        <title>FGFR1 mutations cause Hartsfield syndrome, the unique association of holoprosencephaly and ectrodactyly.</title>
        <authorList>
            <person name="Simonis N."/>
            <person name="Migeotte I."/>
            <person name="Lambert N."/>
            <person name="Perazzolo C."/>
            <person name="de Silva D.C."/>
            <person name="Dimitrov B."/>
            <person name="Heinrichs C."/>
            <person name="Janssens S."/>
            <person name="Kerr B."/>
            <person name="Mortier G."/>
            <person name="Van Vliet G."/>
            <person name="Lepage P."/>
            <person name="Casimir G."/>
            <person name="Abramowicz M."/>
            <person name="Smits G."/>
            <person name="Vilain C."/>
        </authorList>
    </citation>
    <scope>INVOLVEMENT IN HRTFDS</scope>
    <scope>VARIANTS HRTFDS SER-165; SER-191; ARG-490; TYR-623; LYS-628 AND TYR-725</scope>
</reference>
<reference key="85">
    <citation type="journal article" date="2013" name="Leukemia">
        <title>A translocation t(2;8)(q12;p11) fuses FGFR1 to a novel partner gene, RANBP2/NUP358, in a myeloproliferative/myelodysplastic neoplasm.</title>
        <authorList>
            <person name="Gervais C."/>
            <person name="Dano L."/>
            <person name="Perrusson N."/>
            <person name="Helias C."/>
            <person name="Jeandidier E."/>
            <person name="Galoisy A.C."/>
            <person name="Ittel A."/>
            <person name="Herbrecht R."/>
            <person name="Bilger K."/>
            <person name="Mauvieux L."/>
        </authorList>
    </citation>
    <scope>CHROMOSOMAL TRANSLOCATION WITH RANBP2</scope>
</reference>
<reference key="86">
    <citation type="journal article" date="2014" name="Am. J. Med. Genet. A">
        <title>Novel de novo heterozygous FGFR1 mutation in two siblings with Hartsfield syndrome: A case of gonadal mosaicism.</title>
        <authorList>
            <person name="Dhamija R."/>
            <person name="Kirmani S."/>
            <person name="Wang X."/>
            <person name="Ferber M.J."/>
            <person name="Wieben E.D."/>
            <person name="Lazaridis K.N."/>
            <person name="Babovic-Vuksanovic D."/>
        </authorList>
    </citation>
    <scope>VARIANT HRTFDS THR-627</scope>
</reference>
<reference key="87">
    <citation type="journal article" date="2014" name="J. Clin. Endocrinol. Metab.">
        <title>The prevalence of CHD7 missense versus truncating mutations is higher in patients with Kallmann syndrome than in typical CHARGE patients.</title>
        <authorList>
            <person name="Marcos S."/>
            <person name="Sarfati J."/>
            <person name="Leroy C."/>
            <person name="Fouveaut C."/>
            <person name="Parent P."/>
            <person name="Metz C."/>
            <person name="Wolczynski S."/>
            <person name="Gerard M."/>
            <person name="Bieth E."/>
            <person name="Kurtz F."/>
            <person name="Verier-Mine O."/>
            <person name="Perrin L."/>
            <person name="Archambeaud F."/>
            <person name="Cabrol S."/>
            <person name="Rodien P."/>
            <person name="Hove H."/>
            <person name="Prescott T."/>
            <person name="Lacombe D."/>
            <person name="Christin-Maitre S."/>
            <person name="Touraine P."/>
            <person name="Hieronimus S."/>
            <person name="Dewailly D."/>
            <person name="Young J."/>
            <person name="Pugeat M."/>
            <person name="Hardelin J.P."/>
            <person name="Dode C."/>
        </authorList>
    </citation>
    <scope>VARIANTS HH2 ARG-70; ILE-116; ALA-174; GLN-250 AND ARG-348</scope>
</reference>
<reference key="88">
    <citation type="journal article" date="2015" name="Fertil. Steril.">
        <title>Novel FGFR1 mutations in Kallmann syndrome and normosmic idiopathic hypogonadotropic hypogonadism: evidence for the involvement of an alternatively spliced isoform.</title>
        <authorList>
            <person name="Goncalves C."/>
            <person name="Bastos M."/>
            <person name="Pignatelli D."/>
            <person name="Borges T."/>
            <person name="Araguees J.M."/>
            <person name="Fonseca F."/>
            <person name="Pereira B.D."/>
            <person name="Socorro S."/>
            <person name="Lemos M.C."/>
        </authorList>
    </citation>
    <scope>VARIANTS HH2 CYS-4; CYS-96 AND VAL-719</scope>
    <scope>VARIANT HH2 THR-353 (ISOFORM 19)</scope>
</reference>